<dbReference type="EMBL" id="X00038">
    <property type="protein sequence ID" value="CAA24918.1"/>
    <property type="status" value="ALT_SEQ"/>
    <property type="molecule type" value="Genomic_DNA"/>
</dbReference>
<dbReference type="EMBL" id="M16707">
    <property type="protein sequence ID" value="AAA52652.1"/>
    <property type="molecule type" value="Genomic_DNA"/>
</dbReference>
<dbReference type="EMBL" id="M60749">
    <property type="protein sequence ID" value="AAA63188.1"/>
    <property type="molecule type" value="Genomic_DNA"/>
</dbReference>
<dbReference type="EMBL" id="X60481">
    <property type="protein sequence ID" value="CAA43011.1"/>
    <property type="molecule type" value="Genomic_DNA"/>
</dbReference>
<dbReference type="EMBL" id="X60482">
    <property type="protein sequence ID" value="CAA43012.1"/>
    <property type="molecule type" value="Genomic_DNA"/>
</dbReference>
<dbReference type="EMBL" id="X60483">
    <property type="protein sequence ID" value="CAA43013.1"/>
    <property type="molecule type" value="Genomic_DNA"/>
</dbReference>
<dbReference type="EMBL" id="X60484">
    <property type="protein sequence ID" value="CAA43014.1"/>
    <property type="molecule type" value="Genomic_DNA"/>
</dbReference>
<dbReference type="EMBL" id="X60486">
    <property type="protein sequence ID" value="CAA43016.1"/>
    <property type="molecule type" value="Genomic_DNA"/>
</dbReference>
<dbReference type="EMBL" id="X60487">
    <property type="protein sequence ID" value="CAA43017.1"/>
    <property type="molecule type" value="Genomic_DNA"/>
</dbReference>
<dbReference type="EMBL" id="X67081">
    <property type="protein sequence ID" value="CAA47464.1"/>
    <property type="molecule type" value="Genomic_DNA"/>
</dbReference>
<dbReference type="EMBL" id="Z80787">
    <property type="protein sequence ID" value="CAB02549.1"/>
    <property type="molecule type" value="Genomic_DNA"/>
</dbReference>
<dbReference type="EMBL" id="X83548">
    <property type="protein sequence ID" value="CAA58538.1"/>
    <property type="molecule type" value="Genomic_DNA"/>
</dbReference>
<dbReference type="EMBL" id="AF525682">
    <property type="protein sequence ID" value="AAM83108.1"/>
    <property type="molecule type" value="Genomic_DNA"/>
</dbReference>
<dbReference type="EMBL" id="AY128653">
    <property type="protein sequence ID" value="AAN01438.1"/>
    <property type="molecule type" value="Genomic_DNA"/>
</dbReference>
<dbReference type="EMBL" id="AY128654">
    <property type="protein sequence ID" value="AAN01439.1"/>
    <property type="molecule type" value="Genomic_DNA"/>
</dbReference>
<dbReference type="EMBL" id="AY128655">
    <property type="protein sequence ID" value="AAN01440.1"/>
    <property type="molecule type" value="Genomic_DNA"/>
</dbReference>
<dbReference type="EMBL" id="AY128656">
    <property type="protein sequence ID" value="AAN01441.1"/>
    <property type="molecule type" value="Genomic_DNA"/>
</dbReference>
<dbReference type="EMBL" id="AY128657">
    <property type="protein sequence ID" value="AAN01442.1"/>
    <property type="molecule type" value="Genomic_DNA"/>
</dbReference>
<dbReference type="EMBL" id="AY128658">
    <property type="protein sequence ID" value="AAN01443.1"/>
    <property type="molecule type" value="Genomic_DNA"/>
</dbReference>
<dbReference type="EMBL" id="AY128659">
    <property type="protein sequence ID" value="AAN01444.1"/>
    <property type="molecule type" value="Genomic_DNA"/>
</dbReference>
<dbReference type="EMBL" id="AY128661">
    <property type="protein sequence ID" value="AAN01446.1"/>
    <property type="molecule type" value="Genomic_DNA"/>
</dbReference>
<dbReference type="EMBL" id="AY128662">
    <property type="protein sequence ID" value="AAN01447.1"/>
    <property type="molecule type" value="Genomic_DNA"/>
</dbReference>
<dbReference type="EMBL" id="AY128663">
    <property type="protein sequence ID" value="AAN01448.1"/>
    <property type="molecule type" value="Genomic_DNA"/>
</dbReference>
<dbReference type="EMBL" id="AY128664">
    <property type="protein sequence ID" value="AAN01449.1"/>
    <property type="molecule type" value="Genomic_DNA"/>
</dbReference>
<dbReference type="EMBL" id="AY128665">
    <property type="protein sequence ID" value="AAN01450.1"/>
    <property type="molecule type" value="Genomic_DNA"/>
</dbReference>
<dbReference type="EMBL" id="AB000905">
    <property type="protein sequence ID" value="BAA19208.1"/>
    <property type="molecule type" value="Genomic_DNA"/>
</dbReference>
<dbReference type="EMBL" id="AY648850">
    <property type="protein sequence ID" value="AAT68253.1"/>
    <property type="molecule type" value="Genomic_DNA"/>
</dbReference>
<dbReference type="EMBL" id="CR542169">
    <property type="protein sequence ID" value="CAG46966.1"/>
    <property type="molecule type" value="mRNA"/>
</dbReference>
<dbReference type="EMBL" id="CR542172">
    <property type="protein sequence ID" value="CAG46969.1"/>
    <property type="molecule type" value="mRNA"/>
</dbReference>
<dbReference type="EMBL" id="CR542180">
    <property type="protein sequence ID" value="CAG46977.1"/>
    <property type="molecule type" value="mRNA"/>
</dbReference>
<dbReference type="EMBL" id="CR542187">
    <property type="protein sequence ID" value="CAG46984.1"/>
    <property type="molecule type" value="mRNA"/>
</dbReference>
<dbReference type="EMBL" id="CR542189">
    <property type="protein sequence ID" value="CAG46986.1"/>
    <property type="molecule type" value="mRNA"/>
</dbReference>
<dbReference type="EMBL" id="AL021807">
    <property type="status" value="NOT_ANNOTATED_CDS"/>
    <property type="molecule type" value="Genomic_DNA"/>
</dbReference>
<dbReference type="EMBL" id="AL021917">
    <property type="status" value="NOT_ANNOTATED_CDS"/>
    <property type="molecule type" value="Genomic_DNA"/>
</dbReference>
<dbReference type="EMBL" id="AL031777">
    <property type="status" value="NOT_ANNOTATED_CDS"/>
    <property type="molecule type" value="Genomic_DNA"/>
</dbReference>
<dbReference type="EMBL" id="AL049822">
    <property type="status" value="NOT_ANNOTATED_CDS"/>
    <property type="molecule type" value="Genomic_DNA"/>
</dbReference>
<dbReference type="EMBL" id="AL353759">
    <property type="status" value="NOT_ANNOTATED_CDS"/>
    <property type="molecule type" value="Genomic_DNA"/>
</dbReference>
<dbReference type="EMBL" id="Z98744">
    <property type="status" value="NOT_ANNOTATED_CDS"/>
    <property type="molecule type" value="Genomic_DNA"/>
</dbReference>
<dbReference type="EMBL" id="AL591493">
    <property type="protein sequence ID" value="CAI12560.1"/>
    <property type="molecule type" value="Genomic_DNA"/>
</dbReference>
<dbReference type="EMBL" id="AL591493">
    <property type="protein sequence ID" value="CAI12567.1"/>
    <property type="molecule type" value="Genomic_DNA"/>
</dbReference>
<dbReference type="EMBL" id="CH471087">
    <property type="protein sequence ID" value="EAW55509.1"/>
    <property type="molecule type" value="Genomic_DNA"/>
</dbReference>
<dbReference type="EMBL" id="CH471087">
    <property type="protein sequence ID" value="EAW55510.1"/>
    <property type="molecule type" value="Genomic_DNA"/>
</dbReference>
<dbReference type="EMBL" id="CH471087">
    <property type="protein sequence ID" value="EAW55538.1"/>
    <property type="molecule type" value="Genomic_DNA"/>
</dbReference>
<dbReference type="EMBL" id="CH471087">
    <property type="protein sequence ID" value="EAW55549.1"/>
    <property type="molecule type" value="Genomic_DNA"/>
</dbReference>
<dbReference type="EMBL" id="CH471087">
    <property type="protein sequence ID" value="EAW55555.1"/>
    <property type="molecule type" value="Genomic_DNA"/>
</dbReference>
<dbReference type="EMBL" id="CH471094">
    <property type="protein sequence ID" value="EAW96325.1"/>
    <property type="molecule type" value="Genomic_DNA"/>
</dbReference>
<dbReference type="EMBL" id="CH471081">
    <property type="protein sequence ID" value="EAX03086.1"/>
    <property type="molecule type" value="Genomic_DNA"/>
</dbReference>
<dbReference type="EMBL" id="CH471081">
    <property type="protein sequence ID" value="EAX03111.1"/>
    <property type="molecule type" value="Genomic_DNA"/>
</dbReference>
<dbReference type="EMBL" id="CH471081">
    <property type="protein sequence ID" value="EAX03112.1"/>
    <property type="molecule type" value="Genomic_DNA"/>
</dbReference>
<dbReference type="EMBL" id="CH471081">
    <property type="protein sequence ID" value="EAX03121.1"/>
    <property type="molecule type" value="Genomic_DNA"/>
</dbReference>
<dbReference type="EMBL" id="BC017361">
    <property type="protein sequence ID" value="AAH17361.1"/>
    <property type="molecule type" value="mRNA"/>
</dbReference>
<dbReference type="EMBL" id="BC054014">
    <property type="protein sequence ID" value="AAH54014.1"/>
    <property type="molecule type" value="mRNA"/>
</dbReference>
<dbReference type="EMBL" id="BC066248">
    <property type="protein sequence ID" value="AAH66248.1"/>
    <property type="molecule type" value="mRNA"/>
</dbReference>
<dbReference type="EMBL" id="BC066249">
    <property type="protein sequence ID" value="AAH66249.1"/>
    <property type="molecule type" value="mRNA"/>
</dbReference>
<dbReference type="EMBL" id="BC066250">
    <property type="protein sequence ID" value="AAH66250.1"/>
    <property type="molecule type" value="mRNA"/>
</dbReference>
<dbReference type="EMBL" id="BC067495">
    <property type="protein sequence ID" value="AAH67495.1"/>
    <property type="molecule type" value="mRNA"/>
</dbReference>
<dbReference type="EMBL" id="BC067496">
    <property type="protein sequence ID" value="AAH67496.1"/>
    <property type="molecule type" value="mRNA"/>
</dbReference>
<dbReference type="EMBL" id="BC067497">
    <property type="protein sequence ID" value="AAH67497.1"/>
    <property type="molecule type" value="mRNA"/>
</dbReference>
<dbReference type="EMBL" id="BC069288">
    <property type="protein sequence ID" value="AAH69288.1"/>
    <property type="molecule type" value="mRNA"/>
</dbReference>
<dbReference type="EMBL" id="BC069392">
    <property type="protein sequence ID" value="AAH69392.1"/>
    <property type="molecule type" value="mRNA"/>
</dbReference>
<dbReference type="EMBL" id="BC069467">
    <property type="protein sequence ID" value="AAH69467.1"/>
    <property type="molecule type" value="mRNA"/>
</dbReference>
<dbReference type="EMBL" id="BC069654">
    <property type="protein sequence ID" value="AAH69654.1"/>
    <property type="molecule type" value="mRNA"/>
</dbReference>
<dbReference type="EMBL" id="BC093763">
    <property type="protein sequence ID" value="AAH93763.1"/>
    <property type="molecule type" value="mRNA"/>
</dbReference>
<dbReference type="EMBL" id="BC093765">
    <property type="protein sequence ID" value="AAH93765.1"/>
    <property type="molecule type" value="mRNA"/>
</dbReference>
<dbReference type="EMBL" id="BC093969">
    <property type="protein sequence ID" value="AAH93969.1"/>
    <property type="molecule type" value="mRNA"/>
</dbReference>
<dbReference type="EMBL" id="BC111093">
    <property type="protein sequence ID" value="AAI11094.1"/>
    <property type="molecule type" value="mRNA"/>
</dbReference>
<dbReference type="EMBL" id="BC111434">
    <property type="protein sequence ID" value="AAI11435.1"/>
    <property type="molecule type" value="mRNA"/>
</dbReference>
<dbReference type="EMBL" id="BC112193">
    <property type="protein sequence ID" value="AAI12194.1"/>
    <property type="molecule type" value="mRNA"/>
</dbReference>
<dbReference type="EMBL" id="BC120939">
    <property type="protein sequence ID" value="AAI20940.1"/>
    <property type="molecule type" value="mRNA"/>
</dbReference>
<dbReference type="EMBL" id="BC128104">
    <property type="protein sequence ID" value="AAI28105.1"/>
    <property type="molecule type" value="mRNA"/>
</dbReference>
<dbReference type="EMBL" id="BC128105">
    <property type="protein sequence ID" value="AAI28106.1"/>
    <property type="status" value="ALT_FRAME"/>
    <property type="molecule type" value="mRNA"/>
</dbReference>
<dbReference type="EMBL" id="BC130558">
    <property type="protein sequence ID" value="AAI30559.1"/>
    <property type="molecule type" value="mRNA"/>
</dbReference>
<dbReference type="EMBL" id="BC130560">
    <property type="protein sequence ID" value="AAI30561.1"/>
    <property type="molecule type" value="mRNA"/>
</dbReference>
<dbReference type="EMBL" id="BC143045">
    <property type="protein sequence ID" value="AAI43046.1"/>
    <property type="molecule type" value="mRNA"/>
</dbReference>
<dbReference type="CCDS" id="CCDS30847.1"/>
<dbReference type="CCDS" id="CCDS30851.1"/>
<dbReference type="CCDS" id="CCDS4571.1"/>
<dbReference type="CCDS" id="CCDS4572.1"/>
<dbReference type="CCDS" id="CCDS4583.1"/>
<dbReference type="CCDS" id="CCDS4589.1"/>
<dbReference type="CCDS" id="CCDS4593.1"/>
<dbReference type="CCDS" id="CCDS4598.1"/>
<dbReference type="CCDS" id="CCDS4604.1"/>
<dbReference type="CCDS" id="CCDS4620.1"/>
<dbReference type="CCDS" id="CCDS4630.1"/>
<dbReference type="CCDS" id="CCDS4631.1"/>
<dbReference type="CCDS" id="CCDS4637.1"/>
<dbReference type="CCDS" id="CCDS8665.1"/>
<dbReference type="PIR" id="D40335">
    <property type="entry name" value="HSHU4"/>
</dbReference>
<dbReference type="RefSeq" id="NP_001029249.1">
    <property type="nucleotide sequence ID" value="NM_001034077.4"/>
</dbReference>
<dbReference type="RefSeq" id="NP_003486.1">
    <property type="nucleotide sequence ID" value="NM_003495.2"/>
</dbReference>
<dbReference type="RefSeq" id="NP_003529.1">
    <property type="nucleotide sequence ID" value="NM_003538.4"/>
</dbReference>
<dbReference type="RefSeq" id="NP_003530.1">
    <property type="nucleotide sequence ID" value="NM_003539.3"/>
</dbReference>
<dbReference type="RefSeq" id="NP_003531.1">
    <property type="nucleotide sequence ID" value="NM_003540.3"/>
</dbReference>
<dbReference type="RefSeq" id="NP_003532.1">
    <property type="nucleotide sequence ID" value="NM_003541.2"/>
</dbReference>
<dbReference type="RefSeq" id="NP_003533.1">
    <property type="nucleotide sequence ID" value="NM_003542.3"/>
</dbReference>
<dbReference type="RefSeq" id="NP_003534.1">
    <property type="nucleotide sequence ID" value="NM_003543.3"/>
</dbReference>
<dbReference type="RefSeq" id="NP_003535.1">
    <property type="nucleotide sequence ID" value="NM_003544.2"/>
</dbReference>
<dbReference type="RefSeq" id="NP_003536.1">
    <property type="nucleotide sequence ID" value="NM_003545.3"/>
</dbReference>
<dbReference type="RefSeq" id="NP_003537.1">
    <property type="nucleotide sequence ID" value="NM_003546.2"/>
</dbReference>
<dbReference type="RefSeq" id="NP_003539.1">
    <property type="nucleotide sequence ID" value="NM_003548.2"/>
</dbReference>
<dbReference type="RefSeq" id="NP_068803.1">
    <property type="nucleotide sequence ID" value="NM_021968.3"/>
</dbReference>
<dbReference type="RefSeq" id="NP_778224.1">
    <property type="nucleotide sequence ID" value="NM_175054.2"/>
</dbReference>
<dbReference type="PDB" id="1ZKK">
    <property type="method" value="X-ray"/>
    <property type="resolution" value="1.45 A"/>
    <property type="chains" value="E/F/G/H=16-25"/>
</dbReference>
<dbReference type="PDB" id="2BQZ">
    <property type="method" value="X-ray"/>
    <property type="resolution" value="1.50 A"/>
    <property type="chains" value="B/F=18-26"/>
</dbReference>
<dbReference type="PDB" id="2CV5">
    <property type="method" value="X-ray"/>
    <property type="resolution" value="2.50 A"/>
    <property type="chains" value="B/F=1-103"/>
</dbReference>
<dbReference type="PDB" id="2IG0">
    <property type="method" value="X-ray"/>
    <property type="resolution" value="1.70 A"/>
    <property type="chains" value="B=17-26"/>
</dbReference>
<dbReference type="PDB" id="2KWN">
    <property type="method" value="NMR"/>
    <property type="chains" value="B=10-24"/>
</dbReference>
<dbReference type="PDB" id="2KWO">
    <property type="method" value="NMR"/>
    <property type="chains" value="B=2-21"/>
</dbReference>
<dbReference type="PDB" id="2LVM">
    <property type="method" value="NMR"/>
    <property type="chains" value="B=15-28"/>
</dbReference>
<dbReference type="PDB" id="2QQS">
    <property type="method" value="X-ray"/>
    <property type="resolution" value="2.82 A"/>
    <property type="chains" value="C/D=17-26"/>
</dbReference>
<dbReference type="PDB" id="2RJE">
    <property type="method" value="X-ray"/>
    <property type="resolution" value="1.86 A"/>
    <property type="chains" value="P/Q=16-26"/>
</dbReference>
<dbReference type="PDB" id="2RNY">
    <property type="method" value="NMR"/>
    <property type="chains" value="B=14-28"/>
</dbReference>
<dbReference type="PDB" id="2RS9">
    <property type="method" value="NMR"/>
    <property type="chains" value="A=2-11"/>
</dbReference>
<dbReference type="PDB" id="3A6N">
    <property type="method" value="X-ray"/>
    <property type="resolution" value="2.70 A"/>
    <property type="chains" value="B/F=1-103"/>
</dbReference>
<dbReference type="PDB" id="3AFA">
    <property type="method" value="X-ray"/>
    <property type="resolution" value="2.50 A"/>
    <property type="chains" value="B/F=1-103"/>
</dbReference>
<dbReference type="PDB" id="3AN2">
    <property type="method" value="X-ray"/>
    <property type="resolution" value="3.60 A"/>
    <property type="chains" value="B/F=1-103"/>
</dbReference>
<dbReference type="PDB" id="3AV1">
    <property type="method" value="X-ray"/>
    <property type="resolution" value="2.50 A"/>
    <property type="chains" value="B/F=1-103"/>
</dbReference>
<dbReference type="PDB" id="3AV2">
    <property type="method" value="X-ray"/>
    <property type="resolution" value="2.80 A"/>
    <property type="chains" value="B/F=1-103"/>
</dbReference>
<dbReference type="PDB" id="3AYW">
    <property type="method" value="X-ray"/>
    <property type="resolution" value="2.90 A"/>
    <property type="chains" value="B/F=1-103"/>
</dbReference>
<dbReference type="PDB" id="3AZE">
    <property type="method" value="X-ray"/>
    <property type="resolution" value="3.00 A"/>
    <property type="chains" value="B/F=1-103"/>
</dbReference>
<dbReference type="PDB" id="3AZF">
    <property type="method" value="X-ray"/>
    <property type="resolution" value="2.70 A"/>
    <property type="chains" value="B/F=1-103"/>
</dbReference>
<dbReference type="PDB" id="3AZG">
    <property type="method" value="X-ray"/>
    <property type="resolution" value="2.40 A"/>
    <property type="chains" value="B/F=1-103"/>
</dbReference>
<dbReference type="PDB" id="3AZH">
    <property type="method" value="X-ray"/>
    <property type="resolution" value="3.49 A"/>
    <property type="chains" value="B/F=1-103"/>
</dbReference>
<dbReference type="PDB" id="3AZI">
    <property type="method" value="X-ray"/>
    <property type="resolution" value="2.70 A"/>
    <property type="chains" value="B/F=1-103"/>
</dbReference>
<dbReference type="PDB" id="3AZJ">
    <property type="method" value="X-ray"/>
    <property type="resolution" value="2.89 A"/>
    <property type="chains" value="B/F=1-103"/>
</dbReference>
<dbReference type="PDB" id="3AZK">
    <property type="method" value="X-ray"/>
    <property type="resolution" value="3.20 A"/>
    <property type="chains" value="B/F=1-103"/>
</dbReference>
<dbReference type="PDB" id="3AZL">
    <property type="method" value="X-ray"/>
    <property type="resolution" value="2.70 A"/>
    <property type="chains" value="B/F=1-103"/>
</dbReference>
<dbReference type="PDB" id="3AZM">
    <property type="method" value="X-ray"/>
    <property type="resolution" value="2.89 A"/>
    <property type="chains" value="B/F=1-103"/>
</dbReference>
<dbReference type="PDB" id="3AZN">
    <property type="method" value="X-ray"/>
    <property type="resolution" value="3.00 A"/>
    <property type="chains" value="B/F=1-103"/>
</dbReference>
<dbReference type="PDB" id="3CFS">
    <property type="method" value="X-ray"/>
    <property type="resolution" value="2.40 A"/>
    <property type="chains" value="E=28-42"/>
</dbReference>
<dbReference type="PDB" id="3CFV">
    <property type="method" value="X-ray"/>
    <property type="resolution" value="2.60 A"/>
    <property type="chains" value="E/F=25-42"/>
</dbReference>
<dbReference type="PDB" id="3F9W">
    <property type="method" value="X-ray"/>
    <property type="resolution" value="1.60 A"/>
    <property type="chains" value="E/F/G/H=16-25"/>
</dbReference>
<dbReference type="PDB" id="3F9X">
    <property type="method" value="X-ray"/>
    <property type="resolution" value="1.25 A"/>
    <property type="chains" value="E/F/G/H=16-25"/>
</dbReference>
<dbReference type="PDB" id="3F9Y">
    <property type="method" value="X-ray"/>
    <property type="resolution" value="1.50 A"/>
    <property type="chains" value="E/F=16-25"/>
</dbReference>
<dbReference type="PDB" id="3F9Z">
    <property type="method" value="X-ray"/>
    <property type="resolution" value="1.60 A"/>
    <property type="chains" value="E/F/G/H=16-25"/>
</dbReference>
<dbReference type="PDB" id="3IJ1">
    <property type="method" value="X-ray"/>
    <property type="resolution" value="2.10 A"/>
    <property type="chains" value="B=16-26"/>
</dbReference>
<dbReference type="PDB" id="3JPX">
    <property type="method" value="X-ray"/>
    <property type="resolution" value="2.05 A"/>
    <property type="chains" value="B=14-28"/>
</dbReference>
<dbReference type="PDB" id="3NQJ">
    <property type="method" value="X-ray"/>
    <property type="resolution" value="2.10 A"/>
    <property type="chains" value="B=21-103"/>
</dbReference>
<dbReference type="PDB" id="3NQU">
    <property type="method" value="X-ray"/>
    <property type="resolution" value="2.50 A"/>
    <property type="chains" value="B=1-103"/>
</dbReference>
<dbReference type="PDB" id="3O36">
    <property type="method" value="X-ray"/>
    <property type="resolution" value="1.70 A"/>
    <property type="chains" value="D/E=15-20"/>
</dbReference>
<dbReference type="PDB" id="3QBY">
    <property type="method" value="X-ray"/>
    <property type="resolution" value="1.95 A"/>
    <property type="chains" value="H=16-26"/>
</dbReference>
<dbReference type="PDB" id="3QZS">
    <property type="method" value="X-ray"/>
    <property type="resolution" value="1.80 A"/>
    <property type="chains" value="C/D=13-22"/>
</dbReference>
<dbReference type="PDB" id="3QZT">
    <property type="method" value="X-ray"/>
    <property type="resolution" value="1.50 A"/>
    <property type="chains" value="B=13-22"/>
</dbReference>
<dbReference type="PDB" id="3QZV">
    <property type="method" value="X-ray"/>
    <property type="resolution" value="2.00 A"/>
    <property type="chains" value="C=8-18"/>
</dbReference>
<dbReference type="PDB" id="3R45">
    <property type="method" value="X-ray"/>
    <property type="resolution" value="2.60 A"/>
    <property type="chains" value="B=1-103"/>
</dbReference>
<dbReference type="PDB" id="3UVW">
    <property type="method" value="X-ray"/>
    <property type="resolution" value="1.37 A"/>
    <property type="chains" value="B=2-12"/>
</dbReference>
<dbReference type="PDB" id="3UVX">
    <property type="method" value="X-ray"/>
    <property type="resolution" value="1.91 A"/>
    <property type="chains" value="B=12-22"/>
</dbReference>
<dbReference type="PDB" id="3UVY">
    <property type="method" value="X-ray"/>
    <property type="resolution" value="2.02 A"/>
    <property type="chains" value="B=16-26"/>
</dbReference>
<dbReference type="PDB" id="3UW9">
    <property type="method" value="X-ray"/>
    <property type="resolution" value="2.30 A"/>
    <property type="chains" value="E/F=8-18"/>
</dbReference>
<dbReference type="PDB" id="3W96">
    <property type="method" value="X-ray"/>
    <property type="resolution" value="3.00 A"/>
    <property type="chains" value="B/F=1-103"/>
</dbReference>
<dbReference type="PDB" id="3W97">
    <property type="method" value="X-ray"/>
    <property type="resolution" value="3.20 A"/>
    <property type="chains" value="B/F=1-103"/>
</dbReference>
<dbReference type="PDB" id="3W98">
    <property type="method" value="X-ray"/>
    <property type="resolution" value="3.42 A"/>
    <property type="chains" value="B/F=1-103"/>
</dbReference>
<dbReference type="PDB" id="3W99">
    <property type="method" value="X-ray"/>
    <property type="resolution" value="3.00 A"/>
    <property type="chains" value="B/F=17-103"/>
</dbReference>
<dbReference type="PDB" id="3WA9">
    <property type="method" value="X-ray"/>
    <property type="resolution" value="3.07 A"/>
    <property type="chains" value="B/F=1-103"/>
</dbReference>
<dbReference type="PDB" id="3WAA">
    <property type="method" value="X-ray"/>
    <property type="resolution" value="3.20 A"/>
    <property type="chains" value="B/F=1-103"/>
</dbReference>
<dbReference type="PDB" id="3WKJ">
    <property type="method" value="X-ray"/>
    <property type="resolution" value="2.80 A"/>
    <property type="chains" value="B/F=1-103"/>
</dbReference>
<dbReference type="PDB" id="3WTP">
    <property type="method" value="X-ray"/>
    <property type="resolution" value="2.67 A"/>
    <property type="chains" value="B/F=1-103"/>
</dbReference>
<dbReference type="PDB" id="3X1S">
    <property type="method" value="X-ray"/>
    <property type="resolution" value="2.81 A"/>
    <property type="chains" value="B/F=2-103"/>
</dbReference>
<dbReference type="PDB" id="3X1T">
    <property type="method" value="X-ray"/>
    <property type="resolution" value="2.81 A"/>
    <property type="chains" value="B/F=2-103"/>
</dbReference>
<dbReference type="PDB" id="3X1U">
    <property type="method" value="X-ray"/>
    <property type="resolution" value="3.25 A"/>
    <property type="chains" value="B/F=2-103"/>
</dbReference>
<dbReference type="PDB" id="3X1V">
    <property type="method" value="X-ray"/>
    <property type="resolution" value="2.92 A"/>
    <property type="chains" value="B/F=2-103"/>
</dbReference>
<dbReference type="PDB" id="4GQB">
    <property type="method" value="X-ray"/>
    <property type="resolution" value="2.06 A"/>
    <property type="chains" value="C=2-22"/>
</dbReference>
<dbReference type="PDB" id="4H9N">
    <property type="method" value="X-ray"/>
    <property type="resolution" value="1.95 A"/>
    <property type="chains" value="B=2-103"/>
</dbReference>
<dbReference type="PDB" id="4H9O">
    <property type="method" value="X-ray"/>
    <property type="resolution" value="2.05 A"/>
    <property type="chains" value="B=2-103"/>
</dbReference>
<dbReference type="PDB" id="4H9P">
    <property type="method" value="X-ray"/>
    <property type="resolution" value="2.20 A"/>
    <property type="chains" value="B=2-103"/>
</dbReference>
<dbReference type="PDB" id="4H9Q">
    <property type="method" value="X-ray"/>
    <property type="resolution" value="1.95 A"/>
    <property type="chains" value="B=2-103"/>
</dbReference>
<dbReference type="PDB" id="4H9R">
    <property type="method" value="X-ray"/>
    <property type="resolution" value="2.20 A"/>
    <property type="chains" value="B=2-103"/>
</dbReference>
<dbReference type="PDB" id="4H9S">
    <property type="method" value="X-ray"/>
    <property type="resolution" value="2.60 A"/>
    <property type="chains" value="C/D=21-103"/>
</dbReference>
<dbReference type="PDB" id="4HGA">
    <property type="method" value="X-ray"/>
    <property type="resolution" value="2.80 A"/>
    <property type="chains" value="C=1-103"/>
</dbReference>
<dbReference type="PDB" id="4M38">
    <property type="method" value="X-ray"/>
    <property type="resolution" value="2.20 A"/>
    <property type="chains" value="E/F=2-22"/>
</dbReference>
<dbReference type="PDB" id="4N3W">
    <property type="method" value="X-ray"/>
    <property type="resolution" value="1.90 A"/>
    <property type="chains" value="C=14-28"/>
</dbReference>
<dbReference type="PDB" id="4N4F">
    <property type="method" value="X-ray"/>
    <property type="resolution" value="1.83 A"/>
    <property type="chains" value="C=6-26"/>
</dbReference>
<dbReference type="PDB" id="4QUT">
    <property type="method" value="X-ray"/>
    <property type="resolution" value="1.70 A"/>
    <property type="chains" value="B=10-16"/>
</dbReference>
<dbReference type="PDB" id="4QUU">
    <property type="method" value="X-ray"/>
    <property type="resolution" value="1.80 A"/>
    <property type="chains" value="B=4-16"/>
</dbReference>
<dbReference type="PDB" id="4QYD">
    <property type="method" value="X-ray"/>
    <property type="resolution" value="1.94 A"/>
    <property type="chains" value="B=5-18"/>
</dbReference>
<dbReference type="PDB" id="4U9W">
    <property type="method" value="X-ray"/>
    <property type="resolution" value="2.49 A"/>
    <property type="chains" value="E/F/G/H=2-6"/>
</dbReference>
<dbReference type="PDB" id="4YM5">
    <property type="method" value="X-ray"/>
    <property type="resolution" value="4.00 A"/>
    <property type="chains" value="B/F=1-103"/>
</dbReference>
<dbReference type="PDB" id="4YM6">
    <property type="method" value="X-ray"/>
    <property type="resolution" value="3.51 A"/>
    <property type="chains" value="B/F=1-103"/>
</dbReference>
<dbReference type="PDB" id="4YY6">
    <property type="method" value="X-ray"/>
    <property type="resolution" value="1.45 A"/>
    <property type="chains" value="Z=2-12"/>
</dbReference>
<dbReference type="PDB" id="4YYD">
    <property type="method" value="X-ray"/>
    <property type="resolution" value="1.52 A"/>
    <property type="chains" value="Z=2-12"/>
</dbReference>
<dbReference type="PDB" id="4YYG">
    <property type="method" value="X-ray"/>
    <property type="resolution" value="2.10 A"/>
    <property type="chains" value="B=2-12"/>
</dbReference>
<dbReference type="PDB" id="4YYH">
    <property type="method" value="X-ray"/>
    <property type="resolution" value="1.74 A"/>
    <property type="chains" value="Y/Z=2-12"/>
</dbReference>
<dbReference type="PDB" id="4YYI">
    <property type="method" value="X-ray"/>
    <property type="resolution" value="1.50 A"/>
    <property type="chains" value="C/F=2-12"/>
</dbReference>
<dbReference type="PDB" id="4YYJ">
    <property type="method" value="X-ray"/>
    <property type="resolution" value="1.85 A"/>
    <property type="chains" value="C/F=2-12"/>
</dbReference>
<dbReference type="PDB" id="4YYK">
    <property type="method" value="X-ray"/>
    <property type="resolution" value="1.79 A"/>
    <property type="chains" value="C/F=2-12"/>
</dbReference>
<dbReference type="PDB" id="4YYM">
    <property type="method" value="X-ray"/>
    <property type="resolution" value="1.50 A"/>
    <property type="chains" value="Z=2-12"/>
</dbReference>
<dbReference type="PDB" id="4YYN">
    <property type="method" value="X-ray"/>
    <property type="resolution" value="1.85 A"/>
    <property type="chains" value="Z=2-12"/>
</dbReference>
<dbReference type="PDB" id="4Z2M">
    <property type="method" value="X-ray"/>
    <property type="resolution" value="2.98 A"/>
    <property type="chains" value="H/J=1-103"/>
</dbReference>
<dbReference type="PDB" id="4Z5T">
    <property type="method" value="X-ray"/>
    <property type="resolution" value="2.80 A"/>
    <property type="chains" value="B/F=1-103"/>
</dbReference>
<dbReference type="PDB" id="5AV5">
    <property type="method" value="X-ray"/>
    <property type="resolution" value="2.40 A"/>
    <property type="chains" value="B/F=1-103"/>
</dbReference>
<dbReference type="PDB" id="5AV6">
    <property type="method" value="X-ray"/>
    <property type="resolution" value="2.20 A"/>
    <property type="chains" value="B/F=1-103"/>
</dbReference>
<dbReference type="PDB" id="5AV8">
    <property type="method" value="X-ray"/>
    <property type="resolution" value="2.20 A"/>
    <property type="chains" value="B/F=1-103"/>
</dbReference>
<dbReference type="PDB" id="5AV9">
    <property type="method" value="X-ray"/>
    <property type="resolution" value="2.20 A"/>
    <property type="chains" value="B/F=1-103"/>
</dbReference>
<dbReference type="PDB" id="5AVB">
    <property type="method" value="X-ray"/>
    <property type="resolution" value="2.40 A"/>
    <property type="chains" value="B/F=1-103"/>
</dbReference>
<dbReference type="PDB" id="5AVC">
    <property type="method" value="X-ray"/>
    <property type="resolution" value="2.40 A"/>
    <property type="chains" value="B/F=1-103"/>
</dbReference>
<dbReference type="PDB" id="5AY8">
    <property type="method" value="X-ray"/>
    <property type="resolution" value="2.80 A"/>
    <property type="chains" value="B/F=1-103"/>
</dbReference>
<dbReference type="PDB" id="5B0Y">
    <property type="method" value="X-ray"/>
    <property type="resolution" value="2.56 A"/>
    <property type="chains" value="B/F=1-103"/>
</dbReference>
<dbReference type="PDB" id="5B0Z">
    <property type="method" value="X-ray"/>
    <property type="resolution" value="1.99 A"/>
    <property type="chains" value="B/F=1-103"/>
</dbReference>
<dbReference type="PDB" id="5B24">
    <property type="method" value="X-ray"/>
    <property type="resolution" value="3.60 A"/>
    <property type="chains" value="B/F=1-103"/>
</dbReference>
<dbReference type="PDB" id="5B2I">
    <property type="method" value="X-ray"/>
    <property type="resolution" value="3.00 A"/>
    <property type="chains" value="B/F=1-103"/>
</dbReference>
<dbReference type="PDB" id="5B2J">
    <property type="method" value="X-ray"/>
    <property type="resolution" value="2.60 A"/>
    <property type="chains" value="B/F=1-103"/>
</dbReference>
<dbReference type="PDB" id="5B31">
    <property type="method" value="X-ray"/>
    <property type="resolution" value="2.20 A"/>
    <property type="chains" value="B/F=1-103"/>
</dbReference>
<dbReference type="PDB" id="5B32">
    <property type="method" value="X-ray"/>
    <property type="resolution" value="2.35 A"/>
    <property type="chains" value="B/F=1-103"/>
</dbReference>
<dbReference type="PDB" id="5B33">
    <property type="method" value="X-ray"/>
    <property type="resolution" value="2.92 A"/>
    <property type="chains" value="B/F=1-103"/>
</dbReference>
<dbReference type="PDB" id="5B40">
    <property type="method" value="X-ray"/>
    <property type="resolution" value="3.33 A"/>
    <property type="chains" value="B/F=1-103"/>
</dbReference>
<dbReference type="PDB" id="5BNV">
    <property type="method" value="X-ray"/>
    <property type="resolution" value="2.79 A"/>
    <property type="chains" value="B/E=2-103"/>
</dbReference>
<dbReference type="PDB" id="5BNX">
    <property type="method" value="X-ray"/>
    <property type="resolution" value="2.31 A"/>
    <property type="chains" value="B=2-103"/>
</dbReference>
<dbReference type="PDB" id="5BO0">
    <property type="method" value="X-ray"/>
    <property type="resolution" value="2.91 A"/>
    <property type="chains" value="B=2-103"/>
</dbReference>
<dbReference type="PDB" id="5C3I">
    <property type="method" value="X-ray"/>
    <property type="resolution" value="3.50 A"/>
    <property type="chains" value="C/G/K/O/S/W=1-103"/>
</dbReference>
<dbReference type="PDB" id="5CPI">
    <property type="method" value="X-ray"/>
    <property type="resolution" value="2.90 A"/>
    <property type="chains" value="B/F=1-103"/>
</dbReference>
<dbReference type="PDB" id="5CPJ">
    <property type="method" value="X-ray"/>
    <property type="resolution" value="3.15 A"/>
    <property type="chains" value="B/F=1-103"/>
</dbReference>
<dbReference type="PDB" id="5CPK">
    <property type="method" value="X-ray"/>
    <property type="resolution" value="2.63 A"/>
    <property type="chains" value="B/F=1-103"/>
</dbReference>
<dbReference type="PDB" id="5FA5">
    <property type="method" value="X-ray"/>
    <property type="resolution" value="2.34 A"/>
    <property type="chains" value="C=2-21"/>
</dbReference>
<dbReference type="PDB" id="5FFW">
    <property type="method" value="X-ray"/>
    <property type="resolution" value="1.50 A"/>
    <property type="chains" value="C=2-11"/>
</dbReference>
<dbReference type="PDB" id="5FWE">
    <property type="method" value="X-ray"/>
    <property type="resolution" value="2.05 A"/>
    <property type="chains" value="C/D=2-16"/>
</dbReference>
<dbReference type="PDB" id="5GSE">
    <property type="method" value="X-ray"/>
    <property type="resolution" value="3.14 A"/>
    <property type="chains" value="B/F/L/P=1-103"/>
</dbReference>
<dbReference type="PDB" id="5GSU">
    <property type="method" value="X-ray"/>
    <property type="resolution" value="3.10 A"/>
    <property type="chains" value="B/F=2-103"/>
</dbReference>
<dbReference type="PDB" id="5GT0">
    <property type="method" value="X-ray"/>
    <property type="resolution" value="2.82 A"/>
    <property type="chains" value="B/F=2-103"/>
</dbReference>
<dbReference type="PDB" id="5GT3">
    <property type="method" value="X-ray"/>
    <property type="resolution" value="2.91 A"/>
    <property type="chains" value="B/F=2-103"/>
</dbReference>
<dbReference type="PDB" id="5GTC">
    <property type="method" value="X-ray"/>
    <property type="resolution" value="2.70 A"/>
    <property type="chains" value="B/F=1-103"/>
</dbReference>
<dbReference type="PDB" id="5GXQ">
    <property type="method" value="X-ray"/>
    <property type="resolution" value="2.85 A"/>
    <property type="chains" value="B/F=1-103"/>
</dbReference>
<dbReference type="PDB" id="5JA4">
    <property type="method" value="X-ray"/>
    <property type="resolution" value="2.42 A"/>
    <property type="chains" value="B=2-103"/>
</dbReference>
<dbReference type="PDB" id="5JRG">
    <property type="method" value="X-ray"/>
    <property type="resolution" value="2.50 A"/>
    <property type="chains" value="B/F=1-103"/>
</dbReference>
<dbReference type="PDB" id="5KDM">
    <property type="method" value="X-ray"/>
    <property type="resolution" value="3.50 A"/>
    <property type="chains" value="B=2-103"/>
</dbReference>
<dbReference type="PDB" id="5TEG">
    <property type="method" value="X-ray"/>
    <property type="resolution" value="1.30 A"/>
    <property type="chains" value="D/E=17-24"/>
</dbReference>
<dbReference type="PDB" id="5X7X">
    <property type="method" value="X-ray"/>
    <property type="resolution" value="2.18 A"/>
    <property type="chains" value="B/F=1-103"/>
</dbReference>
<dbReference type="PDB" id="5XF3">
    <property type="method" value="X-ray"/>
    <property type="resolution" value="2.60 A"/>
    <property type="chains" value="B/F=1-103"/>
</dbReference>
<dbReference type="PDB" id="5XF4">
    <property type="method" value="X-ray"/>
    <property type="resolution" value="2.87 A"/>
    <property type="chains" value="B/F=1-103"/>
</dbReference>
<dbReference type="PDB" id="5XF5">
    <property type="method" value="X-ray"/>
    <property type="resolution" value="2.82 A"/>
    <property type="chains" value="B/F=1-103"/>
</dbReference>
<dbReference type="PDB" id="5Y0C">
    <property type="method" value="X-ray"/>
    <property type="resolution" value="2.09 A"/>
    <property type="chains" value="B/F=1-103"/>
</dbReference>
<dbReference type="PDB" id="5Y0D">
    <property type="method" value="X-ray"/>
    <property type="resolution" value="1.99 A"/>
    <property type="chains" value="B/F=1-103"/>
</dbReference>
<dbReference type="PDB" id="5YE3">
    <property type="method" value="X-ray"/>
    <property type="resolution" value="1.70 A"/>
    <property type="chains" value="C=2-13"/>
</dbReference>
<dbReference type="PDB" id="5YE4">
    <property type="method" value="X-ray"/>
    <property type="resolution" value="1.80 A"/>
    <property type="chains" value="E/F=2-13"/>
</dbReference>
<dbReference type="PDB" id="5Z23">
    <property type="method" value="X-ray"/>
    <property type="resolution" value="2.73 A"/>
    <property type="chains" value="B/F=1-103"/>
</dbReference>
<dbReference type="PDB" id="5Z30">
    <property type="method" value="X-ray"/>
    <property type="resolution" value="2.45 A"/>
    <property type="chains" value="B/F=1-103"/>
</dbReference>
<dbReference type="PDB" id="5ZBX">
    <property type="method" value="X-ray"/>
    <property type="resolution" value="2.58 A"/>
    <property type="chains" value="B/F=1-103"/>
</dbReference>
<dbReference type="PDB" id="5ZGC">
    <property type="method" value="X-ray"/>
    <property type="resolution" value="2.90 A"/>
    <property type="chains" value="G/H/I/J/K/L=12-22"/>
</dbReference>
<dbReference type="PDB" id="6A5L">
    <property type="method" value="EM"/>
    <property type="resolution" value="5.60 A"/>
    <property type="chains" value="b/f=1-103"/>
</dbReference>
<dbReference type="PDB" id="6A5O">
    <property type="method" value="EM"/>
    <property type="resolution" value="9.90 A"/>
    <property type="chains" value="b/f=1-103"/>
</dbReference>
<dbReference type="PDB" id="6A5P">
    <property type="method" value="EM"/>
    <property type="resolution" value="7.00 A"/>
    <property type="chains" value="b/f=1-103"/>
</dbReference>
<dbReference type="PDB" id="6A5R">
    <property type="method" value="EM"/>
    <property type="resolution" value="8.70 A"/>
    <property type="chains" value="b/f=1-103"/>
</dbReference>
<dbReference type="PDB" id="6A5T">
    <property type="method" value="EM"/>
    <property type="resolution" value="6.70 A"/>
    <property type="chains" value="b/f=1-103"/>
</dbReference>
<dbReference type="PDB" id="6A5U">
    <property type="method" value="EM"/>
    <property type="resolution" value="7.60 A"/>
    <property type="chains" value="b/f=1-103"/>
</dbReference>
<dbReference type="PDB" id="6ACP">
    <property type="method" value="X-ray"/>
    <property type="resolution" value="2.30 A"/>
    <property type="chains" value="B=89-95"/>
</dbReference>
<dbReference type="PDB" id="6BUZ">
    <property type="method" value="EM"/>
    <property type="resolution" value="3.92 A"/>
    <property type="chains" value="B/F=1-103"/>
</dbReference>
<dbReference type="PDB" id="6C0W">
    <property type="method" value="EM"/>
    <property type="resolution" value="4.00 A"/>
    <property type="chains" value="B/F=1-102"/>
</dbReference>
<dbReference type="PDB" id="6E0C">
    <property type="method" value="EM"/>
    <property type="resolution" value="2.63 A"/>
    <property type="chains" value="B/F=1-103"/>
</dbReference>
<dbReference type="PDB" id="6E0P">
    <property type="method" value="EM"/>
    <property type="resolution" value="2.60 A"/>
    <property type="chains" value="B/F=1-103"/>
</dbReference>
<dbReference type="PDB" id="6FML">
    <property type="method" value="EM"/>
    <property type="resolution" value="4.34 A"/>
    <property type="chains" value="N/R=2-103"/>
</dbReference>
<dbReference type="PDB" id="6HKT">
    <property type="method" value="X-ray"/>
    <property type="resolution" value="9.70 A"/>
    <property type="chains" value="B/F/L/P/V/Z/b/f/l/p/v/z=1-103"/>
</dbReference>
<dbReference type="PDB" id="6HTS">
    <property type="method" value="EM"/>
    <property type="resolution" value="4.80 A"/>
    <property type="chains" value="J/N=1-103"/>
</dbReference>
<dbReference type="PDB" id="6INQ">
    <property type="method" value="EM"/>
    <property type="resolution" value="6.90 A"/>
    <property type="chains" value="b/f=1-103"/>
</dbReference>
<dbReference type="PDB" id="6IR9">
    <property type="method" value="EM"/>
    <property type="resolution" value="3.80 A"/>
    <property type="chains" value="b/f=1-103"/>
</dbReference>
<dbReference type="PDB" id="6J4W">
    <property type="method" value="EM"/>
    <property type="resolution" value="7.90 A"/>
    <property type="chains" value="b/f=1-103"/>
</dbReference>
<dbReference type="PDB" id="6J4X">
    <property type="method" value="EM"/>
    <property type="resolution" value="4.30 A"/>
    <property type="chains" value="b/f=1-103"/>
</dbReference>
<dbReference type="PDB" id="6J4Y">
    <property type="method" value="EM"/>
    <property type="resolution" value="4.30 A"/>
    <property type="chains" value="b/f=1-103"/>
</dbReference>
<dbReference type="PDB" id="6J4Z">
    <property type="method" value="EM"/>
    <property type="resolution" value="4.10 A"/>
    <property type="chains" value="b/f=1-103"/>
</dbReference>
<dbReference type="PDB" id="6J50">
    <property type="method" value="EM"/>
    <property type="resolution" value="4.70 A"/>
    <property type="chains" value="b/f=1-103"/>
</dbReference>
<dbReference type="PDB" id="6J51">
    <property type="method" value="EM"/>
    <property type="resolution" value="4.20 A"/>
    <property type="chains" value="b/f=1-103"/>
</dbReference>
<dbReference type="PDB" id="6JOU">
    <property type="method" value="X-ray"/>
    <property type="resolution" value="2.17 A"/>
    <property type="chains" value="B/F=1-103"/>
</dbReference>
<dbReference type="PDB" id="6JR0">
    <property type="method" value="X-ray"/>
    <property type="resolution" value="2.50 A"/>
    <property type="chains" value="B/F=1-103"/>
</dbReference>
<dbReference type="PDB" id="6JR1">
    <property type="method" value="X-ray"/>
    <property type="resolution" value="2.40 A"/>
    <property type="chains" value="B/F=1-103"/>
</dbReference>
<dbReference type="PDB" id="6K1I">
    <property type="method" value="X-ray"/>
    <property type="resolution" value="2.75 A"/>
    <property type="chains" value="B/F=1-103"/>
</dbReference>
<dbReference type="PDB" id="6K1J">
    <property type="method" value="X-ray"/>
    <property type="resolution" value="2.85 A"/>
    <property type="chains" value="B/F=1-103"/>
</dbReference>
<dbReference type="PDB" id="6K1K">
    <property type="method" value="X-ray"/>
    <property type="resolution" value="2.20 A"/>
    <property type="chains" value="B/F=1-103"/>
</dbReference>
<dbReference type="PDB" id="6KE9">
    <property type="method" value="X-ray"/>
    <property type="resolution" value="2.22 A"/>
    <property type="chains" value="B/F=17-103"/>
</dbReference>
<dbReference type="PDB" id="6KVD">
    <property type="method" value="X-ray"/>
    <property type="resolution" value="2.21 A"/>
    <property type="chains" value="B/F=1-103"/>
</dbReference>
<dbReference type="PDB" id="6KXV">
    <property type="method" value="X-ray"/>
    <property type="resolution" value="3.63 A"/>
    <property type="chains" value="B/F=1-103"/>
</dbReference>
<dbReference type="PDB" id="6L49">
    <property type="method" value="EM"/>
    <property type="resolution" value="18.90 A"/>
    <property type="chains" value="B/F/L/P/T/X=1-103"/>
</dbReference>
<dbReference type="PDB" id="6L4A">
    <property type="method" value="EM"/>
    <property type="resolution" value="12.30 A"/>
    <property type="chains" value="B/F/L/P/T/X=1-103"/>
</dbReference>
<dbReference type="PDB" id="6L9H">
    <property type="method" value="X-ray"/>
    <property type="resolution" value="2.60 A"/>
    <property type="chains" value="B/F=17-103"/>
</dbReference>
<dbReference type="PDB" id="6L9Z">
    <property type="method" value="X-ray"/>
    <property type="resolution" value="2.50 A"/>
    <property type="chains" value="B/F/L/P=1-103"/>
</dbReference>
<dbReference type="PDB" id="6LA2">
    <property type="method" value="X-ray"/>
    <property type="resolution" value="3.89 A"/>
    <property type="chains" value="B/F/L/P/V/Z/f/j=1-103"/>
</dbReference>
<dbReference type="PDB" id="6LA8">
    <property type="method" value="X-ray"/>
    <property type="resolution" value="3.40 A"/>
    <property type="chains" value="B/F/L/P=1-103"/>
</dbReference>
<dbReference type="PDB" id="6LA9">
    <property type="method" value="X-ray"/>
    <property type="resolution" value="3.70 A"/>
    <property type="chains" value="B/F/L/P=1-103"/>
</dbReference>
<dbReference type="PDB" id="6LAB">
    <property type="method" value="X-ray"/>
    <property type="resolution" value="3.20 A"/>
    <property type="chains" value="B/F/L/P=1-103"/>
</dbReference>
<dbReference type="PDB" id="6LE9">
    <property type="method" value="X-ray"/>
    <property type="resolution" value="2.60 A"/>
    <property type="chains" value="B/F=17-103"/>
</dbReference>
<dbReference type="PDB" id="6LER">
    <property type="method" value="X-ray"/>
    <property type="resolution" value="3.00 A"/>
    <property type="chains" value="B/F/L/P=1-103"/>
</dbReference>
<dbReference type="PDB" id="6M3V">
    <property type="method" value="X-ray"/>
    <property type="resolution" value="4.60 A"/>
    <property type="chains" value="B/F/L/P=1-103"/>
</dbReference>
<dbReference type="PDB" id="6M44">
    <property type="method" value="X-ray"/>
    <property type="resolution" value="3.81 A"/>
    <property type="chains" value="B/F/L/P=1-103"/>
</dbReference>
<dbReference type="PDB" id="6M4D">
    <property type="method" value="EM"/>
    <property type="resolution" value="4.40 A"/>
    <property type="chains" value="B/F=1-103"/>
</dbReference>
<dbReference type="PDB" id="6M4G">
    <property type="method" value="EM"/>
    <property type="resolution" value="2.80 A"/>
    <property type="chains" value="B/F=1-103"/>
</dbReference>
<dbReference type="PDB" id="6M4H">
    <property type="method" value="EM"/>
    <property type="resolution" value="3.90 A"/>
    <property type="chains" value="B/F=1-103"/>
</dbReference>
<dbReference type="PDB" id="6MLC">
    <property type="method" value="X-ray"/>
    <property type="resolution" value="1.80 A"/>
    <property type="chains" value="E/F=2-21"/>
</dbReference>
<dbReference type="PDB" id="6MUO">
    <property type="method" value="EM"/>
    <property type="resolution" value="3.60 A"/>
    <property type="chains" value="B/F=9-102"/>
</dbReference>
<dbReference type="PDB" id="6MUP">
    <property type="method" value="EM"/>
    <property type="resolution" value="3.50 A"/>
    <property type="chains" value="B/F=9-102"/>
</dbReference>
<dbReference type="PDB" id="6O1D">
    <property type="method" value="EM"/>
    <property type="resolution" value="3.40 A"/>
    <property type="chains" value="B/F=1-103"/>
</dbReference>
<dbReference type="PDB" id="6R0C">
    <property type="method" value="EM"/>
    <property type="resolution" value="4.20 A"/>
    <property type="chains" value="B/F=1-103"/>
</dbReference>
<dbReference type="PDB" id="6R8Y">
    <property type="method" value="EM"/>
    <property type="resolution" value="4.30 A"/>
    <property type="chains" value="B/F=1-103"/>
</dbReference>
<dbReference type="PDB" id="6R8Z">
    <property type="method" value="EM"/>
    <property type="resolution" value="3.90 A"/>
    <property type="chains" value="B/F=1-103"/>
</dbReference>
<dbReference type="PDB" id="6R90">
    <property type="method" value="EM"/>
    <property type="resolution" value="4.50 A"/>
    <property type="chains" value="B/F=1-103"/>
</dbReference>
<dbReference type="PDB" id="6R91">
    <property type="method" value="EM"/>
    <property type="resolution" value="4.10 A"/>
    <property type="chains" value="B/F=1-103"/>
</dbReference>
<dbReference type="PDB" id="6R92">
    <property type="method" value="EM"/>
    <property type="resolution" value="4.80 A"/>
    <property type="chains" value="B/F=1-103"/>
</dbReference>
<dbReference type="PDB" id="6R93">
    <property type="method" value="EM"/>
    <property type="resolution" value="4.00 A"/>
    <property type="chains" value="B/F=1-103"/>
</dbReference>
<dbReference type="PDB" id="6R94">
    <property type="method" value="EM"/>
    <property type="resolution" value="3.50 A"/>
    <property type="chains" value="B/F=1-103"/>
</dbReference>
<dbReference type="PDB" id="6RNY">
    <property type="method" value="EM"/>
    <property type="resolution" value="3.90 A"/>
    <property type="chains" value="B/F=1-103"/>
</dbReference>
<dbReference type="PDB" id="6RXS">
    <property type="method" value="X-ray"/>
    <property type="resolution" value="1.60 A"/>
    <property type="chains" value="B=13-23"/>
</dbReference>
<dbReference type="PDB" id="6SE0">
    <property type="method" value="EM"/>
    <property type="resolution" value="3.80 A"/>
    <property type="chains" value="B/F=1-103"/>
</dbReference>
<dbReference type="PDB" id="6SE6">
    <property type="method" value="EM"/>
    <property type="resolution" value="3.50 A"/>
    <property type="chains" value="B/F=1-103"/>
</dbReference>
<dbReference type="PDB" id="6SEE">
    <property type="method" value="EM"/>
    <property type="resolution" value="4.20 A"/>
    <property type="chains" value="B/F=1-103"/>
</dbReference>
<dbReference type="PDB" id="6SEF">
    <property type="method" value="EM"/>
    <property type="resolution" value="3.70 A"/>
    <property type="chains" value="B/F=1-103"/>
</dbReference>
<dbReference type="PDB" id="6SEG">
    <property type="method" value="EM"/>
    <property type="resolution" value="3.10 A"/>
    <property type="chains" value="B/F=1-103"/>
</dbReference>
<dbReference type="PDB" id="6T79">
    <property type="method" value="EM"/>
    <property type="resolution" value="3.20 A"/>
    <property type="chains" value="B/F=1-103"/>
</dbReference>
<dbReference type="PDB" id="6T7A">
    <property type="method" value="EM"/>
    <property type="resolution" value="3.70 A"/>
    <property type="chains" value="B/F=1-103"/>
</dbReference>
<dbReference type="PDB" id="6T7B">
    <property type="method" value="EM"/>
    <property type="resolution" value="5.10 A"/>
    <property type="chains" value="B/F=1-103"/>
</dbReference>
<dbReference type="PDB" id="6T7C">
    <property type="method" value="EM"/>
    <property type="resolution" value="4.00 A"/>
    <property type="chains" value="B/F=1-103"/>
</dbReference>
<dbReference type="PDB" id="6T7D">
    <property type="method" value="EM"/>
    <property type="resolution" value="4.40 A"/>
    <property type="chains" value="B/F=1-103"/>
</dbReference>
<dbReference type="PDB" id="6T90">
    <property type="method" value="EM"/>
    <property type="resolution" value="3.05 A"/>
    <property type="chains" value="B/F=1-103"/>
</dbReference>
<dbReference type="PDB" id="6T93">
    <property type="method" value="EM"/>
    <property type="resolution" value="3.49 A"/>
    <property type="chains" value="B/F=1-103"/>
</dbReference>
<dbReference type="PDB" id="6UPK">
    <property type="method" value="EM"/>
    <property type="resolution" value="4.90 A"/>
    <property type="chains" value="B/F=1-103"/>
</dbReference>
<dbReference type="PDB" id="6UPL">
    <property type="method" value="EM"/>
    <property type="resolution" value="7.40 A"/>
    <property type="chains" value="B/F=1-103"/>
</dbReference>
<dbReference type="PDB" id="6USJ">
    <property type="method" value="EM"/>
    <property type="resolution" value="10.50 A"/>
    <property type="chains" value="B/F/L/P=1-103"/>
</dbReference>
<dbReference type="PDB" id="6V2K">
    <property type="method" value="X-ray"/>
    <property type="resolution" value="2.60 A"/>
    <property type="chains" value="B/F=1-103"/>
</dbReference>
<dbReference type="PDB" id="6V92">
    <property type="method" value="EM"/>
    <property type="resolution" value="20.00 A"/>
    <property type="chains" value="b/f=1-103"/>
</dbReference>
<dbReference type="PDB" id="6VO5">
    <property type="method" value="X-ray"/>
    <property type="resolution" value="1.60 A"/>
    <property type="chains" value="C/D=2-21"/>
</dbReference>
<dbReference type="PDB" id="6X59">
    <property type="method" value="EM"/>
    <property type="resolution" value="2.98 A"/>
    <property type="chains" value="B/F=2-103"/>
</dbReference>
<dbReference type="PDB" id="6X5A">
    <property type="method" value="EM"/>
    <property type="resolution" value="4.36 A"/>
    <property type="chains" value="B/F=2-103"/>
</dbReference>
<dbReference type="PDB" id="6XJD">
    <property type="method" value="EM"/>
    <property type="resolution" value="6.80 A"/>
    <property type="chains" value="B/F=2-103"/>
</dbReference>
<dbReference type="PDB" id="6Y5D">
    <property type="method" value="EM"/>
    <property type="resolution" value="4.10 A"/>
    <property type="chains" value="B/F/N/R=1-103"/>
</dbReference>
<dbReference type="PDB" id="6YOV">
    <property type="method" value="EM"/>
    <property type="resolution" value="3.42 A"/>
    <property type="chains" value="B/F=1-103"/>
</dbReference>
<dbReference type="PDB" id="7A08">
    <property type="method" value="EM"/>
    <property type="resolution" value="3.11 A"/>
    <property type="chains" value="e/i=2-103"/>
</dbReference>
<dbReference type="PDB" id="7BWD">
    <property type="method" value="EM"/>
    <property type="resolution" value="4.32 A"/>
    <property type="chains" value="B/F=2-103"/>
</dbReference>
<dbReference type="PDB" id="7BXT">
    <property type="method" value="EM"/>
    <property type="resolution" value="4.20 A"/>
    <property type="chains" value="B/F=2-103"/>
</dbReference>
<dbReference type="PDB" id="7BY0">
    <property type="method" value="EM"/>
    <property type="resolution" value="4.50 A"/>
    <property type="chains" value="B/F=1-102"/>
</dbReference>
<dbReference type="PDB" id="7C0M">
    <property type="method" value="EM"/>
    <property type="resolution" value="3.90 A"/>
    <property type="chains" value="B/F/b/f=2-103"/>
</dbReference>
<dbReference type="PDB" id="7CCQ">
    <property type="method" value="EM"/>
    <property type="resolution" value="3.80 A"/>
    <property type="chains" value="B/F=24-103"/>
</dbReference>
<dbReference type="PDB" id="7CCR">
    <property type="method" value="EM"/>
    <property type="resolution" value="4.90 A"/>
    <property type="chains" value="B/F/M/Q=24-103"/>
</dbReference>
<dbReference type="PDB" id="7CIZ">
    <property type="method" value="X-ray"/>
    <property type="resolution" value="1.80 A"/>
    <property type="chains" value="B/F/J=2-103"/>
</dbReference>
<dbReference type="PDB" id="7CJ0">
    <property type="method" value="X-ray"/>
    <property type="resolution" value="2.50 A"/>
    <property type="chains" value="C/F=2-103"/>
</dbReference>
<dbReference type="PDB" id="7COW">
    <property type="method" value="X-ray"/>
    <property type="resolution" value="2.86 A"/>
    <property type="chains" value="B/F/L/P=1-103"/>
</dbReference>
<dbReference type="PDB" id="7D1Z">
    <property type="method" value="EM"/>
    <property type="resolution" value="3.15 A"/>
    <property type="chains" value="B/F=2-103"/>
</dbReference>
<dbReference type="PDB" id="7D20">
    <property type="method" value="EM"/>
    <property type="resolution" value="3.00 A"/>
    <property type="chains" value="B/F=2-103"/>
</dbReference>
<dbReference type="PDB" id="7DBP">
    <property type="method" value="EM"/>
    <property type="resolution" value="4.50 A"/>
    <property type="chains" value="B/F=1-103"/>
</dbReference>
<dbReference type="PDB" id="7E8D">
    <property type="method" value="EM"/>
    <property type="resolution" value="2.80 A"/>
    <property type="chains" value="B/F=2-103"/>
</dbReference>
<dbReference type="PDB" id="7EIC">
    <property type="method" value="X-ray"/>
    <property type="resolution" value="1.95 A"/>
    <property type="chains" value="C=2-13"/>
</dbReference>
<dbReference type="PDB" id="7EID">
    <property type="method" value="X-ray"/>
    <property type="resolution" value="2.00 A"/>
    <property type="chains" value="C/D=6-15"/>
</dbReference>
<dbReference type="PDB" id="7JO9">
    <property type="method" value="EM"/>
    <property type="resolution" value="3.30 A"/>
    <property type="chains" value="B/F=1-103"/>
</dbReference>
<dbReference type="PDB" id="7JOA">
    <property type="method" value="EM"/>
    <property type="resolution" value="3.30 A"/>
    <property type="chains" value="B/F=1-103"/>
</dbReference>
<dbReference type="PDB" id="7JZV">
    <property type="method" value="EM"/>
    <property type="resolution" value="3.90 A"/>
    <property type="chains" value="Q/q=2-103"/>
</dbReference>
<dbReference type="PDB" id="7K5X">
    <property type="method" value="EM"/>
    <property type="resolution" value="2.93 A"/>
    <property type="chains" value="B/F=1-103"/>
</dbReference>
<dbReference type="PDB" id="7K5Y">
    <property type="method" value="EM"/>
    <property type="resolution" value="2.76 A"/>
    <property type="chains" value="B/F=1-103"/>
</dbReference>
<dbReference type="PDB" id="7K60">
    <property type="method" value="EM"/>
    <property type="resolution" value="3.12 A"/>
    <property type="chains" value="B/F=1-103"/>
</dbReference>
<dbReference type="PDB" id="7K61">
    <property type="method" value="EM"/>
    <property type="resolution" value="2.85 A"/>
    <property type="chains" value="B/F=1-103"/>
</dbReference>
<dbReference type="PDB" id="7K63">
    <property type="method" value="EM"/>
    <property type="resolution" value="3.03 A"/>
    <property type="chains" value="B/F=1-103"/>
</dbReference>
<dbReference type="PDB" id="7LMK">
    <property type="method" value="X-ray"/>
    <property type="resolution" value="2.65 A"/>
    <property type="chains" value="F/G/H/I=15-27"/>
</dbReference>
<dbReference type="PDB" id="7LMM">
    <property type="method" value="X-ray"/>
    <property type="resolution" value="2.80 A"/>
    <property type="chains" value="F/G/H/I=15-27"/>
</dbReference>
<dbReference type="PDB" id="7LYA">
    <property type="method" value="EM"/>
    <property type="resolution" value="2.91 A"/>
    <property type="chains" value="B/F=1-103"/>
</dbReference>
<dbReference type="PDB" id="7LYB">
    <property type="method" value="EM"/>
    <property type="resolution" value="3.28 A"/>
    <property type="chains" value="B/F=1-103"/>
</dbReference>
<dbReference type="PDB" id="7LYC">
    <property type="method" value="EM"/>
    <property type="resolution" value="2.94 A"/>
    <property type="chains" value="B/F=1-103"/>
</dbReference>
<dbReference type="PDB" id="7M98">
    <property type="method" value="X-ray"/>
    <property type="resolution" value="1.60 A"/>
    <property type="chains" value="B=2-16"/>
</dbReference>
<dbReference type="PDB" id="7NL0">
    <property type="method" value="EM"/>
    <property type="resolution" value="3.50 A"/>
    <property type="chains" value="B/F=1-103"/>
</dbReference>
<dbReference type="PDB" id="7PET">
    <property type="method" value="EM"/>
    <property type="resolution" value="9.50 A"/>
    <property type="chains" value="B/F/L/P/b/f/l/p=1-103"/>
</dbReference>
<dbReference type="PDB" id="7PEU">
    <property type="method" value="EM"/>
    <property type="resolution" value="7.20 A"/>
    <property type="chains" value="B/F/L/P/b/f=1-103"/>
</dbReference>
<dbReference type="PDB" id="7PEV">
    <property type="method" value="EM"/>
    <property type="resolution" value="6.00 A"/>
    <property type="chains" value="B/F/L/P=1-103"/>
</dbReference>
<dbReference type="PDB" id="7PEW">
    <property type="method" value="EM"/>
    <property type="resolution" value="4.60 A"/>
    <property type="chains" value="B/F=1-103"/>
</dbReference>
<dbReference type="PDB" id="7PEX">
    <property type="method" value="EM"/>
    <property type="resolution" value="5.10 A"/>
    <property type="chains" value="b/f=1-103"/>
</dbReference>
<dbReference type="PDB" id="7PEY">
    <property type="method" value="EM"/>
    <property type="resolution" value="4.50 A"/>
    <property type="chains" value="L/P=1-103"/>
</dbReference>
<dbReference type="PDB" id="7PEZ">
    <property type="method" value="EM"/>
    <property type="resolution" value="7.90 A"/>
    <property type="chains" value="l/p=1-103"/>
</dbReference>
<dbReference type="PDB" id="7PF0">
    <property type="method" value="EM"/>
    <property type="resolution" value="11.00 A"/>
    <property type="chains" value="B/F/L/P/b/f=1-103"/>
</dbReference>
<dbReference type="PDB" id="7PF2">
    <property type="method" value="EM"/>
    <property type="resolution" value="5.10 A"/>
    <property type="chains" value="B/F/L/P=1-103"/>
</dbReference>
<dbReference type="PDB" id="7PF3">
    <property type="method" value="EM"/>
    <property type="resolution" value="4.00 A"/>
    <property type="chains" value="l/p=1-103"/>
</dbReference>
<dbReference type="PDB" id="7PF4">
    <property type="method" value="EM"/>
    <property type="resolution" value="4.00 A"/>
    <property type="chains" value="L/P=1-103"/>
</dbReference>
<dbReference type="PDB" id="7PF5">
    <property type="method" value="EM"/>
    <property type="resolution" value="3.80 A"/>
    <property type="chains" value="b/f=1-103"/>
</dbReference>
<dbReference type="PDB" id="7PF6">
    <property type="method" value="EM"/>
    <property type="resolution" value="4.00 A"/>
    <property type="chains" value="B/F=1-103"/>
</dbReference>
<dbReference type="PDB" id="7PFA">
    <property type="method" value="EM"/>
    <property type="resolution" value="9.70 A"/>
    <property type="chains" value="B/F/L/P/b/f=1-103"/>
</dbReference>
<dbReference type="PDB" id="7PFC">
    <property type="method" value="EM"/>
    <property type="resolution" value="6.40 A"/>
    <property type="chains" value="B/F/L/P=1-103"/>
</dbReference>
<dbReference type="PDB" id="7PFD">
    <property type="method" value="EM"/>
    <property type="resolution" value="4.40 A"/>
    <property type="chains" value="B/F=1-103"/>
</dbReference>
<dbReference type="PDB" id="7PFE">
    <property type="method" value="EM"/>
    <property type="resolution" value="4.40 A"/>
    <property type="chains" value="b/f=1-103"/>
</dbReference>
<dbReference type="PDB" id="7PFF">
    <property type="method" value="EM"/>
    <property type="resolution" value="4.30 A"/>
    <property type="chains" value="L/P=1-103"/>
</dbReference>
<dbReference type="PDB" id="7PFT">
    <property type="method" value="EM"/>
    <property type="resolution" value="9.80 A"/>
    <property type="chains" value="B/F/L/P/b/f=1-103"/>
</dbReference>
<dbReference type="PDB" id="7PFU">
    <property type="method" value="EM"/>
    <property type="resolution" value="5.00 A"/>
    <property type="chains" value="B/F/L/P=1-103"/>
</dbReference>
<dbReference type="PDB" id="7PFV">
    <property type="method" value="EM"/>
    <property type="resolution" value="4.40 A"/>
    <property type="chains" value="B/F=1-103"/>
</dbReference>
<dbReference type="PDB" id="7PFW">
    <property type="method" value="EM"/>
    <property type="resolution" value="5.20 A"/>
    <property type="chains" value="b/f=1-103"/>
</dbReference>
<dbReference type="PDB" id="7PFX">
    <property type="method" value="EM"/>
    <property type="resolution" value="4.30 A"/>
    <property type="chains" value="L/P=1-103"/>
</dbReference>
<dbReference type="PDB" id="7PII">
    <property type="method" value="EM"/>
    <property type="resolution" value="2.68 A"/>
    <property type="chains" value="B/F=1-103"/>
</dbReference>
<dbReference type="PDB" id="7R5R">
    <property type="method" value="EM"/>
    <property type="resolution" value="2.44 A"/>
    <property type="chains" value="B/F=1-103"/>
</dbReference>
<dbReference type="PDB" id="7SCY">
    <property type="method" value="EM"/>
    <property type="resolution" value="4.10 A"/>
    <property type="chains" value="B/F=1-103"/>
</dbReference>
<dbReference type="PDB" id="7SCZ">
    <property type="method" value="EM"/>
    <property type="resolution" value="3.50 A"/>
    <property type="chains" value="B/F=1-103"/>
</dbReference>
<dbReference type="PDB" id="7TAN">
    <property type="method" value="EM"/>
    <property type="resolution" value="3.00 A"/>
    <property type="chains" value="B/F=1-103"/>
</dbReference>
<dbReference type="PDB" id="7U0G">
    <property type="method" value="EM"/>
    <property type="resolution" value="2.60 A"/>
    <property type="chains" value="B/F=1-103"/>
</dbReference>
<dbReference type="PDB" id="7U0I">
    <property type="method" value="EM"/>
    <property type="resolution" value="2.60 A"/>
    <property type="chains" value="B/F=1-103"/>
</dbReference>
<dbReference type="PDB" id="7U0J">
    <property type="method" value="EM"/>
    <property type="resolution" value="2.70 A"/>
    <property type="chains" value="B/F=1-103"/>
</dbReference>
<dbReference type="PDB" id="7U46">
    <property type="method" value="EM"/>
    <property type="resolution" value="2.68 A"/>
    <property type="chains" value="B/F=1-103"/>
</dbReference>
<dbReference type="PDB" id="7U47">
    <property type="method" value="EM"/>
    <property type="resolution" value="7.50 A"/>
    <property type="chains" value="B/F/M/Q=1-103"/>
</dbReference>
<dbReference type="PDB" id="7U4D">
    <property type="method" value="EM"/>
    <property type="resolution" value="8.10 A"/>
    <property type="chains" value="B/F/M/Q=1-103"/>
</dbReference>
<dbReference type="PDB" id="7U50">
    <property type="method" value="EM"/>
    <property type="resolution" value="3.40 A"/>
    <property type="chains" value="B/F=2-103"/>
</dbReference>
<dbReference type="PDB" id="7U51">
    <property type="method" value="EM"/>
    <property type="resolution" value="3.10 A"/>
    <property type="chains" value="B/F=2-103"/>
</dbReference>
<dbReference type="PDB" id="7U52">
    <property type="method" value="EM"/>
    <property type="resolution" value="3.40 A"/>
    <property type="chains" value="B/F=2-103"/>
</dbReference>
<dbReference type="PDB" id="7U53">
    <property type="method" value="EM"/>
    <property type="resolution" value="4.00 A"/>
    <property type="chains" value="B/F=2-103"/>
</dbReference>
<dbReference type="PDB" id="7UV9">
    <property type="method" value="EM"/>
    <property type="resolution" value="3.20 A"/>
    <property type="chains" value="B/F=2-103"/>
</dbReference>
<dbReference type="PDB" id="7V1M">
    <property type="method" value="X-ray"/>
    <property type="resolution" value="2.83 A"/>
    <property type="chains" value="C/E=2-103"/>
</dbReference>
<dbReference type="PDB" id="7V6Q">
    <property type="method" value="X-ray"/>
    <property type="resolution" value="3.00 A"/>
    <property type="chains" value="C/G=3-103"/>
</dbReference>
<dbReference type="PDB" id="7V90">
    <property type="method" value="EM"/>
    <property type="resolution" value="3.50 A"/>
    <property type="chains" value="B/F=1-103"/>
</dbReference>
<dbReference type="PDB" id="7V96">
    <property type="method" value="EM"/>
    <property type="resolution" value="3.92 A"/>
    <property type="chains" value="B/F/L/P=1-103"/>
</dbReference>
<dbReference type="PDB" id="7V9C">
    <property type="method" value="EM"/>
    <property type="resolution" value="4.50 A"/>
    <property type="chains" value="B/F/L/P=1-103"/>
</dbReference>
<dbReference type="PDB" id="7V9J">
    <property type="method" value="EM"/>
    <property type="resolution" value="8.00 A"/>
    <property type="chains" value="B/F/L/P/T/X=1-103"/>
</dbReference>
<dbReference type="PDB" id="7V9K">
    <property type="method" value="EM"/>
    <property type="resolution" value="8.10 A"/>
    <property type="chains" value="B/F/L/P/T/X/b/f=1-103"/>
</dbReference>
<dbReference type="PDB" id="7V9S">
    <property type="method" value="EM"/>
    <property type="resolution" value="11.00 A"/>
    <property type="chains" value="B/F/L/P/T/X=1-103"/>
</dbReference>
<dbReference type="PDB" id="7VA4">
    <property type="method" value="EM"/>
    <property type="resolution" value="14.00 A"/>
    <property type="chains" value="B/F/L/P/T/X/b/f=1-103"/>
</dbReference>
<dbReference type="PDB" id="7VCQ">
    <property type="method" value="X-ray"/>
    <property type="resolution" value="3.00 A"/>
    <property type="chains" value="B/E/H=1-103"/>
</dbReference>
<dbReference type="PDB" id="7VZ4">
    <property type="method" value="EM"/>
    <property type="resolution" value="1.89 A"/>
    <property type="chains" value="B/F=2-103"/>
</dbReference>
<dbReference type="PDB" id="7W9V">
    <property type="method" value="EM"/>
    <property type="resolution" value="3.95 A"/>
    <property type="chains" value="B/F=1-103"/>
</dbReference>
<dbReference type="PDB" id="7WBV">
    <property type="method" value="EM"/>
    <property type="resolution" value="4.10 A"/>
    <property type="chains" value="b/f=2-103"/>
</dbReference>
<dbReference type="PDB" id="7WBW">
    <property type="method" value="EM"/>
    <property type="resolution" value="7.10 A"/>
    <property type="chains" value="b/f=2-103"/>
</dbReference>
<dbReference type="PDB" id="7WBX">
    <property type="method" value="EM"/>
    <property type="resolution" value="4.00 A"/>
    <property type="chains" value="b/f=2-103"/>
</dbReference>
<dbReference type="PDB" id="7X57">
    <property type="method" value="EM"/>
    <property type="resolution" value="3.63 A"/>
    <property type="chains" value="B/D/F/H=1-103"/>
</dbReference>
<dbReference type="PDB" id="7X58">
    <property type="method" value="EM"/>
    <property type="resolution" value="3.93 A"/>
    <property type="chains" value="B/D/F/H=2-103"/>
</dbReference>
<dbReference type="PDB" id="7XCR">
    <property type="method" value="EM"/>
    <property type="resolution" value="2.57 A"/>
    <property type="chains" value="B/F=16-103"/>
</dbReference>
<dbReference type="PDB" id="7XCT">
    <property type="method" value="EM"/>
    <property type="resolution" value="2.72 A"/>
    <property type="chains" value="B/F=16-103"/>
</dbReference>
<dbReference type="PDB" id="7XD0">
    <property type="method" value="EM"/>
    <property type="resolution" value="3.48 A"/>
    <property type="chains" value="B/F=21-103"/>
</dbReference>
<dbReference type="PDB" id="7XD1">
    <property type="method" value="EM"/>
    <property type="resolution" value="3.20 A"/>
    <property type="chains" value="B/F=23-102"/>
</dbReference>
<dbReference type="PDB" id="7XSE">
    <property type="method" value="EM"/>
    <property type="resolution" value="3.60 A"/>
    <property type="chains" value="b/f=1-103"/>
</dbReference>
<dbReference type="PDB" id="7XSX">
    <property type="method" value="EM"/>
    <property type="resolution" value="3.80 A"/>
    <property type="chains" value="b/f=1-103"/>
</dbReference>
<dbReference type="PDB" id="7XSZ">
    <property type="method" value="EM"/>
    <property type="resolution" value="3.40 A"/>
    <property type="chains" value="b/f=1-103"/>
</dbReference>
<dbReference type="PDB" id="7XT7">
    <property type="method" value="EM"/>
    <property type="resolution" value="4.20 A"/>
    <property type="chains" value="b/f=1-103"/>
</dbReference>
<dbReference type="PDB" id="7XTD">
    <property type="method" value="EM"/>
    <property type="resolution" value="3.90 A"/>
    <property type="chains" value="b/f=1-103"/>
</dbReference>
<dbReference type="PDB" id="7XTI">
    <property type="method" value="EM"/>
    <property type="resolution" value="3.90 A"/>
    <property type="chains" value="b/f=1-103"/>
</dbReference>
<dbReference type="PDB" id="7XVL">
    <property type="method" value="X-ray"/>
    <property type="resolution" value="3.51 A"/>
    <property type="chains" value="B/F/L/P/V/Z/f/j=1-103"/>
</dbReference>
<dbReference type="PDB" id="7XVM">
    <property type="method" value="X-ray"/>
    <property type="resolution" value="2.84 A"/>
    <property type="chains" value="B/F/L/P=1-103"/>
</dbReference>
<dbReference type="PDB" id="7XX5">
    <property type="method" value="X-ray"/>
    <property type="resolution" value="3.19 A"/>
    <property type="chains" value="B/F/L/P=1-103"/>
</dbReference>
<dbReference type="PDB" id="7XX6">
    <property type="method" value="X-ray"/>
    <property type="resolution" value="3.39 A"/>
    <property type="chains" value="B/F/L/P/V/Z/f/j=1-103"/>
</dbReference>
<dbReference type="PDB" id="7XZX">
    <property type="method" value="EM"/>
    <property type="resolution" value="4.53 A"/>
    <property type="chains" value="B/F=1-103"/>
</dbReference>
<dbReference type="PDB" id="7XZY">
    <property type="method" value="EM"/>
    <property type="resolution" value="3.97 A"/>
    <property type="chains" value="B/F=1-103"/>
</dbReference>
<dbReference type="PDB" id="7XZZ">
    <property type="method" value="EM"/>
    <property type="resolution" value="4.07 A"/>
    <property type="chains" value="B/F=1-103"/>
</dbReference>
<dbReference type="PDB" id="7Y00">
    <property type="method" value="EM"/>
    <property type="resolution" value="3.96 A"/>
    <property type="chains" value="B/F=1-103"/>
</dbReference>
<dbReference type="PDB" id="7Y5U">
    <property type="method" value="EM"/>
    <property type="resolution" value="3.80 A"/>
    <property type="chains" value="E=1-103"/>
</dbReference>
<dbReference type="PDB" id="7Y5V">
    <property type="method" value="EM"/>
    <property type="resolution" value="6.10 A"/>
    <property type="chains" value="E/J=1-103"/>
</dbReference>
<dbReference type="PDB" id="7Y5W">
    <property type="method" value="EM"/>
    <property type="resolution" value="3.50 A"/>
    <property type="chains" value="B/D/F/H=1-103"/>
</dbReference>
<dbReference type="PDB" id="7Y60">
    <property type="method" value="EM"/>
    <property type="resolution" value="3.80 A"/>
    <property type="chains" value="B/D/F/H=1-103"/>
</dbReference>
<dbReference type="PDB" id="7Y61">
    <property type="method" value="EM"/>
    <property type="resolution" value="5.60 A"/>
    <property type="chains" value="B/D/F/H=1-103"/>
</dbReference>
<dbReference type="PDB" id="7Y7I">
    <property type="method" value="EM"/>
    <property type="resolution" value="3.42 A"/>
    <property type="chains" value="B/F=1-103"/>
</dbReference>
<dbReference type="PDB" id="7Y8R">
    <property type="method" value="EM"/>
    <property type="resolution" value="4.40 A"/>
    <property type="chains" value="B/F=2-103"/>
</dbReference>
<dbReference type="PDB" id="7YOZ">
    <property type="method" value="EM"/>
    <property type="resolution" value="4.30 A"/>
    <property type="chains" value="B/D/F/H=1-103"/>
</dbReference>
<dbReference type="PDB" id="7YQK">
    <property type="method" value="EM"/>
    <property type="resolution" value="3.38 A"/>
    <property type="chains" value="B/F=21-103"/>
</dbReference>
<dbReference type="PDB" id="7YRD">
    <property type="method" value="EM"/>
    <property type="resolution" value="3.20 A"/>
    <property type="chains" value="B/F=2-103"/>
</dbReference>
<dbReference type="PDB" id="7YWX">
    <property type="method" value="EM"/>
    <property type="resolution" value="12.00 A"/>
    <property type="chains" value="B/F=1-103"/>
</dbReference>
<dbReference type="PDB" id="7YYH">
    <property type="method" value="EM"/>
    <property type="resolution" value="8.90 A"/>
    <property type="chains" value="B/F=1-103"/>
</dbReference>
<dbReference type="PDB" id="7ZI4">
    <property type="method" value="EM"/>
    <property type="resolution" value="3.20 A"/>
    <property type="chains" value="J/N=1-103"/>
</dbReference>
<dbReference type="PDB" id="8AAG">
    <property type="method" value="EM"/>
    <property type="resolution" value="10.00 A"/>
    <property type="chains" value="B/F=1-103"/>
</dbReference>
<dbReference type="PDB" id="8ATF">
    <property type="method" value="EM"/>
    <property type="resolution" value="3.45 A"/>
    <property type="chains" value="N/R=2-103"/>
</dbReference>
<dbReference type="PDB" id="8AV6">
    <property type="method" value="EM"/>
    <property type="resolution" value="4.68 A"/>
    <property type="chains" value="N/R=2-103"/>
</dbReference>
<dbReference type="PDB" id="8B5A">
    <property type="method" value="X-ray"/>
    <property type="resolution" value="1.92 A"/>
    <property type="chains" value="B=19-26"/>
</dbReference>
<dbReference type="PDB" id="8B5B">
    <property type="method" value="X-ray"/>
    <property type="resolution" value="1.92 A"/>
    <property type="chains" value="D/E=2-13"/>
</dbReference>
<dbReference type="PDB" id="8B5C">
    <property type="method" value="X-ray"/>
    <property type="resolution" value="1.58 A"/>
    <property type="chains" value="B=2-13"/>
</dbReference>
<dbReference type="PDB" id="8DK5">
    <property type="method" value="EM"/>
    <property type="resolution" value="2.71 A"/>
    <property type="chains" value="B/F=1-103"/>
</dbReference>
<dbReference type="PDB" id="8EVG">
    <property type="method" value="EM"/>
    <property type="resolution" value="2.75 A"/>
    <property type="chains" value="B/F=1-103"/>
</dbReference>
<dbReference type="PDB" id="8EVH">
    <property type="method" value="EM"/>
    <property type="resolution" value="2.85 A"/>
    <property type="chains" value="B/F=1-103"/>
</dbReference>
<dbReference type="PDB" id="8EVI">
    <property type="method" value="EM"/>
    <property type="resolution" value="2.64 A"/>
    <property type="chains" value="B/F=1-103"/>
</dbReference>
<dbReference type="PDB" id="8EVJ">
    <property type="method" value="EM"/>
    <property type="resolution" value="4.10 A"/>
    <property type="chains" value="B/F=1-103"/>
</dbReference>
<dbReference type="PDB" id="8GRM">
    <property type="method" value="EM"/>
    <property type="resolution" value="3.05 A"/>
    <property type="chains" value="B/F=19-103"/>
</dbReference>
<dbReference type="PDB" id="8GRQ">
    <property type="method" value="EM"/>
    <property type="resolution" value="3.87 A"/>
    <property type="chains" value="B/F=23-102"/>
</dbReference>
<dbReference type="PDB" id="8GUI">
    <property type="method" value="EM"/>
    <property type="resolution" value="2.81 A"/>
    <property type="chains" value="B/F=2-103"/>
</dbReference>
<dbReference type="PDB" id="8GUJ">
    <property type="method" value="EM"/>
    <property type="resolution" value="2.80 A"/>
    <property type="chains" value="B/F=2-103"/>
</dbReference>
<dbReference type="PDB" id="8GUK">
    <property type="method" value="EM"/>
    <property type="resolution" value="2.51 A"/>
    <property type="chains" value="B/F=2-103"/>
</dbReference>
<dbReference type="PDB" id="8H0V">
    <property type="method" value="EM"/>
    <property type="resolution" value="3.80 A"/>
    <property type="chains" value="b/f=1-103"/>
</dbReference>
<dbReference type="PDB" id="8H0W">
    <property type="method" value="EM"/>
    <property type="resolution" value="4.60 A"/>
    <property type="chains" value="b/f=1-103"/>
</dbReference>
<dbReference type="PDB" id="8H1T">
    <property type="method" value="EM"/>
    <property type="resolution" value="3.00 A"/>
    <property type="chains" value="B/F=1-103"/>
</dbReference>
<dbReference type="PDB" id="8HAG">
    <property type="method" value="EM"/>
    <property type="resolution" value="3.20 A"/>
    <property type="chains" value="B/F=2-103"/>
</dbReference>
<dbReference type="PDB" id="8HAH">
    <property type="method" value="EM"/>
    <property type="resolution" value="3.90 A"/>
    <property type="chains" value="B/F=2-103"/>
</dbReference>
<dbReference type="PDB" id="8HAI">
    <property type="method" value="EM"/>
    <property type="resolution" value="4.70 A"/>
    <property type="chains" value="B/F=2-103"/>
</dbReference>
<dbReference type="PDB" id="8HAJ">
    <property type="method" value="EM"/>
    <property type="resolution" value="4.80 A"/>
    <property type="chains" value="B/F=2-103"/>
</dbReference>
<dbReference type="PDB" id="8HAK">
    <property type="method" value="EM"/>
    <property type="resolution" value="4.50 A"/>
    <property type="chains" value="B/F=2-103"/>
</dbReference>
<dbReference type="PDB" id="8HAL">
    <property type="method" value="EM"/>
    <property type="resolution" value="4.40 A"/>
    <property type="chains" value="B/F=2-103"/>
</dbReference>
<dbReference type="PDB" id="8HAM">
    <property type="method" value="EM"/>
    <property type="resolution" value="4.50 A"/>
    <property type="chains" value="B/F=2-103"/>
</dbReference>
<dbReference type="PDB" id="8HAN">
    <property type="method" value="EM"/>
    <property type="resolution" value="4.20 A"/>
    <property type="chains" value="B/F=2-103"/>
</dbReference>
<dbReference type="PDB" id="8HE5">
    <property type="method" value="EM"/>
    <property type="resolution" value="6.95 A"/>
    <property type="chains" value="b/f=1-103"/>
</dbReference>
<dbReference type="PDB" id="8HLW">
    <property type="method" value="X-ray"/>
    <property type="resolution" value="2.50 A"/>
    <property type="chains" value="B=14-21"/>
</dbReference>
<dbReference type="PDB" id="8HR1">
    <property type="method" value="EM"/>
    <property type="resolution" value="3.02 A"/>
    <property type="chains" value="B/F=20-102"/>
</dbReference>
<dbReference type="PDB" id="8IEG">
    <property type="method" value="EM"/>
    <property type="resolution" value="3.44 A"/>
    <property type="chains" value="F/L=23-102"/>
</dbReference>
<dbReference type="PDB" id="8IEJ">
    <property type="method" value="EM"/>
    <property type="resolution" value="3.12 A"/>
    <property type="chains" value="F/L=23-102"/>
</dbReference>
<dbReference type="PDB" id="8IHL">
    <property type="method" value="EM"/>
    <property type="resolution" value="7.64 A"/>
    <property type="chains" value="B/F/L/N/R/V=1-103"/>
</dbReference>
<dbReference type="PDB" id="8IQF">
    <property type="method" value="EM"/>
    <property type="resolution" value="4.60 A"/>
    <property type="chains" value="E/J=1-103"/>
</dbReference>
<dbReference type="PDB" id="8IQG">
    <property type="method" value="EM"/>
    <property type="resolution" value="3.50 A"/>
    <property type="chains" value="E=1-103"/>
</dbReference>
<dbReference type="PDB" id="8J6S">
    <property type="method" value="EM"/>
    <property type="resolution" value="3.80 A"/>
    <property type="chains" value="B/D/F/H=1-103"/>
</dbReference>
<dbReference type="PDB" id="8J6T">
    <property type="method" value="EM"/>
    <property type="resolution" value="6.60 A"/>
    <property type="chains" value="B/D/F/H=1-103"/>
</dbReference>
<dbReference type="PDB" id="8JBX">
    <property type="method" value="EM"/>
    <property type="resolution" value="3.35 A"/>
    <property type="chains" value="B/F=2-103"/>
</dbReference>
<dbReference type="PDB" id="8JCC">
    <property type="method" value="EM"/>
    <property type="resolution" value="3.42 A"/>
    <property type="chains" value="B/F=2-103"/>
</dbReference>
<dbReference type="PDB" id="8JCD">
    <property type="method" value="EM"/>
    <property type="resolution" value="3.14 A"/>
    <property type="chains" value="B/F=2-103"/>
</dbReference>
<dbReference type="PDB" id="8JH2">
    <property type="method" value="EM"/>
    <property type="resolution" value="5.70 A"/>
    <property type="chains" value="b/f=1-103"/>
</dbReference>
<dbReference type="PDB" id="8JH3">
    <property type="method" value="EM"/>
    <property type="resolution" value="3.70 A"/>
    <property type="chains" value="b/f=1-103"/>
</dbReference>
<dbReference type="PDB" id="8JH4">
    <property type="method" value="EM"/>
    <property type="resolution" value="3.20 A"/>
    <property type="chains" value="b/f=1-103"/>
</dbReference>
<dbReference type="PDB" id="8JHF">
    <property type="method" value="EM"/>
    <property type="resolution" value="3.68 A"/>
    <property type="chains" value="B/F=18-103"/>
</dbReference>
<dbReference type="PDB" id="8JHG">
    <property type="method" value="EM"/>
    <property type="resolution" value="3.58 A"/>
    <property type="chains" value="B/F=18-103"/>
</dbReference>
<dbReference type="PDB" id="8JL9">
    <property type="method" value="EM"/>
    <property type="resolution" value="2.65 A"/>
    <property type="chains" value="B/F=1-103"/>
</dbReference>
<dbReference type="PDB" id="8JLA">
    <property type="method" value="EM"/>
    <property type="resolution" value="3.44 A"/>
    <property type="chains" value="B/F=17-103"/>
</dbReference>
<dbReference type="PDB" id="8JLB">
    <property type="method" value="EM"/>
    <property type="resolution" value="2.36 A"/>
    <property type="chains" value="B/F=1-103"/>
</dbReference>
<dbReference type="PDB" id="8JLD">
    <property type="method" value="EM"/>
    <property type="resolution" value="2.48 A"/>
    <property type="chains" value="B/F=1-103"/>
</dbReference>
<dbReference type="PDB" id="8JND">
    <property type="method" value="EM"/>
    <property type="resolution" value="3.66 A"/>
    <property type="chains" value="B/F=1-103"/>
</dbReference>
<dbReference type="PDB" id="8JNE">
    <property type="method" value="EM"/>
    <property type="resolution" value="4.68 A"/>
    <property type="chains" value="B/F=1-103"/>
</dbReference>
<dbReference type="PDB" id="8JNF">
    <property type="method" value="EM"/>
    <property type="resolution" value="6.91 A"/>
    <property type="chains" value="B/F=1-103"/>
</dbReference>
<dbReference type="PDB" id="8KB5">
    <property type="method" value="EM"/>
    <property type="resolution" value="2.26 A"/>
    <property type="chains" value="B/F=1-103"/>
</dbReference>
<dbReference type="PDB" id="8KCY">
    <property type="method" value="EM"/>
    <property type="resolution" value="2.80 A"/>
    <property type="chains" value="B/F=1-103"/>
</dbReference>
<dbReference type="PDB" id="8KD1">
    <property type="method" value="EM"/>
    <property type="resolution" value="3.20 A"/>
    <property type="chains" value="B/F=1-103"/>
</dbReference>
<dbReference type="PDB" id="8KE0">
    <property type="method" value="EM"/>
    <property type="resolution" value="4.00 A"/>
    <property type="chains" value="B/F=1-103"/>
</dbReference>
<dbReference type="PDB" id="8OFF">
    <property type="method" value="EM"/>
    <property type="resolution" value="3.40 A"/>
    <property type="chains" value="Da/Db=1-103"/>
</dbReference>
<dbReference type="PDB" id="8OL1">
    <property type="method" value="EM"/>
    <property type="resolution" value="3.50 A"/>
    <property type="chains" value="B/F=23-103"/>
</dbReference>
<dbReference type="PDB" id="8OO7">
    <property type="method" value="EM"/>
    <property type="resolution" value="2.80 A"/>
    <property type="chains" value="N/R=2-103"/>
</dbReference>
<dbReference type="PDB" id="8OOA">
    <property type="method" value="EM"/>
    <property type="resolution" value="3.18 A"/>
    <property type="chains" value="N/R=2-103"/>
</dbReference>
<dbReference type="PDB" id="8OOP">
    <property type="method" value="EM"/>
    <property type="resolution" value="2.70 A"/>
    <property type="chains" value="N/R=2-103"/>
</dbReference>
<dbReference type="PDB" id="8OOS">
    <property type="method" value="EM"/>
    <property type="resolution" value="3.29 A"/>
    <property type="chains" value="N/R=2-103"/>
</dbReference>
<dbReference type="PDB" id="8OSJ">
    <property type="method" value="EM"/>
    <property type="resolution" value="6.20 A"/>
    <property type="chains" value="B/F=1-103"/>
</dbReference>
<dbReference type="PDB" id="8OSK">
    <property type="method" value="EM"/>
    <property type="resolution" value="3.60 A"/>
    <property type="chains" value="B/F=1-103"/>
</dbReference>
<dbReference type="PDB" id="8OSL">
    <property type="method" value="EM"/>
    <property type="resolution" value="4.90 A"/>
    <property type="chains" value="B/F=1-103"/>
</dbReference>
<dbReference type="PDB" id="8OTS">
    <property type="method" value="EM"/>
    <property type="resolution" value="3.30 A"/>
    <property type="chains" value="B/F=1-103"/>
</dbReference>
<dbReference type="PDB" id="8OTT">
    <property type="method" value="EM"/>
    <property type="resolution" value="3.30 A"/>
    <property type="chains" value="B/F=22-103"/>
</dbReference>
<dbReference type="PDB" id="8OX0">
    <property type="method" value="EM"/>
    <property type="resolution" value="2.52 A"/>
    <property type="chains" value="B/F=1-103"/>
</dbReference>
<dbReference type="PDB" id="8OX1">
    <property type="method" value="EM"/>
    <property type="resolution" value="2.70 A"/>
    <property type="chains" value="B/F=1-103"/>
</dbReference>
<dbReference type="PDB" id="8PEF">
    <property type="method" value="X-ray"/>
    <property type="resolution" value="1.28 A"/>
    <property type="chains" value="B=10-26"/>
</dbReference>
<dbReference type="PDB" id="8Q36">
    <property type="method" value="X-ray"/>
    <property type="resolution" value="2.60 A"/>
    <property type="chains" value="BBB/FFF=17-103"/>
</dbReference>
<dbReference type="PDB" id="8Q3E">
    <property type="method" value="X-ray"/>
    <property type="resolution" value="2.17 A"/>
    <property type="chains" value="BBB/FFF=17-103"/>
</dbReference>
<dbReference type="PDB" id="8Q3M">
    <property type="method" value="X-ray"/>
    <property type="resolution" value="2.50 A"/>
    <property type="chains" value="BBB/FFF=17-103"/>
</dbReference>
<dbReference type="PDB" id="8Q3X">
    <property type="method" value="X-ray"/>
    <property type="resolution" value="2.30 A"/>
    <property type="chains" value="BBB/FFF=17-103"/>
</dbReference>
<dbReference type="PDB" id="8QZM">
    <property type="method" value="EM"/>
    <property type="resolution" value="3.10 A"/>
    <property type="chains" value="B/F=2-103"/>
</dbReference>
<dbReference type="PDB" id="8RBX">
    <property type="method" value="EM"/>
    <property type="resolution" value="4.10 A"/>
    <property type="chains" value="O/U=1-103"/>
</dbReference>
<dbReference type="PDB" id="8RGM">
    <property type="method" value="EM"/>
    <property type="resolution" value="4.00 A"/>
    <property type="chains" value="B/F=2-103"/>
</dbReference>
<dbReference type="PDB" id="8SB6">
    <property type="method" value="X-ray"/>
    <property type="resolution" value="1.80 A"/>
    <property type="chains" value="D/E=2-16"/>
</dbReference>
<dbReference type="PDB" id="8SDO">
    <property type="method" value="X-ray"/>
    <property type="resolution" value="2.01 A"/>
    <property type="chains" value="B=3-16"/>
</dbReference>
<dbReference type="PDB" id="8SDQ">
    <property type="method" value="X-ray"/>
    <property type="resolution" value="1.85 A"/>
    <property type="chains" value="B=2-16"/>
</dbReference>
<dbReference type="PDB" id="8SDX">
    <property type="method" value="X-ray"/>
    <property type="resolution" value="2.69 A"/>
    <property type="chains" value="C/D=3-16"/>
</dbReference>
<dbReference type="PDB" id="8SMW">
    <property type="method" value="EM"/>
    <property type="resolution" value="3.30 A"/>
    <property type="chains" value="B/F=1-103"/>
</dbReference>
<dbReference type="PDB" id="8SMX">
    <property type="method" value="EM"/>
    <property type="resolution" value="3.20 A"/>
    <property type="chains" value="B/F=1-103"/>
</dbReference>
<dbReference type="PDB" id="8SMY">
    <property type="method" value="EM"/>
    <property type="resolution" value="3.20 A"/>
    <property type="chains" value="B/F=1-103"/>
</dbReference>
<dbReference type="PDB" id="8SMZ">
    <property type="method" value="EM"/>
    <property type="resolution" value="3.20 A"/>
    <property type="chains" value="B/F=1-103"/>
</dbReference>
<dbReference type="PDB" id="8SN0">
    <property type="method" value="EM"/>
    <property type="resolution" value="3.20 A"/>
    <property type="chains" value="B/F=1-103"/>
</dbReference>
<dbReference type="PDB" id="8SN1">
    <property type="method" value="EM"/>
    <property type="resolution" value="3.30 A"/>
    <property type="chains" value="B/F=1-103"/>
</dbReference>
<dbReference type="PDB" id="8SN2">
    <property type="method" value="EM"/>
    <property type="resolution" value="3.60 A"/>
    <property type="chains" value="B/F=1-103"/>
</dbReference>
<dbReference type="PDB" id="8SN3">
    <property type="method" value="EM"/>
    <property type="resolution" value="3.80 A"/>
    <property type="chains" value="B/F=1-103"/>
</dbReference>
<dbReference type="PDB" id="8SN4">
    <property type="method" value="EM"/>
    <property type="resolution" value="3.70 A"/>
    <property type="chains" value="B/F=1-103"/>
</dbReference>
<dbReference type="PDB" id="8SN5">
    <property type="method" value="EM"/>
    <property type="resolution" value="3.90 A"/>
    <property type="chains" value="B/F=1-103"/>
</dbReference>
<dbReference type="PDB" id="8SN6">
    <property type="method" value="EM"/>
    <property type="resolution" value="3.70 A"/>
    <property type="chains" value="B/F=1-103"/>
</dbReference>
<dbReference type="PDB" id="8SN7">
    <property type="method" value="EM"/>
    <property type="resolution" value="3.70 A"/>
    <property type="chains" value="B/F=1-103"/>
</dbReference>
<dbReference type="PDB" id="8SN8">
    <property type="method" value="EM"/>
    <property type="resolution" value="3.70 A"/>
    <property type="chains" value="B/F=1-103"/>
</dbReference>
<dbReference type="PDB" id="8SN9">
    <property type="method" value="EM"/>
    <property type="resolution" value="3.90 A"/>
    <property type="chains" value="B/F=1-103"/>
</dbReference>
<dbReference type="PDB" id="8SNA">
    <property type="method" value="EM"/>
    <property type="resolution" value="4.00 A"/>
    <property type="chains" value="B/F=1-103"/>
</dbReference>
<dbReference type="PDB" id="8SPS">
    <property type="method" value="EM"/>
    <property type="resolution" value="3.00 A"/>
    <property type="chains" value="B/F=1-103"/>
</dbReference>
<dbReference type="PDB" id="8SPU">
    <property type="method" value="EM"/>
    <property type="resolution" value="2.80 A"/>
    <property type="chains" value="B/F=1-103"/>
</dbReference>
<dbReference type="PDB" id="8SYP">
    <property type="method" value="EM"/>
    <property type="resolution" value="2.60 A"/>
    <property type="chains" value="B/F=1-103"/>
</dbReference>
<dbReference type="PDB" id="8TGP">
    <property type="method" value="X-ray"/>
    <property type="resolution" value="1.76 A"/>
    <property type="chains" value="B=9-21"/>
</dbReference>
<dbReference type="PDB" id="8TXV">
    <property type="method" value="EM"/>
    <property type="resolution" value="3.80 A"/>
    <property type="chains" value="B/F=1-103"/>
</dbReference>
<dbReference type="PDB" id="8TXW">
    <property type="method" value="EM"/>
    <property type="resolution" value="3.60 A"/>
    <property type="chains" value="B/F=1-103"/>
</dbReference>
<dbReference type="PDB" id="8TXX">
    <property type="method" value="EM"/>
    <property type="resolution" value="3.70 A"/>
    <property type="chains" value="B/F=1-103"/>
</dbReference>
<dbReference type="PDB" id="8U13">
    <property type="method" value="EM"/>
    <property type="resolution" value="3.80 A"/>
    <property type="chains" value="B/F=1-103"/>
</dbReference>
<dbReference type="PDB" id="8U14">
    <property type="method" value="EM"/>
    <property type="resolution" value="3.90 A"/>
    <property type="chains" value="B/F=1-103"/>
</dbReference>
<dbReference type="PDB" id="8UHL">
    <property type="method" value="X-ray"/>
    <property type="resolution" value="1.92 A"/>
    <property type="chains" value="B/C=5-18"/>
</dbReference>
<dbReference type="PDB" id="8UK5">
    <property type="method" value="X-ray"/>
    <property type="resolution" value="1.40 A"/>
    <property type="chains" value="B=2-15"/>
</dbReference>
<dbReference type="PDB" id="8UPF">
    <property type="method" value="EM"/>
    <property type="resolution" value="3.20 A"/>
    <property type="chains" value="B/F=1-103"/>
</dbReference>
<dbReference type="PDB" id="8VFX">
    <property type="method" value="EM"/>
    <property type="resolution" value="2.65 A"/>
    <property type="chains" value="B/F=1-103"/>
</dbReference>
<dbReference type="PDB" id="8VFY">
    <property type="method" value="EM"/>
    <property type="resolution" value="2.89 A"/>
    <property type="chains" value="B/F=1-103"/>
</dbReference>
<dbReference type="PDB" id="8VFZ">
    <property type="method" value="EM"/>
    <property type="resolution" value="4.10 A"/>
    <property type="chains" value="B/F=1-103"/>
</dbReference>
<dbReference type="PDB" id="8VG0">
    <property type="method" value="EM"/>
    <property type="resolution" value="3.07 A"/>
    <property type="chains" value="B/F=1-103"/>
</dbReference>
<dbReference type="PDB" id="8VG1">
    <property type="method" value="EM"/>
    <property type="resolution" value="2.48 A"/>
    <property type="chains" value="B/F=1-103"/>
</dbReference>
<dbReference type="PDB" id="8VG2">
    <property type="method" value="EM"/>
    <property type="resolution" value="3.04 A"/>
    <property type="chains" value="B/F=1-103"/>
</dbReference>
<dbReference type="PDB" id="8VLR">
    <property type="method" value="EM"/>
    <property type="resolution" value="2.60 A"/>
    <property type="chains" value="B/F=20-103"/>
</dbReference>
<dbReference type="PDB" id="8VMJ">
    <property type="method" value="EM"/>
    <property type="resolution" value="3.10 A"/>
    <property type="chains" value="J/Q=1-103"/>
</dbReference>
<dbReference type="PDB" id="8VMN">
    <property type="method" value="EM"/>
    <property type="resolution" value="3.50 A"/>
    <property type="chains" value="J/Q=1-103"/>
</dbReference>
<dbReference type="PDB" id="8VOB">
    <property type="method" value="EM"/>
    <property type="resolution" value="3.10 A"/>
    <property type="chains" value="J/Q=1-103"/>
</dbReference>
<dbReference type="PDB" id="8VWS">
    <property type="method" value="EM"/>
    <property type="resolution" value="3.10 A"/>
    <property type="chains" value="B/F=2-103"/>
</dbReference>
<dbReference type="PDB" id="8VWT">
    <property type="method" value="EM"/>
    <property type="resolution" value="3.30 A"/>
    <property type="chains" value="B/F=2-103"/>
</dbReference>
<dbReference type="PDB" id="8VWU">
    <property type="method" value="EM"/>
    <property type="resolution" value="3.00 A"/>
    <property type="chains" value="B/F=2-103"/>
</dbReference>
<dbReference type="PDB" id="8VWV">
    <property type="method" value="EM"/>
    <property type="resolution" value="3.60 A"/>
    <property type="chains" value="B/F=2-103"/>
</dbReference>
<dbReference type="PDB" id="8W9D">
    <property type="method" value="EM"/>
    <property type="resolution" value="3.90 A"/>
    <property type="chains" value="b/f=1-103"/>
</dbReference>
<dbReference type="PDB" id="8W9E">
    <property type="method" value="EM"/>
    <property type="resolution" value="3.60 A"/>
    <property type="chains" value="b/f=1-103"/>
</dbReference>
<dbReference type="PDB" id="8W9F">
    <property type="method" value="EM"/>
    <property type="resolution" value="4.40 A"/>
    <property type="chains" value="b/f=1-103"/>
</dbReference>
<dbReference type="PDB" id="8WG5">
    <property type="method" value="EM"/>
    <property type="resolution" value="3.05 A"/>
    <property type="chains" value="B/F=24-102"/>
</dbReference>
<dbReference type="PDB" id="8X15">
    <property type="method" value="EM"/>
    <property type="resolution" value="3.20 A"/>
    <property type="chains" value="D/H=1-103"/>
</dbReference>
<dbReference type="PDB" id="8X19">
    <property type="method" value="EM"/>
    <property type="resolution" value="3.20 A"/>
    <property type="chains" value="D/H=1-103"/>
</dbReference>
<dbReference type="PDB" id="8X1C">
    <property type="method" value="EM"/>
    <property type="resolution" value="3.20 A"/>
    <property type="chains" value="D/H=1-103"/>
</dbReference>
<dbReference type="PDB" id="8X7I">
    <property type="method" value="EM"/>
    <property type="resolution" value="3.27 A"/>
    <property type="chains" value="B/F=20-102"/>
</dbReference>
<dbReference type="PDB" id="8X7J">
    <property type="method" value="EM"/>
    <property type="resolution" value="3.39 A"/>
    <property type="chains" value="B/F=21-102"/>
</dbReference>
<dbReference type="PDB" id="8X7K">
    <property type="method" value="EM"/>
    <property type="resolution" value="3.27 A"/>
    <property type="chains" value="B/F=21-102"/>
</dbReference>
<dbReference type="PDB" id="8XBT">
    <property type="method" value="EM"/>
    <property type="resolution" value="4.12 A"/>
    <property type="chains" value="B/F=1-103"/>
</dbReference>
<dbReference type="PDB" id="8XBU">
    <property type="method" value="EM"/>
    <property type="resolution" value="4.24 A"/>
    <property type="chains" value="B/F=1-103"/>
</dbReference>
<dbReference type="PDB" id="8XBW">
    <property type="method" value="EM"/>
    <property type="resolution" value="2.89 A"/>
    <property type="chains" value="F=1-103"/>
</dbReference>
<dbReference type="PDB" id="8Y3C">
    <property type="method" value="EM"/>
    <property type="resolution" value="5.21 A"/>
    <property type="chains" value="B/F/L/P=1-103"/>
</dbReference>
<dbReference type="PDB" id="8Y3D">
    <property type="method" value="EM"/>
    <property type="resolution" value="5.10 A"/>
    <property type="chains" value="B/F/L/P=1-103"/>
</dbReference>
<dbReference type="PDB" id="8Y3E">
    <property type="method" value="EM"/>
    <property type="resolution" value="5.32 A"/>
    <property type="chains" value="B/F/L/P=1-103"/>
</dbReference>
<dbReference type="PDB" id="8Y3F">
    <property type="method" value="EM"/>
    <property type="resolution" value="4.54 A"/>
    <property type="chains" value="B/F/L/P=1-103"/>
</dbReference>
<dbReference type="PDB" id="8YBJ">
    <property type="method" value="EM"/>
    <property type="resolution" value="2.38 A"/>
    <property type="chains" value="B/F=1-103"/>
</dbReference>
<dbReference type="PDB" id="8YBK">
    <property type="method" value="EM"/>
    <property type="resolution" value="2.69 A"/>
    <property type="chains" value="B/F=1-103"/>
</dbReference>
<dbReference type="PDB" id="8YJF">
    <property type="method" value="X-ray"/>
    <property type="resolution" value="4.40 A"/>
    <property type="chains" value="D/F=1-103"/>
</dbReference>
<dbReference type="PDB" id="8YJM">
    <property type="method" value="X-ray"/>
    <property type="resolution" value="4.15 A"/>
    <property type="chains" value="D/F=1-103"/>
</dbReference>
<dbReference type="PDB" id="8YNY">
    <property type="method" value="EM"/>
    <property type="resolution" value="4.52 A"/>
    <property type="chains" value="B/F=1-103"/>
</dbReference>
<dbReference type="PDB" id="8YTI">
    <property type="method" value="X-ray"/>
    <property type="resolution" value="2.70 A"/>
    <property type="chains" value="B/F/L/P=1-103"/>
</dbReference>
<dbReference type="PDB" id="8YV8">
    <property type="method" value="EM"/>
    <property type="resolution" value="3.00 A"/>
    <property type="chains" value="B/F=2-103"/>
</dbReference>
<dbReference type="PDB" id="8Z50">
    <property type="method" value="X-ray"/>
    <property type="resolution" value="2.80 A"/>
    <property type="chains" value="C=1-103"/>
</dbReference>
<dbReference type="PDB" id="9DWF">
    <property type="method" value="EM"/>
    <property type="resolution" value="3.10 A"/>
    <property type="chains" value="B/F=2-103"/>
</dbReference>
<dbReference type="PDB" id="9DWG">
    <property type="method" value="EM"/>
    <property type="resolution" value="3.30 A"/>
    <property type="chains" value="B/F=2-103"/>
</dbReference>
<dbReference type="PDB" id="9DWH">
    <property type="method" value="EM"/>
    <property type="resolution" value="3.30 A"/>
    <property type="chains" value="B/F=2-103"/>
</dbReference>
<dbReference type="PDB" id="9DWI">
    <property type="method" value="EM"/>
    <property type="resolution" value="3.30 A"/>
    <property type="chains" value="B/F=2-103"/>
</dbReference>
<dbReference type="PDB" id="9DWJ">
    <property type="method" value="EM"/>
    <property type="resolution" value="3.40 A"/>
    <property type="chains" value="B/F=2-103"/>
</dbReference>
<dbReference type="PDB" id="9DWK">
    <property type="method" value="EM"/>
    <property type="resolution" value="4.30 A"/>
    <property type="chains" value="B/F=2-103"/>
</dbReference>
<dbReference type="PDB" id="9DWL">
    <property type="method" value="EM"/>
    <property type="resolution" value="3.90 A"/>
    <property type="chains" value="B/F=2-103"/>
</dbReference>
<dbReference type="PDB" id="9DWM">
    <property type="method" value="EM"/>
    <property type="resolution" value="4.20 A"/>
    <property type="chains" value="B/F=2-103"/>
</dbReference>
<dbReference type="PDB" id="9EOZ">
    <property type="method" value="EM"/>
    <property type="resolution" value="3.10 A"/>
    <property type="chains" value="B/F=2-103"/>
</dbReference>
<dbReference type="PDB" id="9FGQ">
    <property type="method" value="EM"/>
    <property type="resolution" value="2.50 A"/>
    <property type="chains" value="B/F=1-103"/>
</dbReference>
<dbReference type="PDB" id="9FH9">
    <property type="method" value="EM"/>
    <property type="resolution" value="2.50 A"/>
    <property type="chains" value="B/F=1-103"/>
</dbReference>
<dbReference type="PDB" id="9GMK">
    <property type="method" value="EM"/>
    <property type="resolution" value="3.50 A"/>
    <property type="chains" value="B/F=1-103"/>
</dbReference>
<dbReference type="PDB" id="9GMR">
    <property type="method" value="EM"/>
    <property type="resolution" value="2.80 A"/>
    <property type="chains" value="B/F=1-103"/>
</dbReference>
<dbReference type="PDB" id="9GXA">
    <property type="method" value="EM"/>
    <property type="resolution" value="4.01 A"/>
    <property type="chains" value="B/D/F/H=2-103"/>
</dbReference>
<dbReference type="PDB" id="9IPU">
    <property type="method" value="EM"/>
    <property type="resolution" value="4.30 A"/>
    <property type="chains" value="B/F=2-103"/>
</dbReference>
<dbReference type="PDB" id="9J0N">
    <property type="method" value="EM"/>
    <property type="resolution" value="3.40 A"/>
    <property type="chains" value="b/f=1-103"/>
</dbReference>
<dbReference type="PDB" id="9J0O">
    <property type="method" value="EM"/>
    <property type="resolution" value="3.30 A"/>
    <property type="chains" value="b/f=1-103"/>
</dbReference>
<dbReference type="PDB" id="9J0P">
    <property type="method" value="EM"/>
    <property type="resolution" value="3.30 A"/>
    <property type="chains" value="b/f=1-103"/>
</dbReference>
<dbReference type="PDB" id="9J8M">
    <property type="method" value="EM"/>
    <property type="resolution" value="3.82 A"/>
    <property type="chains" value="B/F=1-103"/>
</dbReference>
<dbReference type="PDB" id="9J8N">
    <property type="method" value="EM"/>
    <property type="resolution" value="7.14 A"/>
    <property type="chains" value="B/F/b/f=1-103"/>
</dbReference>
<dbReference type="PDB" id="9J8O">
    <property type="method" value="EM"/>
    <property type="resolution" value="4.05 A"/>
    <property type="chains" value="B/F/b/f=1-103"/>
</dbReference>
<dbReference type="PDBsum" id="1ZKK"/>
<dbReference type="PDBsum" id="2BQZ"/>
<dbReference type="PDBsum" id="2CV5"/>
<dbReference type="PDBsum" id="2IG0"/>
<dbReference type="PDBsum" id="2KWN"/>
<dbReference type="PDBsum" id="2KWO"/>
<dbReference type="PDBsum" id="2LVM"/>
<dbReference type="PDBsum" id="2QQS"/>
<dbReference type="PDBsum" id="2RJE"/>
<dbReference type="PDBsum" id="2RNY"/>
<dbReference type="PDBsum" id="2RS9"/>
<dbReference type="PDBsum" id="3A6N"/>
<dbReference type="PDBsum" id="3AFA"/>
<dbReference type="PDBsum" id="3AN2"/>
<dbReference type="PDBsum" id="3AV1"/>
<dbReference type="PDBsum" id="3AV2"/>
<dbReference type="PDBsum" id="3AYW"/>
<dbReference type="PDBsum" id="3AZE"/>
<dbReference type="PDBsum" id="3AZF"/>
<dbReference type="PDBsum" id="3AZG"/>
<dbReference type="PDBsum" id="3AZH"/>
<dbReference type="PDBsum" id="3AZI"/>
<dbReference type="PDBsum" id="3AZJ"/>
<dbReference type="PDBsum" id="3AZK"/>
<dbReference type="PDBsum" id="3AZL"/>
<dbReference type="PDBsum" id="3AZM"/>
<dbReference type="PDBsum" id="3AZN"/>
<dbReference type="PDBsum" id="3CFS"/>
<dbReference type="PDBsum" id="3CFV"/>
<dbReference type="PDBsum" id="3F9W"/>
<dbReference type="PDBsum" id="3F9X"/>
<dbReference type="PDBsum" id="3F9Y"/>
<dbReference type="PDBsum" id="3F9Z"/>
<dbReference type="PDBsum" id="3IJ1"/>
<dbReference type="PDBsum" id="3JPX"/>
<dbReference type="PDBsum" id="3NQJ"/>
<dbReference type="PDBsum" id="3NQU"/>
<dbReference type="PDBsum" id="3O36"/>
<dbReference type="PDBsum" id="3QBY"/>
<dbReference type="PDBsum" id="3QZS"/>
<dbReference type="PDBsum" id="3QZT"/>
<dbReference type="PDBsum" id="3QZV"/>
<dbReference type="PDBsum" id="3R45"/>
<dbReference type="PDBsum" id="3UVW"/>
<dbReference type="PDBsum" id="3UVX"/>
<dbReference type="PDBsum" id="3UVY"/>
<dbReference type="PDBsum" id="3UW9"/>
<dbReference type="PDBsum" id="3W96"/>
<dbReference type="PDBsum" id="3W97"/>
<dbReference type="PDBsum" id="3W98"/>
<dbReference type="PDBsum" id="3W99"/>
<dbReference type="PDBsum" id="3WA9"/>
<dbReference type="PDBsum" id="3WAA"/>
<dbReference type="PDBsum" id="3WKJ"/>
<dbReference type="PDBsum" id="3WTP"/>
<dbReference type="PDBsum" id="3X1S"/>
<dbReference type="PDBsum" id="3X1T"/>
<dbReference type="PDBsum" id="3X1U"/>
<dbReference type="PDBsum" id="3X1V"/>
<dbReference type="PDBsum" id="4GQB"/>
<dbReference type="PDBsum" id="4H9N"/>
<dbReference type="PDBsum" id="4H9O"/>
<dbReference type="PDBsum" id="4H9P"/>
<dbReference type="PDBsum" id="4H9Q"/>
<dbReference type="PDBsum" id="4H9R"/>
<dbReference type="PDBsum" id="4H9S"/>
<dbReference type="PDBsum" id="4HGA"/>
<dbReference type="PDBsum" id="4M38"/>
<dbReference type="PDBsum" id="4N3W"/>
<dbReference type="PDBsum" id="4N4F"/>
<dbReference type="PDBsum" id="4QUT"/>
<dbReference type="PDBsum" id="4QUU"/>
<dbReference type="PDBsum" id="4QYD"/>
<dbReference type="PDBsum" id="4U9W"/>
<dbReference type="PDBsum" id="4YM5"/>
<dbReference type="PDBsum" id="4YM6"/>
<dbReference type="PDBsum" id="4YY6"/>
<dbReference type="PDBsum" id="4YYD"/>
<dbReference type="PDBsum" id="4YYG"/>
<dbReference type="PDBsum" id="4YYH"/>
<dbReference type="PDBsum" id="4YYI"/>
<dbReference type="PDBsum" id="4YYJ"/>
<dbReference type="PDBsum" id="4YYK"/>
<dbReference type="PDBsum" id="4YYM"/>
<dbReference type="PDBsum" id="4YYN"/>
<dbReference type="PDBsum" id="4Z2M"/>
<dbReference type="PDBsum" id="4Z5T"/>
<dbReference type="PDBsum" id="5AV5"/>
<dbReference type="PDBsum" id="5AV6"/>
<dbReference type="PDBsum" id="5AV8"/>
<dbReference type="PDBsum" id="5AV9"/>
<dbReference type="PDBsum" id="5AVB"/>
<dbReference type="PDBsum" id="5AVC"/>
<dbReference type="PDBsum" id="5AY8"/>
<dbReference type="PDBsum" id="5B0Y"/>
<dbReference type="PDBsum" id="5B0Z"/>
<dbReference type="PDBsum" id="5B24"/>
<dbReference type="PDBsum" id="5B2I"/>
<dbReference type="PDBsum" id="5B2J"/>
<dbReference type="PDBsum" id="5B31"/>
<dbReference type="PDBsum" id="5B32"/>
<dbReference type="PDBsum" id="5B33"/>
<dbReference type="PDBsum" id="5B40"/>
<dbReference type="PDBsum" id="5BNV"/>
<dbReference type="PDBsum" id="5BNX"/>
<dbReference type="PDBsum" id="5BO0"/>
<dbReference type="PDBsum" id="5C3I"/>
<dbReference type="PDBsum" id="5CPI"/>
<dbReference type="PDBsum" id="5CPJ"/>
<dbReference type="PDBsum" id="5CPK"/>
<dbReference type="PDBsum" id="5FA5"/>
<dbReference type="PDBsum" id="5FFW"/>
<dbReference type="PDBsum" id="5FWE"/>
<dbReference type="PDBsum" id="5GSE"/>
<dbReference type="PDBsum" id="5GSU"/>
<dbReference type="PDBsum" id="5GT0"/>
<dbReference type="PDBsum" id="5GT3"/>
<dbReference type="PDBsum" id="5GTC"/>
<dbReference type="PDBsum" id="5GXQ"/>
<dbReference type="PDBsum" id="5JA4"/>
<dbReference type="PDBsum" id="5JRG"/>
<dbReference type="PDBsum" id="5KDM"/>
<dbReference type="PDBsum" id="5TEG"/>
<dbReference type="PDBsum" id="5X7X"/>
<dbReference type="PDBsum" id="5XF3"/>
<dbReference type="PDBsum" id="5XF4"/>
<dbReference type="PDBsum" id="5XF5"/>
<dbReference type="PDBsum" id="5Y0C"/>
<dbReference type="PDBsum" id="5Y0D"/>
<dbReference type="PDBsum" id="5YE3"/>
<dbReference type="PDBsum" id="5YE4"/>
<dbReference type="PDBsum" id="5Z23"/>
<dbReference type="PDBsum" id="5Z30"/>
<dbReference type="PDBsum" id="5ZBX"/>
<dbReference type="PDBsum" id="5ZGC"/>
<dbReference type="PDBsum" id="6A5L"/>
<dbReference type="PDBsum" id="6A5O"/>
<dbReference type="PDBsum" id="6A5P"/>
<dbReference type="PDBsum" id="6A5R"/>
<dbReference type="PDBsum" id="6A5T"/>
<dbReference type="PDBsum" id="6A5U"/>
<dbReference type="PDBsum" id="6ACP"/>
<dbReference type="PDBsum" id="6BUZ"/>
<dbReference type="PDBsum" id="6C0W"/>
<dbReference type="PDBsum" id="6E0C"/>
<dbReference type="PDBsum" id="6E0P"/>
<dbReference type="PDBsum" id="6FML"/>
<dbReference type="PDBsum" id="6HKT"/>
<dbReference type="PDBsum" id="6HTS"/>
<dbReference type="PDBsum" id="6INQ"/>
<dbReference type="PDBsum" id="6IR9"/>
<dbReference type="PDBsum" id="6J4W"/>
<dbReference type="PDBsum" id="6J4X"/>
<dbReference type="PDBsum" id="6J4Y"/>
<dbReference type="PDBsum" id="6J4Z"/>
<dbReference type="PDBsum" id="6J50"/>
<dbReference type="PDBsum" id="6J51"/>
<dbReference type="PDBsum" id="6JOU"/>
<dbReference type="PDBsum" id="6JR0"/>
<dbReference type="PDBsum" id="6JR1"/>
<dbReference type="PDBsum" id="6K1I"/>
<dbReference type="PDBsum" id="6K1J"/>
<dbReference type="PDBsum" id="6K1K"/>
<dbReference type="PDBsum" id="6KE9"/>
<dbReference type="PDBsum" id="6KVD"/>
<dbReference type="PDBsum" id="6KXV"/>
<dbReference type="PDBsum" id="6L49"/>
<dbReference type="PDBsum" id="6L4A"/>
<dbReference type="PDBsum" id="6L9H"/>
<dbReference type="PDBsum" id="6L9Z"/>
<dbReference type="PDBsum" id="6LA2"/>
<dbReference type="PDBsum" id="6LA8"/>
<dbReference type="PDBsum" id="6LA9"/>
<dbReference type="PDBsum" id="6LAB"/>
<dbReference type="PDBsum" id="6LE9"/>
<dbReference type="PDBsum" id="6LER"/>
<dbReference type="PDBsum" id="6M3V"/>
<dbReference type="PDBsum" id="6M44"/>
<dbReference type="PDBsum" id="6M4D"/>
<dbReference type="PDBsum" id="6M4G"/>
<dbReference type="PDBsum" id="6M4H"/>
<dbReference type="PDBsum" id="6MLC"/>
<dbReference type="PDBsum" id="6MUO"/>
<dbReference type="PDBsum" id="6MUP"/>
<dbReference type="PDBsum" id="6O1D"/>
<dbReference type="PDBsum" id="6R0C"/>
<dbReference type="PDBsum" id="6R8Y"/>
<dbReference type="PDBsum" id="6R8Z"/>
<dbReference type="PDBsum" id="6R90"/>
<dbReference type="PDBsum" id="6R91"/>
<dbReference type="PDBsum" id="6R92"/>
<dbReference type="PDBsum" id="6R93"/>
<dbReference type="PDBsum" id="6R94"/>
<dbReference type="PDBsum" id="6RNY"/>
<dbReference type="PDBsum" id="6RXS"/>
<dbReference type="PDBsum" id="6SE0"/>
<dbReference type="PDBsum" id="6SE6"/>
<dbReference type="PDBsum" id="6SEE"/>
<dbReference type="PDBsum" id="6SEF"/>
<dbReference type="PDBsum" id="6SEG"/>
<dbReference type="PDBsum" id="6T79"/>
<dbReference type="PDBsum" id="6T7A"/>
<dbReference type="PDBsum" id="6T7B"/>
<dbReference type="PDBsum" id="6T7C"/>
<dbReference type="PDBsum" id="6T7D"/>
<dbReference type="PDBsum" id="6T90"/>
<dbReference type="PDBsum" id="6T93"/>
<dbReference type="PDBsum" id="6UPK"/>
<dbReference type="PDBsum" id="6UPL"/>
<dbReference type="PDBsum" id="6USJ"/>
<dbReference type="PDBsum" id="6V2K"/>
<dbReference type="PDBsum" id="6V92"/>
<dbReference type="PDBsum" id="6VO5"/>
<dbReference type="PDBsum" id="6X59"/>
<dbReference type="PDBsum" id="6X5A"/>
<dbReference type="PDBsum" id="6XJD"/>
<dbReference type="PDBsum" id="6Y5D"/>
<dbReference type="PDBsum" id="6YOV"/>
<dbReference type="PDBsum" id="7A08"/>
<dbReference type="PDBsum" id="7BWD"/>
<dbReference type="PDBsum" id="7BXT"/>
<dbReference type="PDBsum" id="7BY0"/>
<dbReference type="PDBsum" id="7C0M"/>
<dbReference type="PDBsum" id="7CCQ"/>
<dbReference type="PDBsum" id="7CCR"/>
<dbReference type="PDBsum" id="7CIZ"/>
<dbReference type="PDBsum" id="7CJ0"/>
<dbReference type="PDBsum" id="7COW"/>
<dbReference type="PDBsum" id="7D1Z"/>
<dbReference type="PDBsum" id="7D20"/>
<dbReference type="PDBsum" id="7DBP"/>
<dbReference type="PDBsum" id="7E8D"/>
<dbReference type="PDBsum" id="7EIC"/>
<dbReference type="PDBsum" id="7EID"/>
<dbReference type="PDBsum" id="7JO9"/>
<dbReference type="PDBsum" id="7JOA"/>
<dbReference type="PDBsum" id="7JZV"/>
<dbReference type="PDBsum" id="7K5X"/>
<dbReference type="PDBsum" id="7K5Y"/>
<dbReference type="PDBsum" id="7K60"/>
<dbReference type="PDBsum" id="7K61"/>
<dbReference type="PDBsum" id="7K63"/>
<dbReference type="PDBsum" id="7LMK"/>
<dbReference type="PDBsum" id="7LMM"/>
<dbReference type="PDBsum" id="7LYA"/>
<dbReference type="PDBsum" id="7LYB"/>
<dbReference type="PDBsum" id="7LYC"/>
<dbReference type="PDBsum" id="7M98"/>
<dbReference type="PDBsum" id="7NL0"/>
<dbReference type="PDBsum" id="7PET"/>
<dbReference type="PDBsum" id="7PEU"/>
<dbReference type="PDBsum" id="7PEV"/>
<dbReference type="PDBsum" id="7PEW"/>
<dbReference type="PDBsum" id="7PEX"/>
<dbReference type="PDBsum" id="7PEY"/>
<dbReference type="PDBsum" id="7PEZ"/>
<dbReference type="PDBsum" id="7PF0"/>
<dbReference type="PDBsum" id="7PF2"/>
<dbReference type="PDBsum" id="7PF3"/>
<dbReference type="PDBsum" id="7PF4"/>
<dbReference type="PDBsum" id="7PF5"/>
<dbReference type="PDBsum" id="7PF6"/>
<dbReference type="PDBsum" id="7PFA"/>
<dbReference type="PDBsum" id="7PFC"/>
<dbReference type="PDBsum" id="7PFD"/>
<dbReference type="PDBsum" id="7PFE"/>
<dbReference type="PDBsum" id="7PFF"/>
<dbReference type="PDBsum" id="7PFT"/>
<dbReference type="PDBsum" id="7PFU"/>
<dbReference type="PDBsum" id="7PFV"/>
<dbReference type="PDBsum" id="7PFW"/>
<dbReference type="PDBsum" id="7PFX"/>
<dbReference type="PDBsum" id="7PII"/>
<dbReference type="PDBsum" id="7R5R"/>
<dbReference type="PDBsum" id="7SCY"/>
<dbReference type="PDBsum" id="7SCZ"/>
<dbReference type="PDBsum" id="7TAN"/>
<dbReference type="PDBsum" id="7U0G"/>
<dbReference type="PDBsum" id="7U0I"/>
<dbReference type="PDBsum" id="7U0J"/>
<dbReference type="PDBsum" id="7U46"/>
<dbReference type="PDBsum" id="7U47"/>
<dbReference type="PDBsum" id="7U4D"/>
<dbReference type="PDBsum" id="7U50"/>
<dbReference type="PDBsum" id="7U51"/>
<dbReference type="PDBsum" id="7U52"/>
<dbReference type="PDBsum" id="7U53"/>
<dbReference type="PDBsum" id="7UV9"/>
<dbReference type="PDBsum" id="7V1M"/>
<dbReference type="PDBsum" id="7V6Q"/>
<dbReference type="PDBsum" id="7V90"/>
<dbReference type="PDBsum" id="7V96"/>
<dbReference type="PDBsum" id="7V9C"/>
<dbReference type="PDBsum" id="7V9J"/>
<dbReference type="PDBsum" id="7V9K"/>
<dbReference type="PDBsum" id="7V9S"/>
<dbReference type="PDBsum" id="7VA4"/>
<dbReference type="PDBsum" id="7VCQ"/>
<dbReference type="PDBsum" id="7VZ4"/>
<dbReference type="PDBsum" id="7W9V"/>
<dbReference type="PDBsum" id="7WBV"/>
<dbReference type="PDBsum" id="7WBW"/>
<dbReference type="PDBsum" id="7WBX"/>
<dbReference type="PDBsum" id="7X57"/>
<dbReference type="PDBsum" id="7X58"/>
<dbReference type="PDBsum" id="7XCR"/>
<dbReference type="PDBsum" id="7XCT"/>
<dbReference type="PDBsum" id="7XD0"/>
<dbReference type="PDBsum" id="7XD1"/>
<dbReference type="PDBsum" id="7XSE"/>
<dbReference type="PDBsum" id="7XSX"/>
<dbReference type="PDBsum" id="7XSZ"/>
<dbReference type="PDBsum" id="7XT7"/>
<dbReference type="PDBsum" id="7XTD"/>
<dbReference type="PDBsum" id="7XTI"/>
<dbReference type="PDBsum" id="7XVL"/>
<dbReference type="PDBsum" id="7XVM"/>
<dbReference type="PDBsum" id="7XX5"/>
<dbReference type="PDBsum" id="7XX6"/>
<dbReference type="PDBsum" id="7XZX"/>
<dbReference type="PDBsum" id="7XZY"/>
<dbReference type="PDBsum" id="7XZZ"/>
<dbReference type="PDBsum" id="7Y00"/>
<dbReference type="PDBsum" id="7Y5U"/>
<dbReference type="PDBsum" id="7Y5V"/>
<dbReference type="PDBsum" id="7Y5W"/>
<dbReference type="PDBsum" id="7Y60"/>
<dbReference type="PDBsum" id="7Y61"/>
<dbReference type="PDBsum" id="7Y7I"/>
<dbReference type="PDBsum" id="7Y8R"/>
<dbReference type="PDBsum" id="7YOZ"/>
<dbReference type="PDBsum" id="7YQK"/>
<dbReference type="PDBsum" id="7YRD"/>
<dbReference type="PDBsum" id="7YWX"/>
<dbReference type="PDBsum" id="7YYH"/>
<dbReference type="PDBsum" id="7ZI4"/>
<dbReference type="PDBsum" id="8AAG"/>
<dbReference type="PDBsum" id="8ATF"/>
<dbReference type="PDBsum" id="8AV6"/>
<dbReference type="PDBsum" id="8B5A"/>
<dbReference type="PDBsum" id="8B5B"/>
<dbReference type="PDBsum" id="8B5C"/>
<dbReference type="PDBsum" id="8DK5"/>
<dbReference type="PDBsum" id="8EVG"/>
<dbReference type="PDBsum" id="8EVH"/>
<dbReference type="PDBsum" id="8EVI"/>
<dbReference type="PDBsum" id="8EVJ"/>
<dbReference type="PDBsum" id="8GRM"/>
<dbReference type="PDBsum" id="8GRQ"/>
<dbReference type="PDBsum" id="8GUI"/>
<dbReference type="PDBsum" id="8GUJ"/>
<dbReference type="PDBsum" id="8GUK"/>
<dbReference type="PDBsum" id="8H0V"/>
<dbReference type="PDBsum" id="8H0W"/>
<dbReference type="PDBsum" id="8H1T"/>
<dbReference type="PDBsum" id="8HAG"/>
<dbReference type="PDBsum" id="8HAH"/>
<dbReference type="PDBsum" id="8HAI"/>
<dbReference type="PDBsum" id="8HAJ"/>
<dbReference type="PDBsum" id="8HAK"/>
<dbReference type="PDBsum" id="8HAL"/>
<dbReference type="PDBsum" id="8HAM"/>
<dbReference type="PDBsum" id="8HAN"/>
<dbReference type="PDBsum" id="8HE5"/>
<dbReference type="PDBsum" id="8HLW"/>
<dbReference type="PDBsum" id="8HR1"/>
<dbReference type="PDBsum" id="8IEG"/>
<dbReference type="PDBsum" id="8IEJ"/>
<dbReference type="PDBsum" id="8IHL"/>
<dbReference type="PDBsum" id="8IQF"/>
<dbReference type="PDBsum" id="8IQG"/>
<dbReference type="PDBsum" id="8J6S"/>
<dbReference type="PDBsum" id="8J6T"/>
<dbReference type="PDBsum" id="8JBX"/>
<dbReference type="PDBsum" id="8JCC"/>
<dbReference type="PDBsum" id="8JCD"/>
<dbReference type="PDBsum" id="8JH2"/>
<dbReference type="PDBsum" id="8JH3"/>
<dbReference type="PDBsum" id="8JH4"/>
<dbReference type="PDBsum" id="8JHF"/>
<dbReference type="PDBsum" id="8JHG"/>
<dbReference type="PDBsum" id="8JL9"/>
<dbReference type="PDBsum" id="8JLA"/>
<dbReference type="PDBsum" id="8JLB"/>
<dbReference type="PDBsum" id="8JLD"/>
<dbReference type="PDBsum" id="8JND"/>
<dbReference type="PDBsum" id="8JNE"/>
<dbReference type="PDBsum" id="8JNF"/>
<dbReference type="PDBsum" id="8KB5"/>
<dbReference type="PDBsum" id="8KCY"/>
<dbReference type="PDBsum" id="8KD1"/>
<dbReference type="PDBsum" id="8KE0"/>
<dbReference type="PDBsum" id="8OFF"/>
<dbReference type="PDBsum" id="8OL1"/>
<dbReference type="PDBsum" id="8OO7"/>
<dbReference type="PDBsum" id="8OOA"/>
<dbReference type="PDBsum" id="8OOP"/>
<dbReference type="PDBsum" id="8OOS"/>
<dbReference type="PDBsum" id="8OSJ"/>
<dbReference type="PDBsum" id="8OSK"/>
<dbReference type="PDBsum" id="8OSL"/>
<dbReference type="PDBsum" id="8OTS"/>
<dbReference type="PDBsum" id="8OTT"/>
<dbReference type="PDBsum" id="8OX0"/>
<dbReference type="PDBsum" id="8OX1"/>
<dbReference type="PDBsum" id="8PEF"/>
<dbReference type="PDBsum" id="8Q36"/>
<dbReference type="PDBsum" id="8Q3E"/>
<dbReference type="PDBsum" id="8Q3M"/>
<dbReference type="PDBsum" id="8Q3X"/>
<dbReference type="PDBsum" id="8QZM"/>
<dbReference type="PDBsum" id="8RBX"/>
<dbReference type="PDBsum" id="8RGM"/>
<dbReference type="PDBsum" id="8SB6"/>
<dbReference type="PDBsum" id="8SDO"/>
<dbReference type="PDBsum" id="8SDQ"/>
<dbReference type="PDBsum" id="8SDX"/>
<dbReference type="PDBsum" id="8SMW"/>
<dbReference type="PDBsum" id="8SMX"/>
<dbReference type="PDBsum" id="8SMY"/>
<dbReference type="PDBsum" id="8SMZ"/>
<dbReference type="PDBsum" id="8SN0"/>
<dbReference type="PDBsum" id="8SN1"/>
<dbReference type="PDBsum" id="8SN2"/>
<dbReference type="PDBsum" id="8SN3"/>
<dbReference type="PDBsum" id="8SN4"/>
<dbReference type="PDBsum" id="8SN5"/>
<dbReference type="PDBsum" id="8SN6"/>
<dbReference type="PDBsum" id="8SN7"/>
<dbReference type="PDBsum" id="8SN8"/>
<dbReference type="PDBsum" id="8SN9"/>
<dbReference type="PDBsum" id="8SNA"/>
<dbReference type="PDBsum" id="8SPS"/>
<dbReference type="PDBsum" id="8SPU"/>
<dbReference type="PDBsum" id="8SYP"/>
<dbReference type="PDBsum" id="8TGP"/>
<dbReference type="PDBsum" id="8TXV"/>
<dbReference type="PDBsum" id="8TXW"/>
<dbReference type="PDBsum" id="8TXX"/>
<dbReference type="PDBsum" id="8U13"/>
<dbReference type="PDBsum" id="8U14"/>
<dbReference type="PDBsum" id="8UHL"/>
<dbReference type="PDBsum" id="8UK5"/>
<dbReference type="PDBsum" id="8UPF"/>
<dbReference type="PDBsum" id="8VFX"/>
<dbReference type="PDBsum" id="8VFY"/>
<dbReference type="PDBsum" id="8VFZ"/>
<dbReference type="PDBsum" id="8VG0"/>
<dbReference type="PDBsum" id="8VG1"/>
<dbReference type="PDBsum" id="8VG2"/>
<dbReference type="PDBsum" id="8VLR"/>
<dbReference type="PDBsum" id="8VMJ"/>
<dbReference type="PDBsum" id="8VMN"/>
<dbReference type="PDBsum" id="8VOB"/>
<dbReference type="PDBsum" id="8VWS"/>
<dbReference type="PDBsum" id="8VWT"/>
<dbReference type="PDBsum" id="8VWU"/>
<dbReference type="PDBsum" id="8VWV"/>
<dbReference type="PDBsum" id="8W9D"/>
<dbReference type="PDBsum" id="8W9E"/>
<dbReference type="PDBsum" id="8W9F"/>
<dbReference type="PDBsum" id="8WG5"/>
<dbReference type="PDBsum" id="8X15"/>
<dbReference type="PDBsum" id="8X19"/>
<dbReference type="PDBsum" id="8X1C"/>
<dbReference type="PDBsum" id="8X7I"/>
<dbReference type="PDBsum" id="8X7J"/>
<dbReference type="PDBsum" id="8X7K"/>
<dbReference type="PDBsum" id="8XBT"/>
<dbReference type="PDBsum" id="8XBU"/>
<dbReference type="PDBsum" id="8XBW"/>
<dbReference type="PDBsum" id="8Y3C"/>
<dbReference type="PDBsum" id="8Y3D"/>
<dbReference type="PDBsum" id="8Y3E"/>
<dbReference type="PDBsum" id="8Y3F"/>
<dbReference type="PDBsum" id="8YBJ"/>
<dbReference type="PDBsum" id="8YBK"/>
<dbReference type="PDBsum" id="8YJF"/>
<dbReference type="PDBsum" id="8YJM"/>
<dbReference type="PDBsum" id="8YNY"/>
<dbReference type="PDBsum" id="8YTI"/>
<dbReference type="PDBsum" id="8YV8"/>
<dbReference type="PDBsum" id="8Z50"/>
<dbReference type="PDBsum" id="9DWF"/>
<dbReference type="PDBsum" id="9DWG"/>
<dbReference type="PDBsum" id="9DWH"/>
<dbReference type="PDBsum" id="9DWI"/>
<dbReference type="PDBsum" id="9DWJ"/>
<dbReference type="PDBsum" id="9DWK"/>
<dbReference type="PDBsum" id="9DWL"/>
<dbReference type="PDBsum" id="9DWM"/>
<dbReference type="PDBsum" id="9EOZ"/>
<dbReference type="PDBsum" id="9FGQ"/>
<dbReference type="PDBsum" id="9FH9"/>
<dbReference type="PDBsum" id="9GMK"/>
<dbReference type="PDBsum" id="9GMR"/>
<dbReference type="PDBsum" id="9GXA"/>
<dbReference type="PDBsum" id="9IPU"/>
<dbReference type="PDBsum" id="9J0N"/>
<dbReference type="PDBsum" id="9J0O"/>
<dbReference type="PDBsum" id="9J0P"/>
<dbReference type="PDBsum" id="9J8M"/>
<dbReference type="PDBsum" id="9J8N"/>
<dbReference type="PDBsum" id="9J8O"/>
<dbReference type="EMDB" id="EMD-0586"/>
<dbReference type="EMDB" id="EMD-0671"/>
<dbReference type="EMDB" id="EMD-0672"/>
<dbReference type="EMDB" id="EMD-0673"/>
<dbReference type="EMDB" id="EMD-0674"/>
<dbReference type="EMDB" id="EMD-0675"/>
<dbReference type="EMDB" id="EMD-0676"/>
<dbReference type="EMDB" id="EMD-10151"/>
<dbReference type="EMDB" id="EMD-10152"/>
<dbReference type="EMDB" id="EMD-10153"/>
<dbReference type="EMDB" id="EMD-10154"/>
<dbReference type="EMDB" id="EMD-10155"/>
<dbReference type="EMDB" id="EMD-10390"/>
<dbReference type="EMDB" id="EMD-10391"/>
<dbReference type="EMDB" id="EMD-10392"/>
<dbReference type="EMDB" id="EMD-10393"/>
<dbReference type="EMDB" id="EMD-10394"/>
<dbReference type="EMDB" id="EMD-10406"/>
<dbReference type="EMDB" id="EMD-10408"/>
<dbReference type="EMDB" id="EMD-10694"/>
<dbReference type="EMDB" id="EMD-10695"/>
<dbReference type="EMDB" id="EMD-10864"/>
<dbReference type="EMDB" id="EMD-11005"/>
<dbReference type="EMDB" id="EMD-11006"/>
<dbReference type="EMDB" id="EMD-11601"/>
<dbReference type="EMDB" id="EMD-12453"/>
<dbReference type="EMDB" id="EMD-13356"/>
<dbReference type="EMDB" id="EMD-13357"/>
<dbReference type="EMDB" id="EMD-13358"/>
<dbReference type="EMDB" id="EMD-13359"/>
<dbReference type="EMDB" id="EMD-13360"/>
<dbReference type="EMDB" id="EMD-13361"/>
<dbReference type="EMDB" id="EMD-13362"/>
<dbReference type="EMDB" id="EMD-13363"/>
<dbReference type="EMDB" id="EMD-13365"/>
<dbReference type="EMDB" id="EMD-13366"/>
<dbReference type="EMDB" id="EMD-13367"/>
<dbReference type="EMDB" id="EMD-13368"/>
<dbReference type="EMDB" id="EMD-13369"/>
<dbReference type="EMDB" id="EMD-13370"/>
<dbReference type="EMDB" id="EMD-13371"/>
<dbReference type="EMDB" id="EMD-13372"/>
<dbReference type="EMDB" id="EMD-13373"/>
<dbReference type="EMDB" id="EMD-13374"/>
<dbReference type="EMDB" id="EMD-13379"/>
<dbReference type="EMDB" id="EMD-13380"/>
<dbReference type="EMDB" id="EMD-13381"/>
<dbReference type="EMDB" id="EMD-13382"/>
<dbReference type="EMDB" id="EMD-13383"/>
<dbReference type="EMDB" id="EMD-13437"/>
<dbReference type="EMDB" id="EMD-14334"/>
<dbReference type="EMDB" id="EMD-14351"/>
<dbReference type="EMDB" id="EMD-14375"/>
<dbReference type="EMDB" id="EMD-14737"/>
<dbReference type="EMDB" id="EMD-15647"/>
<dbReference type="EMDB" id="EMD-16859"/>
<dbReference type="EMDB" id="EMD-16936"/>
<dbReference type="EMDB" id="EMD-17006"/>
<dbReference type="EMDB" id="EMD-17008"/>
<dbReference type="EMDB" id="EMD-17025"/>
<dbReference type="EMDB" id="EMD-17027"/>
<dbReference type="EMDB" id="EMD-17155"/>
<dbReference type="EMDB" id="EMD-17157"/>
<dbReference type="EMDB" id="EMD-17160"/>
<dbReference type="EMDB" id="EMD-17183"/>
<dbReference type="EMDB" id="EMD-17184"/>
<dbReference type="EMDB" id="EMD-17251"/>
<dbReference type="EMDB" id="EMD-17252"/>
<dbReference type="EMDB" id="EMD-17253"/>
<dbReference type="EMDB" id="EMD-18740"/>
<dbReference type="EMDB" id="EMD-18745"/>
<dbReference type="EMDB" id="EMD-18753"/>
<dbReference type="EMDB" id="EMD-18763"/>
<dbReference type="EMDB" id="EMD-18768"/>
<dbReference type="EMDB" id="EMD-18775"/>
<dbReference type="EMDB" id="EMD-18776"/>
<dbReference type="EMDB" id="EMD-18778"/>
<dbReference type="EMDB" id="EMD-18793"/>
<dbReference type="EMDB" id="EMD-19038"/>
<dbReference type="EMDB" id="EMD-19134"/>
<dbReference type="EMDB" id="EMD-19870"/>
<dbReference type="EMDB" id="EMD-20840"/>
<dbReference type="EMDB" id="EMD-20841"/>
<dbReference type="EMDB" id="EMD-20864"/>
<dbReference type="EMDB" id="EMD-21114"/>
<dbReference type="EMDB" id="EMD-22046"/>
<dbReference type="EMDB" id="EMD-22047"/>
<dbReference type="EMDB" id="EMD-22206"/>
<dbReference type="EMDB" id="EMD-22408"/>
<dbReference type="EMDB" id="EMD-22409"/>
<dbReference type="EMDB" id="EMD-22581"/>
<dbReference type="EMDB" id="EMD-22683"/>
<dbReference type="EMDB" id="EMD-22684"/>
<dbReference type="EMDB" id="EMD-22685"/>
<dbReference type="EMDB" id="EMD-22686"/>
<dbReference type="EMDB" id="EMD-22687"/>
<dbReference type="EMDB" id="EMD-22688"/>
<dbReference type="EMDB" id="EMD-23590"/>
<dbReference type="EMDB" id="EMD-23591"/>
<dbReference type="EMDB" id="EMD-23592"/>
<dbReference type="EMDB" id="EMD-25042"/>
<dbReference type="EMDB" id="EMD-25043"/>
<dbReference type="EMDB" id="EMD-25777"/>
<dbReference type="EMDB" id="EMD-25778"/>
<dbReference type="EMDB" id="EMD-26258"/>
<dbReference type="EMDB" id="EMD-26260"/>
<dbReference type="EMDB" id="EMD-26261"/>
<dbReference type="EMDB" id="EMD-26330"/>
<dbReference type="EMDB" id="EMD-26331"/>
<dbReference type="EMDB" id="EMD-26332"/>
<dbReference type="EMDB" id="EMD-26336"/>
<dbReference type="EMDB" id="EMD-26337"/>
<dbReference type="EMDB" id="EMD-26338"/>
<dbReference type="EMDB" id="EMD-26339"/>
<dbReference type="EMDB" id="EMD-26809"/>
<dbReference type="EMDB" id="EMD-26810"/>
<dbReference type="EMDB" id="EMD-27483"/>
<dbReference type="EMDB" id="EMD-28628"/>
<dbReference type="EMDB" id="EMD-28629"/>
<dbReference type="EMDB" id="EMD-28630"/>
<dbReference type="EMDB" id="EMD-28631"/>
<dbReference type="EMDB" id="EMD-30076"/>
<dbReference type="EMDB" id="EMD-30077"/>
<dbReference type="EMDB" id="EMD-30078"/>
<dbReference type="EMDB" id="EMD-30232"/>
<dbReference type="EMDB" id="EMD-30237"/>
<dbReference type="EMDB" id="EMD-30239"/>
<dbReference type="EMDB" id="EMD-30267"/>
<dbReference type="EMDB" id="EMD-30339"/>
<dbReference type="EMDB" id="EMD-30340"/>
<dbReference type="EMDB" id="EMD-30551"/>
<dbReference type="EMDB" id="EMD-30552"/>
<dbReference type="EMDB" id="EMD-31015"/>
<dbReference type="EMDB" id="EMD-31806"/>
<dbReference type="EMDB" id="EMD-31810"/>
<dbReference type="EMDB" id="EMD-31815"/>
<dbReference type="EMDB" id="EMD-31816"/>
<dbReference type="EMDB" id="EMD-31823"/>
<dbReference type="EMDB" id="EMD-31826"/>
<dbReference type="EMDB" id="EMD-31832"/>
<dbReference type="EMDB" id="EMD-32220"/>
<dbReference type="EMDB" id="EMD-32373"/>
<dbReference type="EMDB" id="EMD-32407"/>
<dbReference type="EMDB" id="EMD-32408"/>
<dbReference type="EMDB" id="EMD-32409"/>
<dbReference type="EMDB" id="EMD-33010"/>
<dbReference type="EMDB" id="EMD-33011"/>
<dbReference type="EMDB" id="EMD-33424"/>
<dbReference type="EMDB" id="EMD-33436"/>
<dbReference type="EMDB" id="EMD-33437"/>
<dbReference type="EMDB" id="EMD-33441"/>
<dbReference type="EMDB" id="EMD-33447"/>
<dbReference type="EMDB" id="EMD-33450"/>
<dbReference type="EMDB" id="EMD-33533"/>
<dbReference type="EMDB" id="EMD-33534"/>
<dbReference type="EMDB" id="EMD-33535"/>
<dbReference type="EMDB" id="EMD-33536"/>
<dbReference type="EMDB" id="EMD-33625"/>
<dbReference type="EMDB" id="EMD-33626"/>
<dbReference type="EMDB" id="EMD-33627"/>
<dbReference type="EMDB" id="EMD-33630"/>
<dbReference type="EMDB" id="EMD-33631"/>
<dbReference type="EMDB" id="EMD-33666"/>
<dbReference type="EMDB" id="EMD-33991"/>
<dbReference type="EMDB" id="EMD-34274"/>
<dbReference type="EMDB" id="EMD-34275"/>
<dbReference type="EMDB" id="EMD-34415"/>
<dbReference type="EMDB" id="EMD-34416"/>
<dbReference type="EMDB" id="EMD-34431"/>
<dbReference type="EMDB" id="EMD-34588"/>
<dbReference type="EMDB" id="EMD-34589"/>
<dbReference type="EMDB" id="EMD-34591"/>
<dbReference type="EMDB" id="EMD-34592"/>
<dbReference type="EMDB" id="EMD-34594"/>
<dbReference type="EMDB" id="EMD-34595"/>
<dbReference type="EMDB" id="EMD-34596"/>
<dbReference type="EMDB" id="EMD-34597"/>
<dbReference type="EMDB" id="EMD-34685"/>
<dbReference type="EMDB" id="EMD-35381"/>
<dbReference type="EMDB" id="EMD-35383"/>
<dbReference type="EMDB" id="EMD-35448"/>
<dbReference type="EMDB" id="EMD-35660"/>
<dbReference type="EMDB" id="EMD-35661"/>
<dbReference type="EMDB" id="EMD-36013"/>
<dbReference type="EMDB" id="EMD-36014"/>
<dbReference type="EMDB" id="EMD-36148"/>
<dbReference type="EMDB" id="EMD-36157"/>
<dbReference type="EMDB" id="EMD-36158"/>
<dbReference type="EMDB" id="EMD-36251"/>
<dbReference type="EMDB" id="EMD-36252"/>
<dbReference type="EMDB" id="EMD-36253"/>
<dbReference type="EMDB" id="EMD-36264"/>
<dbReference type="EMDB" id="EMD-36265"/>
<dbReference type="EMDB" id="EMD-36389"/>
<dbReference type="EMDB" id="EMD-36390"/>
<dbReference type="EMDB" id="EMD-36391"/>
<dbReference type="EMDB" id="EMD-36393"/>
<dbReference type="EMDB" id="EMD-36442"/>
<dbReference type="EMDB" id="EMD-36443"/>
<dbReference type="EMDB" id="EMD-36444"/>
<dbReference type="EMDB" id="EMD-37070"/>
<dbReference type="EMDB" id="EMD-37115"/>
<dbReference type="EMDB" id="EMD-37121"/>
<dbReference type="EMDB" id="EMD-37149"/>
<dbReference type="EMDB" id="EMD-37365"/>
<dbReference type="EMDB" id="EMD-37366"/>
<dbReference type="EMDB" id="EMD-37367"/>
<dbReference type="EMDB" id="EMD-37503"/>
<dbReference type="EMDB" id="EMD-37984"/>
<dbReference type="EMDB" id="EMD-37988"/>
<dbReference type="EMDB" id="EMD-37990"/>
<dbReference type="EMDB" id="EMD-38099"/>
<dbReference type="EMDB" id="EMD-38100"/>
<dbReference type="EMDB" id="EMD-38101"/>
<dbReference type="EMDB" id="EMD-38228"/>
<dbReference type="EMDB" id="EMD-38229"/>
<dbReference type="EMDB" id="EMD-38231"/>
<dbReference type="EMDB" id="EMD-38877"/>
<dbReference type="EMDB" id="EMD-38878"/>
<dbReference type="EMDB" id="EMD-38879"/>
<dbReference type="EMDB" id="EMD-38880"/>
<dbReference type="EMDB" id="EMD-39119"/>
<dbReference type="EMDB" id="EMD-39120"/>
<dbReference type="EMDB" id="EMD-39431"/>
<dbReference type="EMDB" id="EMD-3954"/>
<dbReference type="EMDB" id="EMD-39594"/>
<dbReference type="EMDB" id="EMD-40604"/>
<dbReference type="EMDB" id="EMD-40605"/>
<dbReference type="EMDB" id="EMD-40606"/>
<dbReference type="EMDB" id="EMD-40607"/>
<dbReference type="EMDB" id="EMD-40608"/>
<dbReference type="EMDB" id="EMD-40609"/>
<dbReference type="EMDB" id="EMD-40610"/>
<dbReference type="EMDB" id="EMD-40611"/>
<dbReference type="EMDB" id="EMD-40612"/>
<dbReference type="EMDB" id="EMD-40613"/>
<dbReference type="EMDB" id="EMD-40614"/>
<dbReference type="EMDB" id="EMD-40615"/>
<dbReference type="EMDB" id="EMD-40616"/>
<dbReference type="EMDB" id="EMD-40617"/>
<dbReference type="EMDB" id="EMD-40618"/>
<dbReference type="EMDB" id="EMD-40683"/>
<dbReference type="EMDB" id="EMD-40686"/>
<dbReference type="EMDB" id="EMD-40889"/>
<dbReference type="EMDB" id="EMD-41706"/>
<dbReference type="EMDB" id="EMD-41707"/>
<dbReference type="EMDB" id="EMD-41708"/>
<dbReference type="EMDB" id="EMD-41800"/>
<dbReference type="EMDB" id="EMD-41801"/>
<dbReference type="EMDB" id="EMD-42446"/>
<dbReference type="EMDB" id="EMD-4277"/>
<dbReference type="EMDB" id="EMD-43193"/>
<dbReference type="EMDB" id="EMD-43194"/>
<dbReference type="EMDB" id="EMD-43195"/>
<dbReference type="EMDB" id="EMD-43196"/>
<dbReference type="EMDB" id="EMD-43197"/>
<dbReference type="EMDB" id="EMD-43198"/>
<dbReference type="EMDB" id="EMD-43342"/>
<dbReference type="EMDB" id="EMD-43358"/>
<dbReference type="EMDB" id="EMD-43360"/>
<dbReference type="EMDB" id="EMD-43363"/>
<dbReference type="EMDB" id="EMD-43373"/>
<dbReference type="EMDB" id="EMD-43595"/>
<dbReference type="EMDB" id="EMD-43596"/>
<dbReference type="EMDB" id="EMD-43600"/>
<dbReference type="EMDB" id="EMD-43601"/>
<dbReference type="EMDB" id="EMD-4692"/>
<dbReference type="EMDB" id="EMD-4711"/>
<dbReference type="EMDB" id="EMD-47242"/>
<dbReference type="EMDB" id="EMD-47243"/>
<dbReference type="EMDB" id="EMD-47246"/>
<dbReference type="EMDB" id="EMD-47249"/>
<dbReference type="EMDB" id="EMD-47252"/>
<dbReference type="EMDB" id="EMD-47253"/>
<dbReference type="EMDB" id="EMD-47254"/>
<dbReference type="EMDB" id="EMD-47255"/>
<dbReference type="EMDB" id="EMD-4762"/>
<dbReference type="EMDB" id="EMD-4763"/>
<dbReference type="EMDB" id="EMD-4764"/>
<dbReference type="EMDB" id="EMD-4765"/>
<dbReference type="EMDB" id="EMD-4766"/>
<dbReference type="EMDB" id="EMD-4767"/>
<dbReference type="EMDB" id="EMD-4768"/>
<dbReference type="EMDB" id="EMD-4960"/>
<dbReference type="EMDB" id="EMD-50416"/>
<dbReference type="EMDB" id="EMD-50443"/>
<dbReference type="EMDB" id="EMD-51449"/>
<dbReference type="EMDB" id="EMD-51453"/>
<dbReference type="EMDB" id="EMD-51645"/>
<dbReference type="EMDB" id="EMD-51647"/>
<dbReference type="EMDB" id="EMD-51656"/>
<dbReference type="EMDB" id="EMD-60781"/>
<dbReference type="EMDB" id="EMD-61058"/>
<dbReference type="EMDB" id="EMD-61059"/>
<dbReference type="EMDB" id="EMD-61060"/>
<dbReference type="EMDB" id="EMD-61231"/>
<dbReference type="EMDB" id="EMD-61232"/>
<dbReference type="EMDB" id="EMD-61233"/>
<dbReference type="EMDB" id="EMD-6980"/>
<dbReference type="EMDB" id="EMD-6981"/>
<dbReference type="EMDB" id="EMD-6982"/>
<dbReference type="EMDB" id="EMD-6983"/>
<dbReference type="EMDB" id="EMD-6984"/>
<dbReference type="EMDB" id="EMD-6985"/>
<dbReference type="EMDB" id="EMD-6986"/>
<dbReference type="EMDB" id="EMD-7293"/>
<dbReference type="EMDB" id="EMD-7318"/>
<dbReference type="EMDB" id="EMD-7326"/>
<dbReference type="EMDB" id="EMD-8945"/>
<dbReference type="EMDB" id="EMD-8949"/>
<dbReference type="EMDB" id="EMD-9250"/>
<dbReference type="EMDB" id="EMD-9251"/>
<dbReference type="EMDB" id="EMD-9713"/>
<dbReference type="SASBDB" id="P62805"/>
<dbReference type="SMR" id="P62805"/>
<dbReference type="BioGRID" id="113899">
    <property type="interactions" value="115"/>
</dbReference>
<dbReference type="BioGRID" id="113955">
    <property type="interactions" value="1777"/>
</dbReference>
<dbReference type="BioGRID" id="113956">
    <property type="interactions" value="29"/>
</dbReference>
<dbReference type="BioGRID" id="113957">
    <property type="interactions" value="70"/>
</dbReference>
<dbReference type="BioGRID" id="113958">
    <property type="interactions" value="60"/>
</dbReference>
<dbReference type="BioGRID" id="113959">
    <property type="interactions" value="45"/>
</dbReference>
<dbReference type="BioGRID" id="113960">
    <property type="interactions" value="48"/>
</dbReference>
<dbReference type="BioGRID" id="113961">
    <property type="interactions" value="40"/>
</dbReference>
<dbReference type="BioGRID" id="113962">
    <property type="interactions" value="57"/>
</dbReference>
<dbReference type="BioGRID" id="113963">
    <property type="interactions" value="33"/>
</dbReference>
<dbReference type="BioGRID" id="113964">
    <property type="interactions" value="61"/>
</dbReference>
<dbReference type="BioGRID" id="113966">
    <property type="interactions" value="100"/>
</dbReference>
<dbReference type="BioGRID" id="125732">
    <property type="interactions" value="126"/>
</dbReference>
<dbReference type="BioGRID" id="299853">
    <property type="interactions" value="43"/>
</dbReference>
<dbReference type="ComplexPortal" id="CPX-2556">
    <property type="entry name" value="Nucleosome, variant H3.1-H2A.2-H2B.1"/>
</dbReference>
<dbReference type="ComplexPortal" id="CPX-2558">
    <property type="entry name" value="Nucleosome complex, H2BC12 variant"/>
</dbReference>
<dbReference type="ComplexPortal" id="CPX-2564">
    <property type="entry name" value="Nucleosome, variant H3.1t-H2A.2-H2B.1"/>
</dbReference>
<dbReference type="ComplexPortal" id="CPX-25754">
    <property type="entry name" value="Nucleosome complex, H2A type 1 variant"/>
</dbReference>
<dbReference type="ComplexPortal" id="CPX-25755">
    <property type="entry name" value="Hexasome complex"/>
</dbReference>
<dbReference type="ComplexPortal" id="CPX-5647">
    <property type="entry name" value="CENP-A nucleosome complex"/>
</dbReference>
<dbReference type="ComplexPortal" id="CPX-5668">
    <property type="entry name" value="Nucleosome, variant H3.2-H2A.2-H2B.1"/>
</dbReference>
<dbReference type="ComplexPortal" id="CPX-5670">
    <property type="entry name" value="Nucleosome, variant H3.1-H2A.Z-H2B.1"/>
</dbReference>
<dbReference type="ComplexPortal" id="CPX-5671">
    <property type="entry name" value="Nucleosome, variant H3.1-H2A.V-H2B.1"/>
</dbReference>
<dbReference type="CORUM" id="P62805"/>
<dbReference type="DIP" id="DIP-33079N"/>
<dbReference type="FunCoup" id="P62805">
    <property type="interactions" value="1304"/>
</dbReference>
<dbReference type="IntAct" id="P62805">
    <property type="interactions" value="278"/>
</dbReference>
<dbReference type="MINT" id="P62805"/>
<dbReference type="STRING" id="9606.ENSP00000244537"/>
<dbReference type="BindingDB" id="P62805"/>
<dbReference type="ChEMBL" id="CHEMBL5876"/>
<dbReference type="GlyCosmos" id="P62805">
    <property type="glycosylation" value="1 site, 1 glycan"/>
</dbReference>
<dbReference type="GlyGen" id="P62805">
    <property type="glycosylation" value="3 sites, 1 O-linked glycan (3 sites)"/>
</dbReference>
<dbReference type="iPTMnet" id="P62805"/>
<dbReference type="MetOSite" id="P62805"/>
<dbReference type="PhosphoSitePlus" id="P62805"/>
<dbReference type="SwissPalm" id="P62805"/>
<dbReference type="BioMuta" id="HIST4H4"/>
<dbReference type="DMDM" id="51317339"/>
<dbReference type="CPTAC" id="CPTAC-1055"/>
<dbReference type="CPTAC" id="CPTAC-1056"/>
<dbReference type="jPOST" id="P62805"/>
<dbReference type="MassIVE" id="P62805"/>
<dbReference type="PaxDb" id="9606-ENSP00000244537"/>
<dbReference type="PeptideAtlas" id="P62805"/>
<dbReference type="PRIDE" id="P62805"/>
<dbReference type="ProteomicsDB" id="57424"/>
<dbReference type="Pumba" id="P62805"/>
<dbReference type="TopDownProteomics" id="P62805"/>
<dbReference type="ABCD" id="P62805">
    <property type="antibodies" value="4 sequenced antibodies"/>
</dbReference>
<dbReference type="Antibodypedia" id="23657">
    <property type="antibodies" value="2128 antibodies from 42 providers"/>
</dbReference>
<dbReference type="Antibodypedia" id="70431">
    <property type="antibodies" value="10 antibodies from 6 providers"/>
</dbReference>
<dbReference type="Antibodypedia" id="73583">
    <property type="antibodies" value="122 antibodies from 11 providers"/>
</dbReference>
<dbReference type="Antibodypedia" id="73812">
    <property type="antibodies" value="14 antibodies from 8 providers"/>
</dbReference>
<dbReference type="Antibodypedia" id="73941">
    <property type="antibodies" value="629 antibodies from 12 providers"/>
</dbReference>
<dbReference type="Antibodypedia" id="74197">
    <property type="antibodies" value="152 antibodies from 5 providers"/>
</dbReference>
<dbReference type="Antibodypedia" id="75448">
    <property type="antibodies" value="5 antibodies from 3 providers"/>
</dbReference>
<dbReference type="Antibodypedia" id="75564">
    <property type="antibodies" value="40 antibodies from 5 providers"/>
</dbReference>
<dbReference type="Antibodypedia" id="76313">
    <property type="antibodies" value="19 antibodies from 5 providers"/>
</dbReference>
<dbReference type="Antibodypedia" id="76498">
    <property type="antibodies" value="1 antibodies from 1 providers"/>
</dbReference>
<dbReference type="Antibodypedia" id="76521">
    <property type="antibodies" value="4 antibodies from 3 providers"/>
</dbReference>
<dbReference type="Antibodypedia" id="76797">
    <property type="antibodies" value="5 antibodies from 5 providers"/>
</dbReference>
<dbReference type="DNASU" id="8294"/>
<dbReference type="Ensembl" id="ENST00000244537.6">
    <property type="protein sequence ID" value="ENSP00000244537.6"/>
    <property type="gene ID" value="ENSG00000274618.2"/>
</dbReference>
<dbReference type="Ensembl" id="ENST00000355057.3">
    <property type="protein sequence ID" value="ENSP00000347168.2"/>
    <property type="gene ID" value="ENSG00000197238.5"/>
</dbReference>
<dbReference type="Ensembl" id="ENST00000358064.3">
    <property type="protein sequence ID" value="ENSP00000350767.3"/>
    <property type="gene ID" value="ENSG00000197837.4"/>
</dbReference>
<dbReference type="Ensembl" id="ENST00000377727.2">
    <property type="protein sequence ID" value="ENSP00000366956.1"/>
    <property type="gene ID" value="ENSG00000158406.6"/>
</dbReference>
<dbReference type="Ensembl" id="ENST00000377745.5">
    <property type="protein sequence ID" value="ENSP00000366974.2"/>
    <property type="gene ID" value="ENSG00000278705.4"/>
</dbReference>
<dbReference type="Ensembl" id="ENST00000377803.4">
    <property type="protein sequence ID" value="ENSP00000367034.3"/>
    <property type="gene ID" value="ENSG00000197061.5"/>
</dbReference>
<dbReference type="Ensembl" id="ENST00000539745.2">
    <property type="protein sequence ID" value="ENSP00000443017.1"/>
    <property type="gene ID" value="ENSG00000197837.4"/>
</dbReference>
<dbReference type="Ensembl" id="ENST00000578186.3">
    <property type="protein sequence ID" value="ENSP00000462667.1"/>
    <property type="gene ID" value="ENSG00000270882.3"/>
</dbReference>
<dbReference type="Ensembl" id="ENST00000579512.3">
    <property type="protein sequence ID" value="ENSP00000462355.1"/>
    <property type="gene ID" value="ENSG00000270276.3"/>
</dbReference>
<dbReference type="Ensembl" id="ENST00000611927.2">
    <property type="protein sequence ID" value="ENSP00000479794.2"/>
    <property type="gene ID" value="ENSG00000273542.3"/>
</dbReference>
<dbReference type="Ensembl" id="ENST00000612061.1">
    <property type="protein sequence ID" value="ENSP00000482412.1"/>
    <property type="gene ID" value="ENSG00000270276.3"/>
</dbReference>
<dbReference type="Ensembl" id="ENST00000613412.1">
    <property type="protein sequence ID" value="ENSP00000481343.1"/>
    <property type="gene ID" value="ENSG00000270882.3"/>
</dbReference>
<dbReference type="Ensembl" id="ENST00000614247.2">
    <property type="protein sequence ID" value="ENSP00000479461.2"/>
    <property type="gene ID" value="ENSG00000277157.2"/>
</dbReference>
<dbReference type="Ensembl" id="ENST00000614272.1">
    <property type="protein sequence ID" value="ENSP00000478519.1"/>
    <property type="gene ID" value="ENSG00000270882.3"/>
</dbReference>
<dbReference type="Ensembl" id="ENST00000615164.3">
    <property type="protein sequence ID" value="ENSP00000484789.1"/>
    <property type="gene ID" value="ENSG00000276966.3"/>
</dbReference>
<dbReference type="Ensembl" id="ENST00000615353.2">
    <property type="protein sequence ID" value="ENSP00000481486.1"/>
    <property type="gene ID" value="ENSG00000276180.3"/>
</dbReference>
<dbReference type="Ensembl" id="ENST00000617569.2">
    <property type="protein sequence ID" value="ENSP00000479106.2"/>
    <property type="gene ID" value="ENSG00000278637.3"/>
</dbReference>
<dbReference type="Ensembl" id="ENST00000618193.1">
    <property type="protein sequence ID" value="ENSP00000478786.1"/>
    <property type="gene ID" value="ENSG00000270882.3"/>
</dbReference>
<dbReference type="Ensembl" id="ENST00000618305.2">
    <property type="protein sequence ID" value="ENSP00000480960.2"/>
    <property type="gene ID" value="ENSG00000275126.2"/>
</dbReference>
<dbReference type="Ensembl" id="ENST00000621520.1">
    <property type="protein sequence ID" value="ENSP00000481507.1"/>
    <property type="gene ID" value="ENSG00000270276.3"/>
</dbReference>
<dbReference type="Ensembl" id="ENST00000634560.1">
    <property type="protein sequence ID" value="ENSP00000489319.1"/>
    <property type="gene ID" value="ENSG00000158406.6"/>
</dbReference>
<dbReference type="Ensembl" id="ENST00000634956.1">
    <property type="protein sequence ID" value="ENSP00000489567.1"/>
    <property type="gene ID" value="ENSG00000158406.6"/>
</dbReference>
<dbReference type="Ensembl" id="ENST00000715894.1">
    <property type="protein sequence ID" value="ENSP00000520530.1"/>
    <property type="gene ID" value="ENSG00000276180.3"/>
</dbReference>
<dbReference type="Ensembl" id="ENST00000718258.1">
    <property type="protein sequence ID" value="ENSP00000520698.1"/>
    <property type="gene ID" value="ENSG00000278705.4"/>
</dbReference>
<dbReference type="Ensembl" id="ENST00000718434.1">
    <property type="protein sequence ID" value="ENSP00000520819.1"/>
    <property type="gene ID" value="ENSG00000273542.3"/>
</dbReference>
<dbReference type="Ensembl" id="ENST00000850564.1">
    <property type="protein sequence ID" value="ENSP00000520855.1"/>
    <property type="gene ID" value="ENSG00000278637.3"/>
</dbReference>
<dbReference type="GeneID" id="121504"/>
<dbReference type="GeneID" id="554313"/>
<dbReference type="GeneID" id="8294"/>
<dbReference type="GeneID" id="8359"/>
<dbReference type="GeneID" id="8360"/>
<dbReference type="GeneID" id="8361"/>
<dbReference type="GeneID" id="8362"/>
<dbReference type="GeneID" id="8363"/>
<dbReference type="GeneID" id="8364"/>
<dbReference type="GeneID" id="8365"/>
<dbReference type="GeneID" id="8366"/>
<dbReference type="GeneID" id="8367"/>
<dbReference type="GeneID" id="8368"/>
<dbReference type="GeneID" id="8370"/>
<dbReference type="KEGG" id="hsa:121504"/>
<dbReference type="KEGG" id="hsa:554313"/>
<dbReference type="KEGG" id="hsa:8294"/>
<dbReference type="KEGG" id="hsa:8359"/>
<dbReference type="KEGG" id="hsa:8360"/>
<dbReference type="KEGG" id="hsa:8361"/>
<dbReference type="KEGG" id="hsa:8362"/>
<dbReference type="KEGG" id="hsa:8363"/>
<dbReference type="KEGG" id="hsa:8364"/>
<dbReference type="KEGG" id="hsa:8365"/>
<dbReference type="KEGG" id="hsa:8366"/>
<dbReference type="KEGG" id="hsa:8367"/>
<dbReference type="KEGG" id="hsa:8368"/>
<dbReference type="KEGG" id="hsa:8370"/>
<dbReference type="MANE-Select" id="ENST00000244537.6">
    <property type="protein sequence ID" value="ENSP00000244537.6"/>
    <property type="RefSeq nucleotide sequence ID" value="NM_003540.4"/>
    <property type="RefSeq protein sequence ID" value="NP_003531.1"/>
</dbReference>
<dbReference type="MANE-Select" id="ENST00000355057.3">
    <property type="protein sequence ID" value="ENSP00000347168.2"/>
    <property type="RefSeq nucleotide sequence ID" value="NM_021968.4"/>
    <property type="RefSeq protein sequence ID" value="NP_068803.1"/>
</dbReference>
<dbReference type="MANE-Select" id="ENST00000377727.2">
    <property type="protein sequence ID" value="ENSP00000366956.1"/>
    <property type="RefSeq nucleotide sequence ID" value="NM_003543.4"/>
    <property type="RefSeq protein sequence ID" value="NP_003534.1"/>
</dbReference>
<dbReference type="MANE-Select" id="ENST00000377745.5">
    <property type="protein sequence ID" value="ENSP00000366974.2"/>
    <property type="RefSeq nucleotide sequence ID" value="NM_003544.3"/>
    <property type="RefSeq protein sequence ID" value="NP_003535.1"/>
</dbReference>
<dbReference type="MANE-Select" id="ENST00000377803.4">
    <property type="protein sequence ID" value="ENSP00000367034.3"/>
    <property type="RefSeq nucleotide sequence ID" value="NM_003542.4"/>
    <property type="RefSeq protein sequence ID" value="NP_003533.1"/>
</dbReference>
<dbReference type="MANE-Select" id="ENST00000539745.2">
    <property type="protein sequence ID" value="ENSP00000443017.1"/>
    <property type="RefSeq nucleotide sequence ID" value="NM_175054.2"/>
    <property type="RefSeq protein sequence ID" value="NP_778224.1"/>
</dbReference>
<dbReference type="MANE-Select" id="ENST00000578186.3">
    <property type="protein sequence ID" value="ENSP00000462667.1"/>
    <property type="RefSeq nucleotide sequence ID" value="NM_003548.2"/>
    <property type="RefSeq protein sequence ID" value="NP_003539.1"/>
</dbReference>
<dbReference type="MANE-Select" id="ENST00000579512.3">
    <property type="protein sequence ID" value="ENSP00000462355.1"/>
    <property type="RefSeq nucleotide sequence ID" value="NM_001034077.4"/>
    <property type="RefSeq protein sequence ID" value="NP_001029249.1"/>
</dbReference>
<dbReference type="MANE-Select" id="ENST00000611927.2">
    <property type="protein sequence ID" value="ENSP00000479794.2"/>
    <property type="RefSeq nucleotide sequence ID" value="NM_003541.3"/>
    <property type="RefSeq protein sequence ID" value="NP_003532.1"/>
</dbReference>
<dbReference type="MANE-Select" id="ENST00000614247.2">
    <property type="protein sequence ID" value="ENSP00000479461.2"/>
    <property type="RefSeq nucleotide sequence ID" value="NM_003539.4"/>
    <property type="RefSeq protein sequence ID" value="NP_003530.1"/>
</dbReference>
<dbReference type="MANE-Select" id="ENST00000615164.3">
    <property type="protein sequence ID" value="ENSP00000484789.1"/>
    <property type="RefSeq nucleotide sequence ID" value="NM_003545.4"/>
    <property type="RefSeq protein sequence ID" value="NP_003536.1"/>
</dbReference>
<dbReference type="MANE-Select" id="ENST00000615353.2">
    <property type="protein sequence ID" value="ENSP00000481486.1"/>
    <property type="RefSeq nucleotide sequence ID" value="NM_003495.3"/>
    <property type="RefSeq protein sequence ID" value="NP_003486.1"/>
</dbReference>
<dbReference type="MANE-Select" id="ENST00000617569.2">
    <property type="protein sequence ID" value="ENSP00000479106.2"/>
    <property type="RefSeq nucleotide sequence ID" value="NM_003538.4"/>
    <property type="RefSeq protein sequence ID" value="NP_003529.1"/>
</dbReference>
<dbReference type="MANE-Select" id="ENST00000618305.2">
    <property type="protein sequence ID" value="ENSP00000480960.2"/>
    <property type="RefSeq nucleotide sequence ID" value="NM_003546.3"/>
    <property type="RefSeq protein sequence ID" value="NP_003537.1"/>
</dbReference>
<dbReference type="UCSC" id="uc001ess.4">
    <property type="organism name" value="human"/>
</dbReference>
<dbReference type="AGR" id="HGNC:20510"/>
<dbReference type="AGR" id="HGNC:29607"/>
<dbReference type="AGR" id="HGNC:4781"/>
<dbReference type="AGR" id="HGNC:4782"/>
<dbReference type="AGR" id="HGNC:4783"/>
<dbReference type="AGR" id="HGNC:4784"/>
<dbReference type="AGR" id="HGNC:4785"/>
<dbReference type="AGR" id="HGNC:4787"/>
<dbReference type="AGR" id="HGNC:4788"/>
<dbReference type="AGR" id="HGNC:4789"/>
<dbReference type="AGR" id="HGNC:4790"/>
<dbReference type="AGR" id="HGNC:4791"/>
<dbReference type="AGR" id="HGNC:4793"/>
<dbReference type="AGR" id="HGNC:4794"/>
<dbReference type="CTD" id="121504"/>
<dbReference type="CTD" id="554313"/>
<dbReference type="CTD" id="8294"/>
<dbReference type="CTD" id="8359"/>
<dbReference type="CTD" id="8360"/>
<dbReference type="CTD" id="8361"/>
<dbReference type="CTD" id="8362"/>
<dbReference type="CTD" id="8363"/>
<dbReference type="CTD" id="8364"/>
<dbReference type="CTD" id="8365"/>
<dbReference type="CTD" id="8366"/>
<dbReference type="CTD" id="8367"/>
<dbReference type="CTD" id="8368"/>
<dbReference type="CTD" id="8370"/>
<dbReference type="DisGeNET" id="121504"/>
<dbReference type="DisGeNET" id="554313"/>
<dbReference type="DisGeNET" id="8294"/>
<dbReference type="DisGeNET" id="8359"/>
<dbReference type="DisGeNET" id="8360"/>
<dbReference type="DisGeNET" id="8361"/>
<dbReference type="DisGeNET" id="8362"/>
<dbReference type="DisGeNET" id="8363"/>
<dbReference type="DisGeNET" id="8364"/>
<dbReference type="DisGeNET" id="8365"/>
<dbReference type="DisGeNET" id="8366"/>
<dbReference type="DisGeNET" id="8367"/>
<dbReference type="DisGeNET" id="8368"/>
<dbReference type="DisGeNET" id="8370"/>
<dbReference type="GeneCards" id="H4C1"/>
<dbReference type="GeneCards" id="H4C11"/>
<dbReference type="GeneCards" id="H4C12"/>
<dbReference type="GeneCards" id="H4C13"/>
<dbReference type="GeneCards" id="H4C14"/>
<dbReference type="GeneCards" id="H4C15"/>
<dbReference type="GeneCards" id="H4C16"/>
<dbReference type="GeneCards" id="H4C2"/>
<dbReference type="GeneCards" id="H4C3"/>
<dbReference type="GeneCards" id="H4C4"/>
<dbReference type="GeneCards" id="H4C5"/>
<dbReference type="GeneCards" id="H4C6"/>
<dbReference type="GeneCards" id="H4C8"/>
<dbReference type="GeneCards" id="H4C9"/>
<dbReference type="HGNC" id="HGNC:4781">
    <property type="gene designation" value="H4C1"/>
</dbReference>
<dbReference type="HGNC" id="HGNC:4785">
    <property type="gene designation" value="H4C11"/>
</dbReference>
<dbReference type="HGNC" id="HGNC:4784">
    <property type="gene designation" value="H4C12"/>
</dbReference>
<dbReference type="HGNC" id="HGNC:4791">
    <property type="gene designation" value="H4C13"/>
</dbReference>
<dbReference type="HGNC" id="HGNC:4794">
    <property type="gene designation" value="H4C14"/>
</dbReference>
<dbReference type="HGNC" id="HGNC:29607">
    <property type="gene designation" value="H4C15"/>
</dbReference>
<dbReference type="HGNC" id="HGNC:20510">
    <property type="gene designation" value="H4C16"/>
</dbReference>
<dbReference type="HGNC" id="HGNC:4789">
    <property type="gene designation" value="H4C2"/>
</dbReference>
<dbReference type="HGNC" id="HGNC:4787">
    <property type="gene designation" value="H4C3"/>
</dbReference>
<dbReference type="HGNC" id="HGNC:4782">
    <property type="gene designation" value="H4C4"/>
</dbReference>
<dbReference type="HGNC" id="HGNC:4790">
    <property type="gene designation" value="H4C5"/>
</dbReference>
<dbReference type="HGNC" id="HGNC:4783">
    <property type="gene designation" value="H4C6"/>
</dbReference>
<dbReference type="HGNC" id="HGNC:4788">
    <property type="gene designation" value="H4C8"/>
</dbReference>
<dbReference type="HGNC" id="HGNC:4793">
    <property type="gene designation" value="H4C9"/>
</dbReference>
<dbReference type="HPA" id="ENSG00000158406">
    <property type="expression patterns" value="Tissue enhanced (lymphoid tissue, skeletal muscle)"/>
</dbReference>
<dbReference type="HPA" id="ENSG00000197061">
    <property type="expression patterns" value="Tissue enhanced (bone marrow, lymphoid tissue)"/>
</dbReference>
<dbReference type="HPA" id="ENSG00000197238">
    <property type="expression patterns" value="Tissue enhanced (liver)"/>
</dbReference>
<dbReference type="HPA" id="ENSG00000197837">
    <property type="expression patterns" value="Low tissue specificity"/>
</dbReference>
<dbReference type="HPA" id="ENSG00000270276">
    <property type="expression patterns" value="Low tissue specificity"/>
</dbReference>
<dbReference type="HPA" id="ENSG00000270882">
    <property type="expression patterns" value="Low tissue specificity"/>
</dbReference>
<dbReference type="HPA" id="ENSG00000273542">
    <property type="expression patterns" value="Tissue enhanced (bone)"/>
</dbReference>
<dbReference type="HPA" id="ENSG00000274618">
    <property type="expression patterns" value="Not detected"/>
</dbReference>
<dbReference type="HPA" id="ENSG00000275126">
    <property type="expression patterns" value="Not detected"/>
</dbReference>
<dbReference type="HPA" id="ENSG00000276180">
    <property type="expression patterns" value="Tissue enhanced (lymphoid)"/>
</dbReference>
<dbReference type="HPA" id="ENSG00000276966">
    <property type="expression patterns" value="Low tissue specificity"/>
</dbReference>
<dbReference type="HPA" id="ENSG00000277157">
    <property type="expression patterns" value="Tissue enhanced (lymphoid)"/>
</dbReference>
<dbReference type="HPA" id="ENSG00000278637">
    <property type="expression patterns" value="Tissue enhanced (bone marrow, lymphoid tissue)"/>
</dbReference>
<dbReference type="HPA" id="ENSG00000278705">
    <property type="expression patterns" value="Group enriched (bone marrow, choroid plexus, lymphoid tissue)"/>
</dbReference>
<dbReference type="MalaCards" id="H4C1"/>
<dbReference type="MalaCards" id="H4C11"/>
<dbReference type="MalaCards" id="H4C3"/>
<dbReference type="MalaCards" id="H4C5"/>
<dbReference type="MalaCards" id="H4C9"/>
<dbReference type="MIM" id="142750">
    <property type="type" value="gene"/>
</dbReference>
<dbReference type="MIM" id="602822">
    <property type="type" value="gene"/>
</dbReference>
<dbReference type="MIM" id="602823">
    <property type="type" value="gene"/>
</dbReference>
<dbReference type="MIM" id="602824">
    <property type="type" value="gene"/>
</dbReference>
<dbReference type="MIM" id="602825">
    <property type="type" value="gene"/>
</dbReference>
<dbReference type="MIM" id="602826">
    <property type="type" value="gene"/>
</dbReference>
<dbReference type="MIM" id="602827">
    <property type="type" value="gene"/>
</dbReference>
<dbReference type="MIM" id="602828">
    <property type="type" value="gene"/>
</dbReference>
<dbReference type="MIM" id="602829">
    <property type="type" value="gene"/>
</dbReference>
<dbReference type="MIM" id="602830">
    <property type="type" value="gene"/>
</dbReference>
<dbReference type="MIM" id="602831">
    <property type="type" value="gene"/>
</dbReference>
<dbReference type="MIM" id="602833">
    <property type="type" value="gene"/>
</dbReference>
<dbReference type="MIM" id="615069">
    <property type="type" value="gene"/>
</dbReference>
<dbReference type="MIM" id="619758">
    <property type="type" value="phenotype"/>
</dbReference>
<dbReference type="MIM" id="619759">
    <property type="type" value="phenotype"/>
</dbReference>
<dbReference type="MIM" id="619950">
    <property type="type" value="phenotype"/>
</dbReference>
<dbReference type="MIM" id="619951">
    <property type="type" value="phenotype"/>
</dbReference>
<dbReference type="neXtProt" id="NX_P62805"/>
<dbReference type="OpenTargets" id="ENSG00000158406"/>
<dbReference type="OpenTargets" id="ENSG00000197061"/>
<dbReference type="OpenTargets" id="ENSG00000197238"/>
<dbReference type="OpenTargets" id="ENSG00000197837"/>
<dbReference type="OpenTargets" id="ENSG00000270276"/>
<dbReference type="OpenTargets" id="ENSG00000270882"/>
<dbReference type="OpenTargets" id="ENSG00000273542"/>
<dbReference type="OpenTargets" id="ENSG00000274618"/>
<dbReference type="OpenTargets" id="ENSG00000275126"/>
<dbReference type="OpenTargets" id="ENSG00000276180"/>
<dbReference type="OpenTargets" id="ENSG00000276966"/>
<dbReference type="OpenTargets" id="ENSG00000277157"/>
<dbReference type="OpenTargets" id="ENSG00000278637"/>
<dbReference type="OpenTargets" id="ENSG00000278705"/>
<dbReference type="Orphanet" id="528084">
    <property type="disease" value="Non-specific syndromic intellectual disability"/>
</dbReference>
<dbReference type="VEuPathDB" id="HostDB:ENSG00000158406"/>
<dbReference type="VEuPathDB" id="HostDB:ENSG00000197061"/>
<dbReference type="VEuPathDB" id="HostDB:ENSG00000197238"/>
<dbReference type="VEuPathDB" id="HostDB:ENSG00000197837"/>
<dbReference type="VEuPathDB" id="HostDB:ENSG00000270276"/>
<dbReference type="VEuPathDB" id="HostDB:ENSG00000270882"/>
<dbReference type="VEuPathDB" id="HostDB:ENSG00000273542"/>
<dbReference type="VEuPathDB" id="HostDB:ENSG00000274618"/>
<dbReference type="VEuPathDB" id="HostDB:ENSG00000275126"/>
<dbReference type="VEuPathDB" id="HostDB:ENSG00000276180"/>
<dbReference type="VEuPathDB" id="HostDB:ENSG00000276966"/>
<dbReference type="VEuPathDB" id="HostDB:ENSG00000277157"/>
<dbReference type="VEuPathDB" id="HostDB:ENSG00000278637"/>
<dbReference type="VEuPathDB" id="HostDB:ENSG00000278705"/>
<dbReference type="eggNOG" id="KOG3467">
    <property type="taxonomic scope" value="Eukaryota"/>
</dbReference>
<dbReference type="GeneTree" id="ENSGT01060000248528"/>
<dbReference type="HOGENOM" id="CLU_109117_2_3_1"/>
<dbReference type="InParanoid" id="P62805"/>
<dbReference type="OMA" id="XRISAMI"/>
<dbReference type="OrthoDB" id="9533752at2759"/>
<dbReference type="PAN-GO" id="P62805">
    <property type="GO annotations" value="2 GO annotations based on evolutionary models"/>
</dbReference>
<dbReference type="PhylomeDB" id="P62805"/>
<dbReference type="PathwayCommons" id="P62805"/>
<dbReference type="Reactome" id="R-HSA-110328">
    <property type="pathway name" value="Recognition and association of DNA glycosylase with site containing an affected pyrimidine"/>
</dbReference>
<dbReference type="Reactome" id="R-HSA-110329">
    <property type="pathway name" value="Cleavage of the damaged pyrimidine"/>
</dbReference>
<dbReference type="Reactome" id="R-HSA-110330">
    <property type="pathway name" value="Recognition and association of DNA glycosylase with site containing an affected purine"/>
</dbReference>
<dbReference type="Reactome" id="R-HSA-110331">
    <property type="pathway name" value="Cleavage of the damaged purine"/>
</dbReference>
<dbReference type="Reactome" id="R-HSA-1221632">
    <property type="pathway name" value="Meiotic synapsis"/>
</dbReference>
<dbReference type="Reactome" id="R-HSA-171306">
    <property type="pathway name" value="Packaging Of Telomere Ends"/>
</dbReference>
<dbReference type="Reactome" id="R-HSA-1912408">
    <property type="pathway name" value="Pre-NOTCH Transcription and Translation"/>
</dbReference>
<dbReference type="Reactome" id="R-HSA-201722">
    <property type="pathway name" value="Formation of the beta-catenin:TCF transactivating complex"/>
</dbReference>
<dbReference type="Reactome" id="R-HSA-212300">
    <property type="pathway name" value="PRC2 methylates histones and DNA"/>
</dbReference>
<dbReference type="Reactome" id="R-HSA-2299718">
    <property type="pathway name" value="Condensation of Prophase Chromosomes"/>
</dbReference>
<dbReference type="Reactome" id="R-HSA-2559580">
    <property type="pathway name" value="Oxidative Stress Induced Senescence"/>
</dbReference>
<dbReference type="Reactome" id="R-HSA-2559582">
    <property type="pathway name" value="Senescence-Associated Secretory Phenotype (SASP)"/>
</dbReference>
<dbReference type="Reactome" id="R-HSA-2559586">
    <property type="pathway name" value="DNA Damage/Telomere Stress Induced Senescence"/>
</dbReference>
<dbReference type="Reactome" id="R-HSA-3214815">
    <property type="pathway name" value="HDACs deacetylate histones"/>
</dbReference>
<dbReference type="Reactome" id="R-HSA-3214841">
    <property type="pathway name" value="PKMTs methylate histone lysines"/>
</dbReference>
<dbReference type="Reactome" id="R-HSA-3214842">
    <property type="pathway name" value="HDMs demethylate histones"/>
</dbReference>
<dbReference type="Reactome" id="R-HSA-3214847">
    <property type="pathway name" value="HATs acetylate histones"/>
</dbReference>
<dbReference type="Reactome" id="R-HSA-3214858">
    <property type="pathway name" value="RMTs methylate histone arginines"/>
</dbReference>
<dbReference type="Reactome" id="R-HSA-427359">
    <property type="pathway name" value="SIRT1 negatively regulates rRNA expression"/>
</dbReference>
<dbReference type="Reactome" id="R-HSA-427389">
    <property type="pathway name" value="ERCC6 (CSB) and EHMT2 (G9a) positively regulate rRNA expression"/>
</dbReference>
<dbReference type="Reactome" id="R-HSA-427413">
    <property type="pathway name" value="NoRC negatively regulates rRNA expression"/>
</dbReference>
<dbReference type="Reactome" id="R-HSA-4551638">
    <property type="pathway name" value="SUMOylation of chromatin organization proteins"/>
</dbReference>
<dbReference type="Reactome" id="R-HSA-5250924">
    <property type="pathway name" value="B-WICH complex positively regulates rRNA expression"/>
</dbReference>
<dbReference type="Reactome" id="R-HSA-5334118">
    <property type="pathway name" value="DNA methylation"/>
</dbReference>
<dbReference type="Reactome" id="R-HSA-5578749">
    <property type="pathway name" value="Transcriptional regulation by small RNAs"/>
</dbReference>
<dbReference type="Reactome" id="R-HSA-5617472">
    <property type="pathway name" value="Activation of anterior HOX genes in hindbrain development during early embryogenesis"/>
</dbReference>
<dbReference type="Reactome" id="R-HSA-5625886">
    <property type="pathway name" value="Activated PKN1 stimulates transcription of AR (androgen receptor) regulated genes KLK2 and KLK3"/>
</dbReference>
<dbReference type="Reactome" id="R-HSA-5693565">
    <property type="pathway name" value="Recruitment and ATM-mediated phosphorylation of repair and signaling proteins at DNA double strand breaks"/>
</dbReference>
<dbReference type="Reactome" id="R-HSA-5693571">
    <property type="pathway name" value="Nonhomologous End-Joining (NHEJ)"/>
</dbReference>
<dbReference type="Reactome" id="R-HSA-5693607">
    <property type="pathway name" value="Processing of DNA double-strand break ends"/>
</dbReference>
<dbReference type="Reactome" id="R-HSA-606279">
    <property type="pathway name" value="Deposition of new CENPA-containing nucleosomes at the centromere"/>
</dbReference>
<dbReference type="Reactome" id="R-HSA-68616">
    <property type="pathway name" value="Assembly of the ORC complex at the origin of replication"/>
</dbReference>
<dbReference type="Reactome" id="R-HSA-69473">
    <property type="pathway name" value="G2/M DNA damage checkpoint"/>
</dbReference>
<dbReference type="Reactome" id="R-HSA-73728">
    <property type="pathway name" value="RNA Polymerase I Promoter Opening"/>
</dbReference>
<dbReference type="Reactome" id="R-HSA-73772">
    <property type="pathway name" value="RNA Polymerase I Promoter Escape"/>
</dbReference>
<dbReference type="Reactome" id="R-HSA-8936459">
    <property type="pathway name" value="RUNX1 regulates genes involved in megakaryocyte differentiation and platelet function"/>
</dbReference>
<dbReference type="Reactome" id="R-HSA-8939236">
    <property type="pathway name" value="RUNX1 regulates transcription of genes involved in differentiation of HSCs"/>
</dbReference>
<dbReference type="Reactome" id="R-HSA-9018519">
    <property type="pathway name" value="Estrogen-dependent gene expression"/>
</dbReference>
<dbReference type="Reactome" id="R-HSA-912446">
    <property type="pathway name" value="Meiotic recombination"/>
</dbReference>
<dbReference type="Reactome" id="R-HSA-9609690">
    <property type="pathway name" value="HCMV Early Events"/>
</dbReference>
<dbReference type="Reactome" id="R-HSA-9610379">
    <property type="pathway name" value="HCMV Late Events"/>
</dbReference>
<dbReference type="Reactome" id="R-HSA-9616222">
    <property type="pathway name" value="Transcriptional regulation of granulopoiesis"/>
</dbReference>
<dbReference type="Reactome" id="R-HSA-9670095">
    <property type="pathway name" value="Inhibition of DNA recombination at telomere"/>
</dbReference>
<dbReference type="Reactome" id="R-HSA-9710421">
    <property type="pathway name" value="Defective pyroptosis"/>
</dbReference>
<dbReference type="Reactome" id="R-HSA-977225">
    <property type="pathway name" value="Amyloid fiber formation"/>
</dbReference>
<dbReference type="Reactome" id="R-HSA-9821002">
    <property type="pathway name" value="Chromatin modifications during the maternal to zygotic transition (MZT)"/>
</dbReference>
<dbReference type="Reactome" id="R-HSA-9821993">
    <property type="pathway name" value="Replacement of protamines by nucleosomes in the male pronucleus"/>
</dbReference>
<dbReference type="Reactome" id="R-HSA-9841922">
    <property type="pathway name" value="MLL4 and MLL3 complexes regulate expression of PPARG target genes in adipogenesis and hepatic steatosis"/>
</dbReference>
<dbReference type="Reactome" id="R-HSA-9843940">
    <property type="pathway name" value="Regulation of endogenous retroelements by KRAB-ZFP proteins"/>
</dbReference>
<dbReference type="Reactome" id="R-HSA-9843970">
    <property type="pathway name" value="Regulation of endogenous retroelements by the Human Silencing Hub (HUSH) complex"/>
</dbReference>
<dbReference type="Reactome" id="R-HSA-9845323">
    <property type="pathway name" value="Regulation of endogenous retroelements by Piwi-interacting RNAs (piRNAs)"/>
</dbReference>
<dbReference type="SignaLink" id="P62805"/>
<dbReference type="SIGNOR" id="P62805"/>
<dbReference type="BioGRID-ORCS" id="121504">
    <property type="hits" value="17 hits in 1139 CRISPR screens"/>
</dbReference>
<dbReference type="BioGRID-ORCS" id="554313">
    <property type="hits" value="85 hits in 1013 CRISPR screens"/>
</dbReference>
<dbReference type="BioGRID-ORCS" id="8294">
    <property type="hits" value="25 hits in 1146 CRISPR screens"/>
</dbReference>
<dbReference type="BioGRID-ORCS" id="8359">
    <property type="hits" value="28 hits in 1127 CRISPR screens"/>
</dbReference>
<dbReference type="BioGRID-ORCS" id="8360">
    <property type="hits" value="8 hits in 1133 CRISPR screens"/>
</dbReference>
<dbReference type="BioGRID-ORCS" id="8361">
    <property type="hits" value="11 hits in 1127 CRISPR screens"/>
</dbReference>
<dbReference type="BioGRID-ORCS" id="8362">
    <property type="hits" value="58 hits in 976 CRISPR screens"/>
</dbReference>
<dbReference type="BioGRID-ORCS" id="8363">
    <property type="hits" value="94 hits in 672 CRISPR screens"/>
</dbReference>
<dbReference type="BioGRID-ORCS" id="8364">
    <property type="hits" value="26 hits in 1157 CRISPR screens"/>
</dbReference>
<dbReference type="BioGRID-ORCS" id="8365">
    <property type="hits" value="20 hits in 1150 CRISPR screens"/>
</dbReference>
<dbReference type="BioGRID-ORCS" id="8366">
    <property type="hits" value="33 hits in 1110 CRISPR screens"/>
</dbReference>
<dbReference type="BioGRID-ORCS" id="8367">
    <property type="hits" value="15 hits in 1099 CRISPR screens"/>
</dbReference>
<dbReference type="BioGRID-ORCS" id="8368">
    <property type="hits" value="11 hits in 1121 CRISPR screens"/>
</dbReference>
<dbReference type="BioGRID-ORCS" id="8370">
    <property type="hits" value="46 hits in 599 CRISPR screens"/>
</dbReference>
<dbReference type="CD-CODE" id="232F8A39">
    <property type="entry name" value="P-body"/>
</dbReference>
<dbReference type="CD-CODE" id="91857CE7">
    <property type="entry name" value="Nucleolus"/>
</dbReference>
<dbReference type="ChiTaRS" id="HIST1H4A">
    <property type="organism name" value="human"/>
</dbReference>
<dbReference type="ChiTaRS" id="HIST1H4C">
    <property type="organism name" value="human"/>
</dbReference>
<dbReference type="ChiTaRS" id="HIST1H4E">
    <property type="organism name" value="human"/>
</dbReference>
<dbReference type="ChiTaRS" id="HIST1H4F">
    <property type="organism name" value="human"/>
</dbReference>
<dbReference type="ChiTaRS" id="HIST1H4H">
    <property type="organism name" value="human"/>
</dbReference>
<dbReference type="ChiTaRS" id="HIST1H4J">
    <property type="organism name" value="human"/>
</dbReference>
<dbReference type="ChiTaRS" id="HIST1H4K">
    <property type="organism name" value="human"/>
</dbReference>
<dbReference type="ChiTaRS" id="HIST2H4B">
    <property type="organism name" value="human"/>
</dbReference>
<dbReference type="EvolutionaryTrace" id="P62805"/>
<dbReference type="GeneWiki" id="HIST1H4A"/>
<dbReference type="GeneWiki" id="HIST1H4B"/>
<dbReference type="GeneWiki" id="HIST1H4C"/>
<dbReference type="GeneWiki" id="HIST1H4D"/>
<dbReference type="GeneWiki" id="HIST1H4E"/>
<dbReference type="GeneWiki" id="HIST1H4F"/>
<dbReference type="GeneWiki" id="HIST1H4H"/>
<dbReference type="GeneWiki" id="HIST1H4I"/>
<dbReference type="GeneWiki" id="HIST1H4J"/>
<dbReference type="GeneWiki" id="HIST1H4K"/>
<dbReference type="GeneWiki" id="HIST1H4L"/>
<dbReference type="GeneWiki" id="HIST2H4A"/>
<dbReference type="GeneWiki" id="HIST4H4"/>
<dbReference type="Pharos" id="P62805">
    <property type="development level" value="Tchem"/>
</dbReference>
<dbReference type="PRO" id="PR:P62805"/>
<dbReference type="Proteomes" id="UP000005640">
    <property type="component" value="Chromosome 1"/>
</dbReference>
<dbReference type="Proteomes" id="UP000005640">
    <property type="component" value="Chromosome 12"/>
</dbReference>
<dbReference type="Proteomes" id="UP000005640">
    <property type="component" value="Chromosome 6"/>
</dbReference>
<dbReference type="RNAct" id="P62805">
    <property type="molecule type" value="protein"/>
</dbReference>
<dbReference type="Bgee" id="ENSG00000158406">
    <property type="expression patterns" value="Expressed in adrenal tissue and 145 other cell types or tissues"/>
</dbReference>
<dbReference type="ExpressionAtlas" id="P62805">
    <property type="expression patterns" value="baseline and differential"/>
</dbReference>
<dbReference type="GO" id="GO:0043505">
    <property type="term" value="C:CENP-A containing nucleosome"/>
    <property type="evidence" value="ECO:0000353"/>
    <property type="project" value="ComplexPortal"/>
</dbReference>
<dbReference type="GO" id="GO:0000781">
    <property type="term" value="C:chromosome, telomeric region"/>
    <property type="evidence" value="ECO:0007005"/>
    <property type="project" value="BHF-UCL"/>
</dbReference>
<dbReference type="GO" id="GO:0070062">
    <property type="term" value="C:extracellular exosome"/>
    <property type="evidence" value="ECO:0007005"/>
    <property type="project" value="UniProtKB"/>
</dbReference>
<dbReference type="GO" id="GO:0005576">
    <property type="term" value="C:extracellular region"/>
    <property type="evidence" value="ECO:0000304"/>
    <property type="project" value="Reactome"/>
</dbReference>
<dbReference type="GO" id="GO:0016020">
    <property type="term" value="C:membrane"/>
    <property type="evidence" value="ECO:0007005"/>
    <property type="project" value="UniProtKB"/>
</dbReference>
<dbReference type="GO" id="GO:0005654">
    <property type="term" value="C:nucleoplasm"/>
    <property type="evidence" value="ECO:0000304"/>
    <property type="project" value="Reactome"/>
</dbReference>
<dbReference type="GO" id="GO:0000786">
    <property type="term" value="C:nucleosome"/>
    <property type="evidence" value="ECO:0000314"/>
    <property type="project" value="UniProtKB"/>
</dbReference>
<dbReference type="GO" id="GO:0005634">
    <property type="term" value="C:nucleus"/>
    <property type="evidence" value="ECO:0000314"/>
    <property type="project" value="UniProtKB"/>
</dbReference>
<dbReference type="GO" id="GO:0032991">
    <property type="term" value="C:protein-containing complex"/>
    <property type="evidence" value="ECO:0000314"/>
    <property type="project" value="UniProtKB"/>
</dbReference>
<dbReference type="GO" id="GO:0003677">
    <property type="term" value="F:DNA binding"/>
    <property type="evidence" value="ECO:0000318"/>
    <property type="project" value="GO_Central"/>
</dbReference>
<dbReference type="GO" id="GO:0046982">
    <property type="term" value="F:protein heterodimerization activity"/>
    <property type="evidence" value="ECO:0007669"/>
    <property type="project" value="InterPro"/>
</dbReference>
<dbReference type="GO" id="GO:0003723">
    <property type="term" value="F:RNA binding"/>
    <property type="evidence" value="ECO:0007005"/>
    <property type="project" value="UniProtKB"/>
</dbReference>
<dbReference type="GO" id="GO:0030527">
    <property type="term" value="F:structural constituent of chromatin"/>
    <property type="evidence" value="ECO:0000314"/>
    <property type="project" value="GO_Central"/>
</dbReference>
<dbReference type="GO" id="GO:0006325">
    <property type="term" value="P:chromatin organization"/>
    <property type="evidence" value="ECO:0000303"/>
    <property type="project" value="ComplexPortal"/>
</dbReference>
<dbReference type="GO" id="GO:0045653">
    <property type="term" value="P:negative regulation of megakaryocyte differentiation"/>
    <property type="evidence" value="ECO:0000314"/>
    <property type="project" value="UniProtKB"/>
</dbReference>
<dbReference type="GO" id="GO:0006334">
    <property type="term" value="P:nucleosome assembly"/>
    <property type="evidence" value="ECO:0000314"/>
    <property type="project" value="UniProtKB"/>
</dbReference>
<dbReference type="GO" id="GO:0061644">
    <property type="term" value="P:protein localization to CENP-A containing chromatin"/>
    <property type="evidence" value="ECO:0000303"/>
    <property type="project" value="ComplexPortal"/>
</dbReference>
<dbReference type="GO" id="GO:0032200">
    <property type="term" value="P:telomere organization"/>
    <property type="evidence" value="ECO:0000304"/>
    <property type="project" value="BHF-UCL"/>
</dbReference>
<dbReference type="CDD" id="cd22912">
    <property type="entry name" value="HFD_H4"/>
    <property type="match status" value="1"/>
</dbReference>
<dbReference type="DisProt" id="DP02034"/>
<dbReference type="FunFam" id="1.10.20.10:FF:000002">
    <property type="entry name" value="Histone H4"/>
    <property type="match status" value="1"/>
</dbReference>
<dbReference type="Gene3D" id="1.10.20.10">
    <property type="entry name" value="Histone, subunit A"/>
    <property type="match status" value="1"/>
</dbReference>
<dbReference type="IDEAL" id="IID00058"/>
<dbReference type="InterPro" id="IPR035425">
    <property type="entry name" value="CENP-T/H4_C"/>
</dbReference>
<dbReference type="InterPro" id="IPR009072">
    <property type="entry name" value="Histone-fold"/>
</dbReference>
<dbReference type="InterPro" id="IPR001951">
    <property type="entry name" value="Histone_H4"/>
</dbReference>
<dbReference type="InterPro" id="IPR019809">
    <property type="entry name" value="Histone_H4_CS"/>
</dbReference>
<dbReference type="InterPro" id="IPR004823">
    <property type="entry name" value="TAF_TATA-bd_Histone-like_dom"/>
</dbReference>
<dbReference type="PANTHER" id="PTHR10484">
    <property type="entry name" value="HISTONE H4"/>
    <property type="match status" value="1"/>
</dbReference>
<dbReference type="Pfam" id="PF15511">
    <property type="entry name" value="CENP-T_C"/>
    <property type="match status" value="1"/>
</dbReference>
<dbReference type="PRINTS" id="PR00623">
    <property type="entry name" value="HISTONEH4"/>
</dbReference>
<dbReference type="SMART" id="SM00417">
    <property type="entry name" value="H4"/>
    <property type="match status" value="1"/>
</dbReference>
<dbReference type="SMART" id="SM00803">
    <property type="entry name" value="TAF"/>
    <property type="match status" value="1"/>
</dbReference>
<dbReference type="SUPFAM" id="SSF47113">
    <property type="entry name" value="Histone-fold"/>
    <property type="match status" value="1"/>
</dbReference>
<dbReference type="PROSITE" id="PS00047">
    <property type="entry name" value="HISTONE_H4"/>
    <property type="match status" value="1"/>
</dbReference>
<feature type="initiator methionine" description="Removed" evidence="14">
    <location>
        <position position="1"/>
    </location>
</feature>
<feature type="chain" id="PRO_0000158320" description="Histone H4">
    <location>
        <begin position="2"/>
        <end position="103"/>
    </location>
</feature>
<feature type="DNA-binding region">
    <location>
        <begin position="17"/>
        <end position="21"/>
    </location>
</feature>
<feature type="region of interest" description="Disordered" evidence="2">
    <location>
        <begin position="1"/>
        <end position="20"/>
    </location>
</feature>
<feature type="compositionally biased region" description="Gly residues" evidence="2">
    <location>
        <begin position="1"/>
        <end position="14"/>
    </location>
</feature>
<feature type="modified residue" description="N-acetylserine" evidence="14">
    <location>
        <position position="2"/>
    </location>
</feature>
<feature type="modified residue" description="Phosphoserine" evidence="14">
    <location>
        <position position="2"/>
    </location>
</feature>
<feature type="modified residue" description="Asymmetric dimethylarginine; by PRMT1; alternate" evidence="3 4 8">
    <location>
        <position position="4"/>
    </location>
</feature>
<feature type="modified residue" description="Citrulline; alternate" evidence="8 10">
    <location>
        <position position="4"/>
    </location>
</feature>
<feature type="modified residue" description="Omega-N-methylarginine; by PRMT1; alternate" evidence="3 4 8">
    <location>
        <position position="4"/>
    </location>
</feature>
<feature type="modified residue" description="Symmetric dimethylarginine; by PRMT5 and PRMT7; alternate" evidence="1">
    <location>
        <position position="4"/>
    </location>
</feature>
<feature type="modified residue" description="N6-(2-hydroxyisobutyryl)lysine; alternate" evidence="20">
    <location>
        <position position="6"/>
    </location>
</feature>
<feature type="modified residue" description="N6-acetyl-N6-methyllysine; alternate" evidence="35">
    <location>
        <position position="6"/>
    </location>
</feature>
<feature type="modified residue" description="N6-acetyllysine; alternate" evidence="21 36 59">
    <location>
        <position position="6"/>
    </location>
</feature>
<feature type="modified residue" description="N6-butyryllysine; alternate" evidence="22">
    <location>
        <position position="6"/>
    </location>
</feature>
<feature type="modified residue" description="N6-crotonyllysine; alternate" evidence="17">
    <location>
        <position position="6"/>
    </location>
</feature>
<feature type="modified residue" description="N6-glutaryllysine; alternate" evidence="29">
    <location>
        <position position="6"/>
    </location>
</feature>
<feature type="modified residue" description="N6-lactoyllysine; alternate" evidence="30">
    <location>
        <position position="6"/>
    </location>
</feature>
<feature type="modified residue" description="N6-(2-hydroxyisobutyryl)lysine; alternate" evidence="20">
    <location>
        <position position="9"/>
    </location>
</feature>
<feature type="modified residue" description="N6-(beta-hydroxybutyryl)lysine; alternate" evidence="23">
    <location>
        <position position="9"/>
    </location>
</feature>
<feature type="modified residue" description="N6-acetyllysine; alternate" evidence="21 36 59">
    <location>
        <position position="9"/>
    </location>
</feature>
<feature type="modified residue" description="N6-butyryllysine; alternate" evidence="13 22">
    <location>
        <position position="9"/>
    </location>
</feature>
<feature type="modified residue" description="N6-crotonyllysine; alternate" evidence="17 25">
    <location>
        <position position="9"/>
    </location>
</feature>
<feature type="modified residue" description="N6-lactoyllysine; alternate" evidence="30">
    <location>
        <position position="9"/>
    </location>
</feature>
<feature type="modified residue" description="N6-propionyllysine; alternate" evidence="13">
    <location>
        <position position="9"/>
    </location>
</feature>
<feature type="modified residue" description="N6-(2-hydroxyisobutyryl)lysine; alternate" evidence="20">
    <location>
        <position position="13"/>
    </location>
</feature>
<feature type="modified residue" description="N6-(beta-hydroxybutyryl)lysine; alternate" evidence="23">
    <location>
        <position position="13"/>
    </location>
</feature>
<feature type="modified residue" description="N6-acetyl-N6-methyllysine; alternate" evidence="35">
    <location>
        <position position="13"/>
    </location>
</feature>
<feature type="modified residue" description="N6-acetyllysine; alternate" evidence="14 21 36 59">
    <location>
        <position position="13"/>
    </location>
</feature>
<feature type="modified residue" description="N6-butyryllysine; alternate" evidence="22">
    <location>
        <position position="13"/>
    </location>
</feature>
<feature type="modified residue" description="N6-crotonyllysine; alternate" evidence="17 25">
    <location>
        <position position="13"/>
    </location>
</feature>
<feature type="modified residue" description="N6-glutaryllysine; alternate" evidence="29">
    <location>
        <position position="13"/>
    </location>
</feature>
<feature type="modified residue" description="N6-lactoyllysine; alternate" evidence="30">
    <location>
        <position position="13"/>
    </location>
</feature>
<feature type="modified residue" description="N6-methyllysine; alternate" evidence="28">
    <location>
        <position position="13"/>
    </location>
</feature>
<feature type="modified residue" description="N6-succinyllysine; alternate" evidence="19">
    <location>
        <position position="13"/>
    </location>
</feature>
<feature type="modified residue" description="N6-(2-hydroxyisobutyryl)lysine; alternate" evidence="20">
    <location>
        <position position="17"/>
    </location>
</feature>
<feature type="modified residue" description="N6-acetyllysine; alternate" evidence="14 21 36 59">
    <location>
        <position position="17"/>
    </location>
</feature>
<feature type="modified residue" description="N6-butyryllysine; alternate" evidence="13 22">
    <location>
        <position position="17"/>
    </location>
</feature>
<feature type="modified residue" description="N6-crotonyllysine; alternate" evidence="1">
    <location>
        <position position="17"/>
    </location>
</feature>
<feature type="modified residue" description="N6-lactoyllysine; alternate" evidence="30 34">
    <location>
        <position position="17"/>
    </location>
</feature>
<feature type="modified residue" description="N6-propionyllysine; alternate" evidence="13">
    <location>
        <position position="17"/>
    </location>
</feature>
<feature type="modified residue" description="N6,N6,N6-trimethyllysine; alternate" evidence="5 9 14">
    <location>
        <position position="21"/>
    </location>
</feature>
<feature type="modified residue" description="N6,N6-dimethyllysine; alternate" evidence="5 9 14">
    <location>
        <position position="21"/>
    </location>
</feature>
<feature type="modified residue" description="N6-methyllysine; alternate" evidence="5 9 14 24">
    <location>
        <position position="21"/>
    </location>
</feature>
<feature type="modified residue" description="N6-(2-hydroxyisobutyryl)lysine; alternate" evidence="20">
    <location>
        <position position="32"/>
    </location>
</feature>
<feature type="modified residue" description="N6-(beta-hydroxybutyryl)lysine; alternate" evidence="23">
    <location>
        <position position="32"/>
    </location>
</feature>
<feature type="modified residue" description="N6-acetyllysine; alternate" evidence="59">
    <location>
        <position position="32"/>
    </location>
</feature>
<feature type="modified residue" description="N6-butyryllysine; alternate" evidence="13">
    <location>
        <position position="32"/>
    </location>
</feature>
<feature type="modified residue" description="N6-glutaryllysine; alternate" evidence="29">
    <location>
        <position position="32"/>
    </location>
</feature>
<feature type="modified residue" description="N6-lactoyllysine; alternate" evidence="30">
    <location>
        <position position="32"/>
    </location>
</feature>
<feature type="modified residue" description="N6-propionyllysine; alternate" evidence="13">
    <location>
        <position position="32"/>
    </location>
</feature>
<feature type="modified residue" description="N6-succinyllysine; alternate" evidence="19">
    <location>
        <position position="32"/>
    </location>
</feature>
<feature type="modified residue" description="N6-(2-hydroxyisobutyryl)lysine; alternate" evidence="20">
    <location>
        <position position="45"/>
    </location>
</feature>
<feature type="modified residue" description="N6-butyryllysine; alternate" evidence="13">
    <location>
        <position position="45"/>
    </location>
</feature>
<feature type="modified residue" description="N6-propionyllysine; alternate" evidence="13">
    <location>
        <position position="45"/>
    </location>
</feature>
<feature type="modified residue" description="Phosphoserine; by PAK2" evidence="16 57 58 60 61 62 63 64">
    <location>
        <position position="48"/>
    </location>
</feature>
<feature type="modified residue" description="Phosphotyrosine" evidence="56 61">
    <location>
        <position position="52"/>
    </location>
</feature>
<feature type="modified residue" description="N6-(2-hydroxyisobutyryl)lysine; alternate" evidence="20">
    <location>
        <position position="60"/>
    </location>
</feature>
<feature type="modified residue" description="N6-glutaryllysine; alternate" evidence="29">
    <location>
        <position position="60"/>
    </location>
</feature>
<feature type="modified residue" description="N6-(2-hydroxyisobutyryl)lysine; alternate" evidence="20">
    <location>
        <position position="78"/>
    </location>
</feature>
<feature type="modified residue" description="N6-(beta-hydroxybutyryl)lysine; alternate" evidence="23">
    <location>
        <position position="78"/>
    </location>
</feature>
<feature type="modified residue" description="N6-butyryllysine; alternate" evidence="13">
    <location>
        <position position="78"/>
    </location>
</feature>
<feature type="modified residue" description="N6-glutaryllysine; alternate" evidence="29">
    <location>
        <position position="78"/>
    </location>
</feature>
<feature type="modified residue" description="N6-lactoyllysine; alternate" evidence="30">
    <location>
        <position position="78"/>
    </location>
</feature>
<feature type="modified residue" description="N6-propionyllysine; alternate" evidence="13">
    <location>
        <position position="78"/>
    </location>
</feature>
<feature type="modified residue" description="N6-succinyllysine; alternate" evidence="19">
    <location>
        <position position="78"/>
    </location>
</feature>
<feature type="modified residue" description="N6-(2-hydroxyisobutyryl)lysine; alternate" evidence="20">
    <location>
        <position position="80"/>
    </location>
</feature>
<feature type="modified residue" description="N6-butyryllysine; alternate" evidence="13">
    <location>
        <position position="80"/>
    </location>
</feature>
<feature type="modified residue" description="N6-glutaryllysine; alternate" evidence="29">
    <location>
        <position position="80"/>
    </location>
</feature>
<feature type="modified residue" description="N6-propionyllysine; alternate" evidence="13">
    <location>
        <position position="80"/>
    </location>
</feature>
<feature type="modified residue" description="N6-succinyllysine; alternate" evidence="1">
    <location>
        <position position="80"/>
    </location>
</feature>
<feature type="modified residue" description="Phosphothreonine" evidence="1">
    <location>
        <position position="81"/>
    </location>
</feature>
<feature type="modified residue" description="Phosphotyrosine" evidence="64">
    <location>
        <position position="89"/>
    </location>
</feature>
<feature type="modified residue" description="N6-(2-hydroxyisobutyryl)lysine; alternate" evidence="20">
    <location>
        <position position="92"/>
    </location>
</feature>
<feature type="modified residue" description="N6-(beta-hydroxybutyryl)lysine; alternate" evidence="23">
    <location>
        <position position="92"/>
    </location>
</feature>
<feature type="modified residue" description="N6-acetyllysine; alternate" evidence="15">
    <location>
        <position position="92"/>
    </location>
</feature>
<feature type="modified residue" description="N6-butyryllysine; alternate" evidence="13">
    <location>
        <position position="92"/>
    </location>
</feature>
<feature type="modified residue" description="N6-glutaryllysine; alternate" evidence="29">
    <location>
        <position position="92"/>
    </location>
</feature>
<feature type="modified residue" description="N6-lactoyllysine; alternate" evidence="30">
    <location>
        <position position="92"/>
    </location>
</feature>
<feature type="modified residue" description="N6-propionyllysine; alternate" evidence="13">
    <location>
        <position position="92"/>
    </location>
</feature>
<feature type="modified residue" description="N6-succinyllysine; alternate" evidence="19">
    <location>
        <position position="92"/>
    </location>
</feature>
<feature type="cross-link" description="Glycyl lysine isopeptide (Lys-Gly) (interchain with G-Cter in SUMO2); alternate" evidence="65">
    <location>
        <position position="13"/>
    </location>
</feature>
<feature type="cross-link" description="Glycyl lysine isopeptide (Lys-Gly) (interchain with G-Cter in SUMO2); alternate" evidence="66">
    <location>
        <position position="21"/>
    </location>
</feature>
<feature type="cross-link" description="Glycyl lysine isopeptide (Lys-Gly) (interchain with G-Cter in SUMO2); alternate" evidence="66">
    <location>
        <position position="32"/>
    </location>
</feature>
<feature type="cross-link" description="Glycyl lysine isopeptide (Lys-Gly) (interchain with G-Cter in UFM1); alternate" evidence="27">
    <location>
        <position position="32"/>
    </location>
</feature>
<feature type="cross-link" description="Glycyl lysine isopeptide (Lys-Gly) (interchain with G-Cter in SUMO2); alternate" evidence="66">
    <location>
        <position position="60"/>
    </location>
</feature>
<feature type="cross-link" description="Glycyl lysine isopeptide (Lys-Gly) (interchain with G-Cter in SUMO2); alternate" evidence="66">
    <location>
        <position position="80"/>
    </location>
</feature>
<feature type="cross-link" description="Glycyl lysine isopeptide (Lys-Gly) (interchain with G-Cter in SUMO2); alternate" evidence="66">
    <location>
        <position position="92"/>
    </location>
</feature>
<feature type="cross-link" description="Glycyl lysine isopeptide (Lys-Gly) (interchain with G-Cter in ubiquitin); alternate" evidence="15">
    <location>
        <position position="92"/>
    </location>
</feature>
<feature type="sequence variant" id="VAR_086990" description="In TEBIVANED3; results in early developmental defects when expressed in zebrafish embryos." evidence="33">
    <original>K</original>
    <variation>T</variation>
    <location>
        <position position="32"/>
    </location>
</feature>
<feature type="sequence variant" id="VAR_086991" description="In TEBIVANED1." evidence="33">
    <original>P</original>
    <variation>A</variation>
    <location>
        <position position="33"/>
    </location>
</feature>
<feature type="sequence variant" id="VAR_086992" description="In TEBIVANED1." evidence="33">
    <original>P</original>
    <variation>L</variation>
    <location>
        <position position="33"/>
    </location>
</feature>
<feature type="sequence variant" id="VAR_086993" description="In TEBIVANED3; results in early developmental defects when expressed in zebrafish embryos." evidence="33">
    <original>P</original>
    <variation>R</variation>
    <location>
        <position position="33"/>
    </location>
</feature>
<feature type="sequence variant" id="VAR_086994" description="In TEBIVANED3; results in early developmental defects when expressed in zebrafish embryos." evidence="33">
    <original>R</original>
    <variation>W</variation>
    <location>
        <position position="36"/>
    </location>
</feature>
<feature type="sequence variant" id="VAR_086995" description="In TEBIVANED3; results in early developmental defects when expressed in zebrafish embryos." evidence="33">
    <original>L</original>
    <variation>P</variation>
    <location>
        <position position="38"/>
    </location>
</feature>
<feature type="sequence variant" id="VAR_086996" description="In TEBIVANED2 and TEBIVANED3; uncertain significance; does not affect early development when expressed in zebrafish embryos." evidence="33">
    <original>R</original>
    <variation>C</variation>
    <location>
        <position position="41"/>
    </location>
</feature>
<feature type="sequence variant" id="VAR_086997" description="Found in a patient with a neurodevelopmental disorder; uncertain significance; results in early developmental defects when expressed in zebrafish embryos." evidence="33">
    <original>R</original>
    <variation>H</variation>
    <location>
        <position position="41"/>
    </location>
</feature>
<feature type="sequence variant" id="VAR_086998" description="In TEBIVANED4; results in early developmental defects when expressed in zebrafish embryos." evidence="33">
    <original>R</original>
    <variation>L</variation>
    <location>
        <position position="41"/>
    </location>
</feature>
<feature type="sequence variant" id="VAR_086999" description="In TEBIVANED3." evidence="33">
    <original>R</original>
    <variation>C</variation>
    <location>
        <position position="46"/>
    </location>
</feature>
<feature type="sequence variant" id="VAR_036206" description="In a breast cancer sample; somatic mutation; dbSNP:rs747622981." evidence="12">
    <original>E</original>
    <variation>Q</variation>
    <location>
        <position position="64"/>
    </location>
</feature>
<feature type="sequence variant" id="VAR_087000" description="In TEBIVANED4; results in severe early developmental defects when expressed in zebrafish embryos." evidence="33">
    <original>H</original>
    <variation>R</variation>
    <location>
        <position position="76"/>
    </location>
</feature>
<feature type="sequence variant" id="VAR_087001" description="In TEBIVANED2; results in severe early developmental defects when expressed in zebrafish embryos." evidence="31">
    <original>K</original>
    <variation>E</variation>
    <location>
        <position position="92"/>
    </location>
</feature>
<feature type="sequence variant" id="VAR_087002" description="In TEBIVANED1; results in severe early developmental defects when expressed in zebrafish embryos; results in defective cell cycle progression when expressed in zebrafish embryos." evidence="26 33">
    <original>K</original>
    <variation>Q</variation>
    <location>
        <position position="92"/>
    </location>
</feature>
<feature type="sequence variant" id="VAR_087003" description="In TEBIVANED1; results in severe early developmental defects when expressed in zebrafish embryos; results in defective cell cycle progression when expressed in zebrafish embryos." evidence="26">
    <original>K</original>
    <variation>R</variation>
    <location>
        <position position="92"/>
    </location>
</feature>
<feature type="sequence variant" id="VAR_087004" description="Found in a patient with a neurodevelopmental disorder; uncertain significance." evidence="33">
    <original>G</original>
    <variation>R</variation>
    <location>
        <position position="95"/>
    </location>
</feature>
<feature type="sequence variant" id="VAR_087005" description="In TEBIVANED3; results in early developmental defects when expressed in zebrafish embryos." evidence="33">
    <original>Y</original>
    <variation>H</variation>
    <location>
        <position position="99"/>
    </location>
</feature>
<feature type="mutagenesis site" description="Impaired methylation by N6AMT1." evidence="28">
    <original>K</original>
    <variation>A</variation>
    <location>
        <position position="13"/>
    </location>
</feature>
<feature type="mutagenesis site" description="Abolished ufmylation." evidence="27">
    <original>K</original>
    <variation>R</variation>
    <location>
        <position position="32"/>
    </location>
</feature>
<feature type="sequence conflict" description="In Ref. 14; AAH67496." evidence="37" ref="14">
    <original>V</original>
    <variation>A</variation>
    <location>
        <position position="71"/>
    </location>
</feature>
<feature type="sequence conflict" description="In Ref. 11; CAG46986." evidence="37" ref="11">
    <original>A</original>
    <variation>P</variation>
    <location>
        <position position="77"/>
    </location>
</feature>
<feature type="turn" evidence="69">
    <location>
        <begin position="7"/>
        <end position="10"/>
    </location>
</feature>
<feature type="strand" evidence="71">
    <location>
        <begin position="16"/>
        <end position="18"/>
    </location>
</feature>
<feature type="strand" evidence="67">
    <location>
        <begin position="21"/>
        <end position="23"/>
    </location>
</feature>
<feature type="helix" evidence="72">
    <location>
        <begin position="26"/>
        <end position="29"/>
    </location>
</feature>
<feature type="helix" evidence="72">
    <location>
        <begin position="32"/>
        <end position="41"/>
    </location>
</feature>
<feature type="strand" evidence="70">
    <location>
        <begin position="45"/>
        <end position="47"/>
    </location>
</feature>
<feature type="helix" evidence="72">
    <location>
        <begin position="51"/>
        <end position="76"/>
    </location>
</feature>
<feature type="strand" evidence="72">
    <location>
        <begin position="79"/>
        <end position="82"/>
    </location>
</feature>
<feature type="helix" evidence="72">
    <location>
        <begin position="84"/>
        <end position="97"/>
    </location>
</feature>
<feature type="turn" evidence="68">
    <location>
        <begin position="99"/>
        <end position="102"/>
    </location>
</feature>
<organism>
    <name type="scientific">Homo sapiens</name>
    <name type="common">Human</name>
    <dbReference type="NCBI Taxonomy" id="9606"/>
    <lineage>
        <taxon>Eukaryota</taxon>
        <taxon>Metazoa</taxon>
        <taxon>Chordata</taxon>
        <taxon>Craniata</taxon>
        <taxon>Vertebrata</taxon>
        <taxon>Euteleostomi</taxon>
        <taxon>Mammalia</taxon>
        <taxon>Eutheria</taxon>
        <taxon>Euarchontoglires</taxon>
        <taxon>Primates</taxon>
        <taxon>Haplorrhini</taxon>
        <taxon>Catarrhini</taxon>
        <taxon>Hominidae</taxon>
        <taxon>Homo</taxon>
    </lineage>
</organism>
<keyword id="KW-0002">3D-structure</keyword>
<keyword id="KW-0007">Acetylation</keyword>
<keyword id="KW-0160">Chromosomal rearrangement</keyword>
<keyword id="KW-0158">Chromosome</keyword>
<keyword id="KW-0164">Citrullination</keyword>
<keyword id="KW-0903">Direct protein sequencing</keyword>
<keyword id="KW-0225">Disease variant</keyword>
<keyword id="KW-0238">DNA-binding</keyword>
<keyword id="KW-0379">Hydroxylation</keyword>
<keyword id="KW-0991">Intellectual disability</keyword>
<keyword id="KW-1017">Isopeptide bond</keyword>
<keyword id="KW-0488">Methylation</keyword>
<keyword id="KW-0544">Nucleosome core</keyword>
<keyword id="KW-0539">Nucleus</keyword>
<keyword id="KW-0597">Phosphoprotein</keyword>
<keyword id="KW-1267">Proteomics identification</keyword>
<keyword id="KW-1185">Reference proteome</keyword>
<keyword id="KW-0832">Ubl conjugation</keyword>
<evidence type="ECO:0000250" key="1">
    <source>
        <dbReference type="UniProtKB" id="P62806"/>
    </source>
</evidence>
<evidence type="ECO:0000256" key="2">
    <source>
        <dbReference type="SAM" id="MobiDB-lite"/>
    </source>
</evidence>
<evidence type="ECO:0000269" key="3">
    <source>
    </source>
</evidence>
<evidence type="ECO:0000269" key="4">
    <source>
    </source>
</evidence>
<evidence type="ECO:0000269" key="5">
    <source>
    </source>
</evidence>
<evidence type="ECO:0000269" key="6">
    <source>
    </source>
</evidence>
<evidence type="ECO:0000269" key="7">
    <source>
    </source>
</evidence>
<evidence type="ECO:0000269" key="8">
    <source>
    </source>
</evidence>
<evidence type="ECO:0000269" key="9">
    <source>
    </source>
</evidence>
<evidence type="ECO:0000269" key="10">
    <source>
    </source>
</evidence>
<evidence type="ECO:0000269" key="11">
    <source>
    </source>
</evidence>
<evidence type="ECO:0000269" key="12">
    <source>
    </source>
</evidence>
<evidence type="ECO:0000269" key="13">
    <source>
    </source>
</evidence>
<evidence type="ECO:0000269" key="14">
    <source>
    </source>
</evidence>
<evidence type="ECO:0000269" key="15">
    <source>
    </source>
</evidence>
<evidence type="ECO:0000269" key="16">
    <source>
    </source>
</evidence>
<evidence type="ECO:0000269" key="17">
    <source>
    </source>
</evidence>
<evidence type="ECO:0000269" key="18">
    <source>
    </source>
</evidence>
<evidence type="ECO:0000269" key="19">
    <source>
    </source>
</evidence>
<evidence type="ECO:0000269" key="20">
    <source>
    </source>
</evidence>
<evidence type="ECO:0000269" key="21">
    <source>
    </source>
</evidence>
<evidence type="ECO:0000269" key="22">
    <source>
    </source>
</evidence>
<evidence type="ECO:0000269" key="23">
    <source>
    </source>
</evidence>
<evidence type="ECO:0000269" key="24">
    <source>
    </source>
</evidence>
<evidence type="ECO:0000269" key="25">
    <source>
    </source>
</evidence>
<evidence type="ECO:0000269" key="26">
    <source>
    </source>
</evidence>
<evidence type="ECO:0000269" key="27">
    <source>
    </source>
</evidence>
<evidence type="ECO:0000269" key="28">
    <source>
    </source>
</evidence>
<evidence type="ECO:0000269" key="29">
    <source>
    </source>
</evidence>
<evidence type="ECO:0000269" key="30">
    <source>
    </source>
</evidence>
<evidence type="ECO:0000269" key="31">
    <source>
    </source>
</evidence>
<evidence type="ECO:0000269" key="32">
    <source>
    </source>
</evidence>
<evidence type="ECO:0000269" key="33">
    <source>
    </source>
</evidence>
<evidence type="ECO:0000269" key="34">
    <source>
    </source>
</evidence>
<evidence type="ECO:0000269" key="35">
    <source>
    </source>
</evidence>
<evidence type="ECO:0000269" key="36">
    <source>
    </source>
</evidence>
<evidence type="ECO:0000305" key="37"/>
<evidence type="ECO:0007744" key="38">
    <source>
        <dbReference type="PDB" id="5AY8"/>
    </source>
</evidence>
<evidence type="ECO:0007744" key="39">
    <source>
        <dbReference type="PDB" id="5JA4"/>
    </source>
</evidence>
<evidence type="ECO:0007744" key="40">
    <source>
        <dbReference type="PDB" id="6USJ"/>
    </source>
</evidence>
<evidence type="ECO:0007744" key="41">
    <source>
        <dbReference type="PDB" id="6X59"/>
    </source>
</evidence>
<evidence type="ECO:0007744" key="42">
    <source>
        <dbReference type="PDB" id="6X5A"/>
    </source>
</evidence>
<evidence type="ECO:0007744" key="43">
    <source>
        <dbReference type="PDB" id="6XJD"/>
    </source>
</evidence>
<evidence type="ECO:0007744" key="44">
    <source>
        <dbReference type="PDB" id="6Y5D"/>
    </source>
</evidence>
<evidence type="ECO:0007744" key="45">
    <source>
        <dbReference type="PDB" id="7A08"/>
    </source>
</evidence>
<evidence type="ECO:0007744" key="46">
    <source>
        <dbReference type="PDB" id="7C0M"/>
    </source>
</evidence>
<evidence type="ECO:0007744" key="47">
    <source>
        <dbReference type="PDB" id="7CCQ"/>
    </source>
</evidence>
<evidence type="ECO:0007744" key="48">
    <source>
        <dbReference type="PDB" id="7CCR"/>
    </source>
</evidence>
<evidence type="ECO:0007744" key="49">
    <source>
        <dbReference type="PDB" id="7CIZ"/>
    </source>
</evidence>
<evidence type="ECO:0007744" key="50">
    <source>
        <dbReference type="PDB" id="7CJ0"/>
    </source>
</evidence>
<evidence type="ECO:0007744" key="51">
    <source>
        <dbReference type="PDB" id="7JO9"/>
    </source>
</evidence>
<evidence type="ECO:0007744" key="52">
    <source>
        <dbReference type="PDB" id="7JOA"/>
    </source>
</evidence>
<evidence type="ECO:0007744" key="53">
    <source>
        <dbReference type="PDB" id="7TAN"/>
    </source>
</evidence>
<evidence type="ECO:0007744" key="54">
    <source>
        <dbReference type="PDB" id="8HLW"/>
    </source>
</evidence>
<evidence type="ECO:0007744" key="55">
    <source>
        <dbReference type="PDB" id="8SB6"/>
    </source>
</evidence>
<evidence type="ECO:0007744" key="56">
    <source>
    </source>
</evidence>
<evidence type="ECO:0007744" key="57">
    <source>
    </source>
</evidence>
<evidence type="ECO:0007744" key="58">
    <source>
    </source>
</evidence>
<evidence type="ECO:0007744" key="59">
    <source>
    </source>
</evidence>
<evidence type="ECO:0007744" key="60">
    <source>
    </source>
</evidence>
<evidence type="ECO:0007744" key="61">
    <source>
    </source>
</evidence>
<evidence type="ECO:0007744" key="62">
    <source>
    </source>
</evidence>
<evidence type="ECO:0007744" key="63">
    <source>
    </source>
</evidence>
<evidence type="ECO:0007744" key="64">
    <source>
    </source>
</evidence>
<evidence type="ECO:0007744" key="65">
    <source>
    </source>
</evidence>
<evidence type="ECO:0007744" key="66">
    <source>
    </source>
</evidence>
<evidence type="ECO:0007829" key="67">
    <source>
        <dbReference type="PDB" id="3F9X"/>
    </source>
</evidence>
<evidence type="ECO:0007829" key="68">
    <source>
        <dbReference type="PDB" id="4H9O"/>
    </source>
</evidence>
<evidence type="ECO:0007829" key="69">
    <source>
        <dbReference type="PDB" id="4YYM"/>
    </source>
</evidence>
<evidence type="ECO:0007829" key="70">
    <source>
        <dbReference type="PDB" id="6KE9"/>
    </source>
</evidence>
<evidence type="ECO:0007829" key="71">
    <source>
        <dbReference type="PDB" id="6MLC"/>
    </source>
</evidence>
<evidence type="ECO:0007829" key="72">
    <source>
        <dbReference type="PDB" id="7CIZ"/>
    </source>
</evidence>
<accession>P62805</accession>
<accession>A2VCL0</accession>
<accession>P02304</accession>
<accession>P02305</accession>
<accession>Q6DRA9</accession>
<accession>Q6FGB8</accession>
<accession>Q6NWP7</accession>
<reference key="1">
    <citation type="journal article" date="1983" name="Nucleic Acids Res.">
        <title>Structure and in vitro transcription of a human H4 histone gene.</title>
        <authorList>
            <person name="Sierra F."/>
            <person name="Stein G."/>
            <person name="Stein J."/>
        </authorList>
    </citation>
    <scope>NUCLEOTIDE SEQUENCE [GENOMIC DNA]</scope>
</reference>
<reference key="2">
    <citation type="journal article" date="1987" name="Science">
        <title>Protein-DNA interactions in vivo upstream of a cell cycle-regulated human H4 histone gene.</title>
        <authorList>
            <person name="Pauli U."/>
            <person name="Chrysogelos S."/>
            <person name="Stein G."/>
            <person name="Stein J."/>
            <person name="Nick H."/>
        </authorList>
    </citation>
    <scope>NUCLEOTIDE SEQUENCE [GENOMIC DNA]</scope>
</reference>
<reference key="3">
    <citation type="journal article" date="1991" name="Genomics">
        <title>Isolation and characterization of two human H1 histone genes within clusters of core histone genes.</title>
        <authorList>
            <person name="Albig W."/>
            <person name="Kardalinou E."/>
            <person name="Drabent B."/>
            <person name="Zimmer A."/>
            <person name="Doenecke D."/>
        </authorList>
    </citation>
    <scope>NUCLEOTIDE SEQUENCE [GENOMIC DNA]</scope>
    <source>
        <tissue>Placenta</tissue>
    </source>
</reference>
<reference key="4">
    <citation type="journal article" date="1995" name="DNA Cell Biol.">
        <title>Association of histone H4 genes with the mammalian testis-specific H1t histone gene.</title>
        <authorList>
            <person name="Drabent B."/>
            <person name="Kardalinou E."/>
            <person name="Bode C."/>
            <person name="Doenecke D."/>
        </authorList>
    </citation>
    <scope>NUCLEOTIDE SEQUENCE [GENOMIC DNA]</scope>
</reference>
<reference key="5">
    <citation type="journal article" date="1997" name="Gene">
        <title>Characterization of the H1.5 gene completes the set of human H1 subtype genes.</title>
        <authorList>
            <person name="Albig W."/>
            <person name="Meergans T."/>
            <person name="Doenecke D."/>
        </authorList>
    </citation>
    <scope>NUCLEOTIDE SEQUENCE [GENOMIC DNA]</scope>
</reference>
<reference key="6">
    <citation type="journal article" date="1997" name="Hum. Genet.">
        <title>The human histone gene cluster at the D6S105 locus.</title>
        <authorList>
            <person name="Albig W."/>
            <person name="Doenecke D."/>
        </authorList>
    </citation>
    <scope>NUCLEOTIDE SEQUENCE [GENOMIC DNA]</scope>
</reference>
<reference key="7">
    <citation type="journal article" date="1997" name="Genomics">
        <title>Human histone gene organization: nonregular arrangement within a large cluster.</title>
        <authorList>
            <person name="Albig W."/>
            <person name="Kioschis P."/>
            <person name="Poustka A."/>
            <person name="Meergans K."/>
            <person name="Doenecke D."/>
        </authorList>
    </citation>
    <scope>NUCLEOTIDE SEQUENCE [GENOMIC DNA]</scope>
</reference>
<reference key="8">
    <citation type="journal article" date="2002" name="Genomics">
        <title>The human and mouse replication-dependent histone genes.</title>
        <authorList>
            <person name="Marzluff W.F."/>
            <person name="Gongidi P."/>
            <person name="Woods K.R."/>
            <person name="Jin J."/>
            <person name="Maltais L.J."/>
        </authorList>
    </citation>
    <scope>NUCLEOTIDE SEQUENCE [GENOMIC DNA] (H4C1; H4C2; H4C3; H4C4; H4C5; H4C6; H4C8; H4C9; H4C11; H4C12; H4C13; H4C14 AND H4C16)</scope>
</reference>
<reference key="9">
    <citation type="journal article" date="1997" name="Cancer Res.">
        <title>A recurring translocation, t(3;6)(q27;p21), in non-Hodgkin's lymphoma results in replacement of the 5' regulatory region of BCL6 with a novel H4 histone gene.</title>
        <authorList>
            <person name="Akasaka T."/>
            <person name="Miura I."/>
            <person name="Takahashi N."/>
            <person name="Akasaka H."/>
            <person name="Yonetani N."/>
            <person name="Ohno H."/>
            <person name="Fukuhara S."/>
            <person name="Okuma M."/>
        </authorList>
    </citation>
    <scope>NUCLEOTIDE SEQUENCE [GENOMIC DNA]</scope>
</reference>
<reference key="10">
    <citation type="journal article" date="2004" name="Gene">
        <title>Functional characterization of a human histone gene cluster duplication.</title>
        <authorList>
            <person name="Braastad C.D."/>
            <person name="Hovhannisyan H."/>
            <person name="van Wijnen A.J."/>
            <person name="Stein J.L."/>
            <person name="Stein G.S."/>
        </authorList>
    </citation>
    <scope>NUCLEOTIDE SEQUENCE [GENOMIC DNA]</scope>
</reference>
<reference key="11">
    <citation type="submission" date="2004-06" db="EMBL/GenBank/DDBJ databases">
        <title>Cloning of human full open reading frames in Gateway(TM) system entry vector (pDONR201).</title>
        <authorList>
            <person name="Halleck A."/>
            <person name="Ebert L."/>
            <person name="Mkoundinya M."/>
            <person name="Schick M."/>
            <person name="Eisenstein S."/>
            <person name="Neubert P."/>
            <person name="Kstrang K."/>
            <person name="Schatten R."/>
            <person name="Shen B."/>
            <person name="Henze S."/>
            <person name="Mar W."/>
            <person name="Korn B."/>
            <person name="Zuo D."/>
            <person name="Hu Y."/>
            <person name="LaBaer J."/>
        </authorList>
    </citation>
    <scope>NUCLEOTIDE SEQUENCE [LARGE SCALE MRNA] (H4C6; H4C8 AND H4C14)</scope>
</reference>
<reference key="12">
    <citation type="journal article" date="2003" name="Nature">
        <title>The DNA sequence and analysis of human chromosome 6.</title>
        <authorList>
            <person name="Mungall A.J."/>
            <person name="Palmer S.A."/>
            <person name="Sims S.K."/>
            <person name="Edwards C.A."/>
            <person name="Ashurst J.L."/>
            <person name="Wilming L."/>
            <person name="Jones M.C."/>
            <person name="Horton R."/>
            <person name="Hunt S.E."/>
            <person name="Scott C.E."/>
            <person name="Gilbert J.G.R."/>
            <person name="Clamp M.E."/>
            <person name="Bethel G."/>
            <person name="Milne S."/>
            <person name="Ainscough R."/>
            <person name="Almeida J.P."/>
            <person name="Ambrose K.D."/>
            <person name="Andrews T.D."/>
            <person name="Ashwell R.I.S."/>
            <person name="Babbage A.K."/>
            <person name="Bagguley C.L."/>
            <person name="Bailey J."/>
            <person name="Banerjee R."/>
            <person name="Barker D.J."/>
            <person name="Barlow K.F."/>
            <person name="Bates K."/>
            <person name="Beare D.M."/>
            <person name="Beasley H."/>
            <person name="Beasley O."/>
            <person name="Bird C.P."/>
            <person name="Blakey S.E."/>
            <person name="Bray-Allen S."/>
            <person name="Brook J."/>
            <person name="Brown A.J."/>
            <person name="Brown J.Y."/>
            <person name="Burford D.C."/>
            <person name="Burrill W."/>
            <person name="Burton J."/>
            <person name="Carder C."/>
            <person name="Carter N.P."/>
            <person name="Chapman J.C."/>
            <person name="Clark S.Y."/>
            <person name="Clark G."/>
            <person name="Clee C.M."/>
            <person name="Clegg S."/>
            <person name="Cobley V."/>
            <person name="Collier R.E."/>
            <person name="Collins J.E."/>
            <person name="Colman L.K."/>
            <person name="Corby N.R."/>
            <person name="Coville G.J."/>
            <person name="Culley K.M."/>
            <person name="Dhami P."/>
            <person name="Davies J."/>
            <person name="Dunn M."/>
            <person name="Earthrowl M.E."/>
            <person name="Ellington A.E."/>
            <person name="Evans K.A."/>
            <person name="Faulkner L."/>
            <person name="Francis M.D."/>
            <person name="Frankish A."/>
            <person name="Frankland J."/>
            <person name="French L."/>
            <person name="Garner P."/>
            <person name="Garnett J."/>
            <person name="Ghori M.J."/>
            <person name="Gilby L.M."/>
            <person name="Gillson C.J."/>
            <person name="Glithero R.J."/>
            <person name="Grafham D.V."/>
            <person name="Grant M."/>
            <person name="Gribble S."/>
            <person name="Griffiths C."/>
            <person name="Griffiths M.N.D."/>
            <person name="Hall R."/>
            <person name="Halls K.S."/>
            <person name="Hammond S."/>
            <person name="Harley J.L."/>
            <person name="Hart E.A."/>
            <person name="Heath P.D."/>
            <person name="Heathcott R."/>
            <person name="Holmes S.J."/>
            <person name="Howden P.J."/>
            <person name="Howe K.L."/>
            <person name="Howell G.R."/>
            <person name="Huckle E."/>
            <person name="Humphray S.J."/>
            <person name="Humphries M.D."/>
            <person name="Hunt A.R."/>
            <person name="Johnson C.M."/>
            <person name="Joy A.A."/>
            <person name="Kay M."/>
            <person name="Keenan S.J."/>
            <person name="Kimberley A.M."/>
            <person name="King A."/>
            <person name="Laird G.K."/>
            <person name="Langford C."/>
            <person name="Lawlor S."/>
            <person name="Leongamornlert D.A."/>
            <person name="Leversha M."/>
            <person name="Lloyd C.R."/>
            <person name="Lloyd D.M."/>
            <person name="Loveland J.E."/>
            <person name="Lovell J."/>
            <person name="Martin S."/>
            <person name="Mashreghi-Mohammadi M."/>
            <person name="Maslen G.L."/>
            <person name="Matthews L."/>
            <person name="McCann O.T."/>
            <person name="McLaren S.J."/>
            <person name="McLay K."/>
            <person name="McMurray A."/>
            <person name="Moore M.J.F."/>
            <person name="Mullikin J.C."/>
            <person name="Niblett D."/>
            <person name="Nickerson T."/>
            <person name="Novik K.L."/>
            <person name="Oliver K."/>
            <person name="Overton-Larty E.K."/>
            <person name="Parker A."/>
            <person name="Patel R."/>
            <person name="Pearce A.V."/>
            <person name="Peck A.I."/>
            <person name="Phillimore B.J.C.T."/>
            <person name="Phillips S."/>
            <person name="Plumb R.W."/>
            <person name="Porter K.M."/>
            <person name="Ramsey Y."/>
            <person name="Ranby S.A."/>
            <person name="Rice C.M."/>
            <person name="Ross M.T."/>
            <person name="Searle S.M."/>
            <person name="Sehra H.K."/>
            <person name="Sheridan E."/>
            <person name="Skuce C.D."/>
            <person name="Smith S."/>
            <person name="Smith M."/>
            <person name="Spraggon L."/>
            <person name="Squares S.L."/>
            <person name="Steward C.A."/>
            <person name="Sycamore N."/>
            <person name="Tamlyn-Hall G."/>
            <person name="Tester J."/>
            <person name="Theaker A.J."/>
            <person name="Thomas D.W."/>
            <person name="Thorpe A."/>
            <person name="Tracey A."/>
            <person name="Tromans A."/>
            <person name="Tubby B."/>
            <person name="Wall M."/>
            <person name="Wallis J.M."/>
            <person name="West A.P."/>
            <person name="White S.S."/>
            <person name="Whitehead S.L."/>
            <person name="Whittaker H."/>
            <person name="Wild A."/>
            <person name="Willey D.J."/>
            <person name="Wilmer T.E."/>
            <person name="Wood J.M."/>
            <person name="Wray P.W."/>
            <person name="Wyatt J.C."/>
            <person name="Young L."/>
            <person name="Younger R.M."/>
            <person name="Bentley D.R."/>
            <person name="Coulson A."/>
            <person name="Durbin R.M."/>
            <person name="Hubbard T."/>
            <person name="Sulston J.E."/>
            <person name="Dunham I."/>
            <person name="Rogers J."/>
            <person name="Beck S."/>
        </authorList>
    </citation>
    <scope>NUCLEOTIDE SEQUENCE [LARGE SCALE GENOMIC DNA] (H4C1; H4C2; H4C3; H4C4; H4C5; H4C6; H4C8; H4C9; H4C11; H4C12 AND H4C13)</scope>
</reference>
<reference key="13">
    <citation type="submission" date="2005-07" db="EMBL/GenBank/DDBJ databases">
        <authorList>
            <person name="Mural R.J."/>
            <person name="Istrail S."/>
            <person name="Sutton G.G."/>
            <person name="Florea L."/>
            <person name="Halpern A.L."/>
            <person name="Mobarry C.M."/>
            <person name="Lippert R."/>
            <person name="Walenz B."/>
            <person name="Shatkay H."/>
            <person name="Dew I."/>
            <person name="Miller J.R."/>
            <person name="Flanigan M.J."/>
            <person name="Edwards N.J."/>
            <person name="Bolanos R."/>
            <person name="Fasulo D."/>
            <person name="Halldorsson B.V."/>
            <person name="Hannenhalli S."/>
            <person name="Turner R."/>
            <person name="Yooseph S."/>
            <person name="Lu F."/>
            <person name="Nusskern D.R."/>
            <person name="Shue B.C."/>
            <person name="Zheng X.H."/>
            <person name="Zhong F."/>
            <person name="Delcher A.L."/>
            <person name="Huson D.H."/>
            <person name="Kravitz S.A."/>
            <person name="Mouchard L."/>
            <person name="Reinert K."/>
            <person name="Remington K.A."/>
            <person name="Clark A.G."/>
            <person name="Waterman M.S."/>
            <person name="Eichler E.E."/>
            <person name="Adams M.D."/>
            <person name="Hunkapiller M.W."/>
            <person name="Myers E.W."/>
            <person name="Venter J.C."/>
        </authorList>
    </citation>
    <scope>NUCLEOTIDE SEQUENCE [LARGE SCALE GENOMIC DNA]</scope>
</reference>
<reference key="14">
    <citation type="journal article" date="2004" name="Genome Res.">
        <title>The status, quality, and expansion of the NIH full-length cDNA project: the Mammalian Gene Collection (MGC).</title>
        <authorList>
            <consortium name="The MGC Project Team"/>
        </authorList>
    </citation>
    <scope>NUCLEOTIDE SEQUENCE [LARGE SCALE MRNA]</scope>
    <source>
        <tissue>Cerebellum</tissue>
        <tissue>Eye</tissue>
        <tissue>Placenta</tissue>
    </source>
</reference>
<reference key="15">
    <citation type="submission" date="2005-03" db="UniProtKB">
        <authorList>
            <person name="Bienvenut W.V."/>
        </authorList>
    </citation>
    <scope>PROTEIN SEQUENCE OF 25-36; 47-56; 61-78 AND 81-93</scope>
    <scope>IDENTIFICATION BY MASS SPECTROMETRY</scope>
    <source>
        <tissue>B-cell lymphoma</tissue>
    </source>
</reference>
<reference key="16">
    <citation type="journal article" date="1995" name="EMBO J.">
        <title>Histone H4 acetylation distinguishes coding regions of the human genome from heterochromatin in a differentiation-dependent but transcription-independent manner.</title>
        <authorList>
            <person name="O'Neill L.P."/>
            <person name="Turner B.M."/>
        </authorList>
    </citation>
    <scope>ACETYLATION AT LYS-6; LYS-9; LYS-13 AND LYS-17</scope>
</reference>
<reference key="17">
    <citation type="journal article" date="1988" name="Nature">
        <title>A highly basic histone H4 domain bound to the sharply bent region of nucleosomal DNA.</title>
        <authorList>
            <person name="Ebralidse K.K."/>
            <person name="Grachev S.A."/>
            <person name="Mirzabekov A.D."/>
        </authorList>
    </citation>
    <scope>DNA-BINDING REGION</scope>
</reference>
<reference key="18">
    <citation type="journal article" date="1989" name="FEBS Lett.">
        <title>Histone H4 acetylation in human cells. Frequency of acetylation at different sites defined by immunolabeling with site-specific antibodies.</title>
        <authorList>
            <person name="Turner B.M."/>
            <person name="O'Neill L.P."/>
            <person name="Allan I.M."/>
        </authorList>
    </citation>
    <scope>ACETYLATION AT LYS-6; LYS-9; LYS-13 AND LYS-17</scope>
</reference>
<reference key="19">
    <citation type="journal article" date="2001" name="Curr. Biol.">
        <title>Methylation of histone H4 at arginine 3 occurs in vivo and is mediated by the nuclear receptor coactivator PRMT1.</title>
        <authorList>
            <person name="Strahl B.D."/>
            <person name="Briggs S.D."/>
            <person name="Brame C.J."/>
            <person name="Caldwell J.A."/>
            <person name="Koh S.S."/>
            <person name="Ma H."/>
            <person name="Cook R.G."/>
            <person name="Shabanowitz J."/>
            <person name="Hunt D.F."/>
            <person name="Stallcup M.R."/>
            <person name="Allis C.D."/>
        </authorList>
    </citation>
    <scope>METHYLATION AT ARG-4</scope>
</reference>
<reference key="20">
    <citation type="journal article" date="2001" name="Science">
        <title>Methylation of histone H4 at arginine 3 facilitating transcriptional activation by nuclear hormone receptor.</title>
        <authorList>
            <person name="Wang H."/>
            <person name="Huang Z.-Q."/>
            <person name="Xia L."/>
            <person name="Feng Q."/>
            <person name="Erdjument-Bromage H."/>
            <person name="Strahl B.D."/>
            <person name="Briggs S.D."/>
            <person name="Allis C.D."/>
            <person name="Wong J."/>
            <person name="Tempst P."/>
            <person name="Zhang Y."/>
        </authorList>
    </citation>
    <scope>METHYLATION AT ARG-4</scope>
</reference>
<reference key="21">
    <citation type="journal article" date="2002" name="Cancer Res.">
        <title>Characterization of t(3;6)(q27;p21) breakpoints in B-cell non-Hodgkin's lymphoma and construction of the histone H4/BCL6 fusion gene, leading to altered expression of Bcl-6.</title>
        <authorList>
            <person name="Kurata M."/>
            <person name="Maesako Y."/>
            <person name="Ueda C."/>
            <person name="Nishikori M."/>
            <person name="Akasaka T."/>
            <person name="Uchiyama T."/>
            <person name="Ohno H."/>
        </authorList>
    </citation>
    <scope>INVOLVEMENT IN B-CELL NON-HODGKIN LYMPHOMA</scope>
    <scope>CHROMOSOMAL TRANSLOCATION WITH BCL6</scope>
</reference>
<reference key="22">
    <citation type="journal article" date="2002" name="Mol. Cell">
        <title>PR-Set7 is a nucleosome-specific methyltransferase that modifies lysine 20 of histone H4 and is associated with silent chromatin.</title>
        <authorList>
            <person name="Nishioka K."/>
            <person name="Rice J.C."/>
            <person name="Sarma K."/>
            <person name="Erdjument-Bromage H."/>
            <person name="Werner J."/>
            <person name="Wang Y."/>
            <person name="Chuikov S."/>
            <person name="Valenzuela P."/>
            <person name="Tempst P."/>
            <person name="Steward R."/>
            <person name="Lis J.T."/>
            <person name="Allis C.D."/>
            <person name="Reinberg D."/>
        </authorList>
    </citation>
    <scope>METHYLATION AT LYS-21</scope>
</reference>
<reference key="23">
    <citation type="journal article" date="2003" name="Nature">
        <title>Proteomic characterization of the human centrosome by protein correlation profiling.</title>
        <authorList>
            <person name="Andersen J.S."/>
            <person name="Wilkinson C.J."/>
            <person name="Mayor T."/>
            <person name="Mortensen P."/>
            <person name="Nigg E.A."/>
            <person name="Mann M."/>
        </authorList>
    </citation>
    <scope>IDENTIFICATION BY MASS SPECTROMETRY</scope>
    <source>
        <tissue>Lymphoblast</tissue>
    </source>
</reference>
<reference key="24">
    <citation type="journal article" date="2003" name="Proc. Natl. Acad. Sci. U.S.A.">
        <title>Histone sumoylation is associated with transcriptional repression.</title>
        <authorList>
            <person name="Shiio Y."/>
            <person name="Eisenman R.N."/>
        </authorList>
    </citation>
    <scope>SUMOYLATION</scope>
</reference>
<reference key="25">
    <citation type="journal article" date="2004" name="Science">
        <title>Human PAD4 regulates histone arginine methylation levels via demethylimination.</title>
        <authorList>
            <person name="Wang Y."/>
            <person name="Wysocka J."/>
            <person name="Sayegh J."/>
            <person name="Lee Y.-H."/>
            <person name="Perlin J.R."/>
            <person name="Leonelli L."/>
            <person name="Sonbuchner L.S."/>
            <person name="McDonald C.H."/>
            <person name="Cook R.G."/>
            <person name="Dou Y."/>
            <person name="Roeder R.G."/>
            <person name="Clarke S."/>
            <person name="Stallcup M.R."/>
            <person name="Allis C.D."/>
            <person name="Coonrod S.A."/>
        </authorList>
    </citation>
    <scope>CITRULLINATION AT ARG-4</scope>
    <scope>METHYLATION AT ARG-4</scope>
</reference>
<reference key="26">
    <citation type="journal article" date="2005" name="J. Biol. Chem.">
        <title>SET8 recognizes the sequence RHRK20VLRDN within the N terminus of histone H4 and mono-methylates lysine 20.</title>
        <authorList>
            <person name="Yin Y."/>
            <person name="Liu C."/>
            <person name="Tsai S.N."/>
            <person name="Zhou B."/>
            <person name="Ngai S.M."/>
            <person name="Zhu G."/>
        </authorList>
    </citation>
    <scope>METHYLATION AT LYS-21</scope>
</reference>
<reference key="27">
    <citation type="journal article" date="2005" name="Nat. Biotechnol.">
        <title>Immunoaffinity profiling of tyrosine phosphorylation in cancer cells.</title>
        <authorList>
            <person name="Rush J."/>
            <person name="Moritz A."/>
            <person name="Lee K.A."/>
            <person name="Guo A."/>
            <person name="Goss V.L."/>
            <person name="Spek E.J."/>
            <person name="Zhang H."/>
            <person name="Zha X.-M."/>
            <person name="Polakiewicz R.D."/>
            <person name="Comb M.J."/>
        </authorList>
    </citation>
    <scope>PHOSPHORYLATION [LARGE SCALE ANALYSIS] AT TYR-52</scope>
    <scope>IDENTIFICATION BY MASS SPECTROMETRY [LARGE SCALE ANALYSIS]</scope>
</reference>
<reference key="28">
    <citation type="journal article" date="2006" name="Cell">
        <title>Global, in vivo, and site-specific phosphorylation dynamics in signaling networks.</title>
        <authorList>
            <person name="Olsen J.V."/>
            <person name="Blagoev B."/>
            <person name="Gnad F."/>
            <person name="Macek B."/>
            <person name="Kumar C."/>
            <person name="Mortensen P."/>
            <person name="Mann M."/>
        </authorList>
    </citation>
    <scope>PHOSPHORYLATION [LARGE SCALE ANALYSIS] AT SER-48</scope>
    <scope>IDENTIFICATION BY MASS SPECTROMETRY [LARGE SCALE ANALYSIS]</scope>
    <source>
        <tissue>Cervix carcinoma</tissue>
    </source>
</reference>
<reference key="29">
    <citation type="journal article" date="2006" name="Mol. Cell">
        <title>Histone H3 and H4 ubiquitylation by the CUL4-DDB-ROC1 ubiquitin ligase facilitates cellular response to DNA damage.</title>
        <authorList>
            <person name="Wang H."/>
            <person name="Zhai L."/>
            <person name="Xu J."/>
            <person name="Joo H.-Y."/>
            <person name="Jackson S."/>
            <person name="Erdjument-Bromage H."/>
            <person name="Tempst P."/>
            <person name="Xiong Y."/>
            <person name="Zhang Y."/>
        </authorList>
    </citation>
    <scope>UBIQUITINATION</scope>
</reference>
<reference key="30">
    <citation type="journal article" date="2006" name="Proc. Natl. Acad. Sci. U.S.A.">
        <title>Structural basis for histone N-terminal recognition by human peptidylarginine deiminase 4.</title>
        <authorList>
            <person name="Arita K."/>
            <person name="Shimizu T."/>
            <person name="Hashimoto H."/>
            <person name="Hidaka Y."/>
            <person name="Yamada M."/>
            <person name="Sato M."/>
        </authorList>
    </citation>
    <scope>CITRULLINATION AT ARG-4</scope>
</reference>
<reference key="31">
    <citation type="journal article" date="2008" name="Mol. Cell. Biol.">
        <title>Certain and progressive methylation of histone H4 at lysine 20 during the cell cycle.</title>
        <authorList>
            <person name="Pesavento J.J."/>
            <person name="Yang H."/>
            <person name="Kelleher N.L."/>
            <person name="Mizzen C.A."/>
        </authorList>
    </citation>
    <scope>ACETYLATION AT SER-2; LYS-13 AND LYS-17</scope>
    <scope>PHOSPHORYLATION AT SER-2</scope>
    <scope>METHYLATION AT LYS-21</scope>
</reference>
<reference key="32">
    <citation type="journal article" date="2008" name="Proc. Natl. Acad. Sci. U.S.A.">
        <title>A quantitative atlas of mitotic phosphorylation.</title>
        <authorList>
            <person name="Dephoure N."/>
            <person name="Zhou C."/>
            <person name="Villen J."/>
            <person name="Beausoleil S.A."/>
            <person name="Bakalarski C.E."/>
            <person name="Elledge S.J."/>
            <person name="Gygi S.P."/>
        </authorList>
    </citation>
    <scope>PHOSPHORYLATION [LARGE SCALE ANALYSIS] AT SER-48</scope>
    <scope>IDENTIFICATION BY MASS SPECTROMETRY [LARGE SCALE ANALYSIS]</scope>
    <source>
        <tissue>Cervix carcinoma</tissue>
    </source>
</reference>
<reference key="33">
    <citation type="journal article" date="2009" name="Mol. Cell">
        <title>BBAP monoubiquitylates histone H4 at lysine 91 and selectively modulates the DNA damage response.</title>
        <authorList>
            <person name="Yan Q."/>
            <person name="Dutt S."/>
            <person name="Xu R."/>
            <person name="Graves K."/>
            <person name="Juszczynski P."/>
            <person name="Manis J.P."/>
            <person name="Shipp M.A."/>
        </authorList>
    </citation>
    <scope>ACETYLATION AT LYS-92</scope>
    <scope>UBIQUITINATION AT LYS-92</scope>
</reference>
<reference key="34">
    <citation type="journal article" date="2007" name="Mol. Cell. Proteomics">
        <title>Lysine propionylation and butyrylation are novel post-translational modifications in histones.</title>
        <authorList>
            <person name="Chen Y."/>
            <person name="Sprung R."/>
            <person name="Tang Y."/>
            <person name="Ball H."/>
            <person name="Sangras B."/>
            <person name="Kim S.C."/>
            <person name="Falck J.R."/>
            <person name="Peng J."/>
            <person name="Gu W."/>
            <person name="Zhao Y."/>
        </authorList>
    </citation>
    <scope>PROPIONYLATION AT LYS-9; LYS-17; LYS-32; LYS-45; LYS-78; LYS-80 AND LYS-92</scope>
    <scope>BUTYRYLATION AT LYS-9; LYS-17; LYS-32; LYS-45; LYS-78; LYS-80 AND LYS-92</scope>
</reference>
<reference key="35">
    <citation type="journal article" date="2009" name="Sci. Signal.">
        <title>Quantitative phosphoproteomic analysis of T cell receptor signaling reveals system-wide modulation of protein-protein interactions.</title>
        <authorList>
            <person name="Mayya V."/>
            <person name="Lundgren D.H."/>
            <person name="Hwang S.-I."/>
            <person name="Rezaul K."/>
            <person name="Wu L."/>
            <person name="Eng J.K."/>
            <person name="Rodionov V."/>
            <person name="Han D.K."/>
        </authorList>
    </citation>
    <scope>PHOSPHORYLATION [LARGE SCALE ANALYSIS] AT SER-48</scope>
    <scope>IDENTIFICATION BY MASS SPECTROMETRY [LARGE SCALE ANALYSIS]</scope>
    <source>
        <tissue>Leukemic T-cell</tissue>
    </source>
</reference>
<reference key="36">
    <citation type="journal article" date="2009" name="Science">
        <title>Lysine acetylation targets protein complexes and co-regulates major cellular functions.</title>
        <authorList>
            <person name="Choudhary C."/>
            <person name="Kumar C."/>
            <person name="Gnad F."/>
            <person name="Nielsen M.L."/>
            <person name="Rehman M."/>
            <person name="Walther T.C."/>
            <person name="Olsen J.V."/>
            <person name="Mann M."/>
        </authorList>
    </citation>
    <scope>ACETYLATION [LARGE SCALE ANALYSIS] AT LYS-6; LYS-9; LYS-13; LYS-17 AND LYS-32</scope>
    <scope>IDENTIFICATION BY MASS SPECTROMETRY [LARGE SCALE ANALYSIS]</scope>
</reference>
<reference key="37">
    <citation type="journal article" date="2010" name="Sci. Signal.">
        <title>Quantitative phosphoproteomics reveals widespread full phosphorylation site occupancy during mitosis.</title>
        <authorList>
            <person name="Olsen J.V."/>
            <person name="Vermeulen M."/>
            <person name="Santamaria A."/>
            <person name="Kumar C."/>
            <person name="Miller M.L."/>
            <person name="Jensen L.J."/>
            <person name="Gnad F."/>
            <person name="Cox J."/>
            <person name="Jensen T.S."/>
            <person name="Nigg E.A."/>
            <person name="Brunak S."/>
            <person name="Mann M."/>
        </authorList>
    </citation>
    <scope>PHOSPHORYLATION [LARGE SCALE ANALYSIS] AT SER-48 AND TYR-52</scope>
    <scope>IDENTIFICATION BY MASS SPECTROMETRY [LARGE SCALE ANALYSIS]</scope>
    <source>
        <tissue>Cervix carcinoma</tissue>
    </source>
</reference>
<reference key="38">
    <citation type="journal article" date="2011" name="BMC Syst. Biol.">
        <title>Initial characterization of the human central proteome.</title>
        <authorList>
            <person name="Burkard T.R."/>
            <person name="Planyavsky M."/>
            <person name="Kaupe I."/>
            <person name="Breitwieser F.P."/>
            <person name="Buerckstuemmer T."/>
            <person name="Bennett K.L."/>
            <person name="Superti-Furga G."/>
            <person name="Colinge J."/>
        </authorList>
    </citation>
    <scope>IDENTIFICATION BY MASS SPECTROMETRY [LARGE SCALE ANALYSIS]</scope>
</reference>
<reference key="39">
    <citation type="journal article" date="2011" name="Cell">
        <title>Identification of 67 histone marks and histone lysine crotonylation as a new type of histone modification.</title>
        <authorList>
            <person name="Tan M."/>
            <person name="Luo H."/>
            <person name="Lee S."/>
            <person name="Jin F."/>
            <person name="Yang J.S."/>
            <person name="Montellier E."/>
            <person name="Buchou T."/>
            <person name="Cheng Z."/>
            <person name="Rousseaux S."/>
            <person name="Rajagopal N."/>
            <person name="Lu Z."/>
            <person name="Ye Z."/>
            <person name="Zhu Q."/>
            <person name="Wysocka J."/>
            <person name="Ye Y."/>
            <person name="Khochbin S."/>
            <person name="Ren B."/>
            <person name="Zhao Y."/>
        </authorList>
    </citation>
    <scope>CROTONYLATION AT LYS-6; LYS-9 AND LYS-13</scope>
</reference>
<reference key="40">
    <citation type="journal article" date="2011" name="Genes Dev.">
        <title>Phosphorylation of H4 Ser 47 promotes HIRA-mediated nucleosome assembly.</title>
        <authorList>
            <person name="Kang B."/>
            <person name="Pu M."/>
            <person name="Hu G."/>
            <person name="Wen W."/>
            <person name="Dong Z."/>
            <person name="Zhao K."/>
            <person name="Stillman B."/>
            <person name="Zhang Z."/>
        </authorList>
    </citation>
    <scope>PHOSPHORYLATION AT SER-48</scope>
</reference>
<reference key="41">
    <citation type="journal article" date="2011" name="Mol. Cell">
        <title>A specific function for the histone chaperone NASP to fine-tune a reservoir of soluble H3-H4 in the histone supply chain.</title>
        <authorList>
            <person name="Cook A.J."/>
            <person name="Gurard-Levin Z.A."/>
            <person name="Vassias I."/>
            <person name="Almouzni G."/>
        </authorList>
    </citation>
    <scope>INTERACTION WITH NASP</scope>
</reference>
<reference key="42">
    <citation type="journal article" date="2011" name="Sci. Signal.">
        <title>System-wide temporal characterization of the proteome and phosphoproteome of human embryonic stem cell differentiation.</title>
        <authorList>
            <person name="Rigbolt K.T."/>
            <person name="Prokhorova T.A."/>
            <person name="Akimov V."/>
            <person name="Henningsen J."/>
            <person name="Johansen P.T."/>
            <person name="Kratchmarova I."/>
            <person name="Kassem M."/>
            <person name="Mann M."/>
            <person name="Olsen J.V."/>
            <person name="Blagoev B."/>
        </authorList>
    </citation>
    <scope>PHOSPHORYLATION [LARGE SCALE ANALYSIS] AT SER-48</scope>
    <scope>IDENTIFICATION BY MASS SPECTROMETRY [LARGE SCALE ANALYSIS]</scope>
</reference>
<reference key="43">
    <citation type="journal article" date="2012" name="Mol. Cell. Proteomics">
        <title>Lysine succinylation and lysine malonylation in histones.</title>
        <authorList>
            <person name="Xie Z."/>
            <person name="Dai J."/>
            <person name="Dai L."/>
            <person name="Tan M."/>
            <person name="Cheng Z."/>
            <person name="Wu Y."/>
            <person name="Boeke J.D."/>
            <person name="Zhao Y."/>
        </authorList>
    </citation>
    <scope>SUCCINYLATION AT LYS-13; LYS-32; LYS-78 AND LYS-92</scope>
</reference>
<reference key="44">
    <citation type="journal article" date="2013" name="J. Proteome Res.">
        <title>Toward a comprehensive characterization of a human cancer cell phosphoproteome.</title>
        <authorList>
            <person name="Zhou H."/>
            <person name="Di Palma S."/>
            <person name="Preisinger C."/>
            <person name="Peng M."/>
            <person name="Polat A.N."/>
            <person name="Heck A.J."/>
            <person name="Mohammed S."/>
        </authorList>
    </citation>
    <scope>PHOSPHORYLATION [LARGE SCALE ANALYSIS] AT SER-48</scope>
    <scope>IDENTIFICATION BY MASS SPECTROMETRY [LARGE SCALE ANALYSIS]</scope>
    <source>
        <tissue>Cervix carcinoma</tissue>
        <tissue>Erythroleukemia</tissue>
    </source>
</reference>
<reference key="45">
    <citation type="journal article" date="2014" name="J. Proteomics">
        <title>An enzyme assisted RP-RPLC approach for in-depth analysis of human liver phosphoproteome.</title>
        <authorList>
            <person name="Bian Y."/>
            <person name="Song C."/>
            <person name="Cheng K."/>
            <person name="Dong M."/>
            <person name="Wang F."/>
            <person name="Huang J."/>
            <person name="Sun D."/>
            <person name="Wang L."/>
            <person name="Ye M."/>
            <person name="Zou H."/>
        </authorList>
    </citation>
    <scope>PHOSPHORYLATION [LARGE SCALE ANALYSIS] AT SER-48 AND TYR-89</scope>
    <scope>IDENTIFICATION BY MASS SPECTROMETRY [LARGE SCALE ANALYSIS]</scope>
    <source>
        <tissue>Liver</tissue>
    </source>
</reference>
<reference key="46">
    <citation type="journal article" date="2014" name="Nat. Chem. Biol.">
        <title>Lysine 2-hydroxyisobutyrylation is a widely distributed active histone mark.</title>
        <authorList>
            <person name="Dai L."/>
            <person name="Peng C."/>
            <person name="Montellier E."/>
            <person name="Lu Z."/>
            <person name="Chen Y."/>
            <person name="Ishii H."/>
            <person name="Debernardi A."/>
            <person name="Buchou T."/>
            <person name="Rousseaux S."/>
            <person name="Jin F."/>
            <person name="Sabari B.R."/>
            <person name="Deng Z."/>
            <person name="Allis C.D."/>
            <person name="Ren B."/>
            <person name="Khochbin S."/>
            <person name="Zhao Y."/>
        </authorList>
    </citation>
    <scope>HYDROXYBUTYRYLATION AT LYS-6; LYS-9; LYS-13; LYS-17; LYS-32; LYS-45; LYS-60; LYS-78; LYS-80 AND LYS-92</scope>
</reference>
<reference key="47">
    <citation type="journal article" date="2014" name="Nat. Struct. Mol. Biol.">
        <title>Uncovering global SUMOylation signaling networks in a site-specific manner.</title>
        <authorList>
            <person name="Hendriks I.A."/>
            <person name="D'Souza R.C."/>
            <person name="Yang B."/>
            <person name="Verlaan-de Vries M."/>
            <person name="Mann M."/>
            <person name="Vertegaal A.C."/>
        </authorList>
    </citation>
    <scope>SUMOYLATION [LARGE SCALE ANALYSIS] AT LYS-13</scope>
    <scope>IDENTIFICATION BY MASS SPECTROMETRY [LARGE SCALE ANALYSIS]</scope>
</reference>
<reference key="48">
    <citation type="journal article" date="2015" name="Proteomics">
        <title>N-terminome analysis of the human mitochondrial proteome.</title>
        <authorList>
            <person name="Vaca Jacome A.S."/>
            <person name="Rabilloud T."/>
            <person name="Schaeffer-Reiss C."/>
            <person name="Rompais M."/>
            <person name="Ayoub D."/>
            <person name="Lane L."/>
            <person name="Bairoch A."/>
            <person name="Van Dorsselaer A."/>
            <person name="Carapito C."/>
        </authorList>
    </citation>
    <scope>IDENTIFICATION BY MASS SPECTROMETRY [LARGE SCALE ANALYSIS]</scope>
</reference>
<reference key="49">
    <citation type="journal article" date="2016" name="Mol. Cell">
        <title>Dynamic competing histone H4 K5K8 acetylation and butyrylation are hallmarks of highly active gene promoters.</title>
        <authorList>
            <person name="Goudarzi A."/>
            <person name="Zhang D."/>
            <person name="Huang H."/>
            <person name="Barral S."/>
            <person name="Kwon O.K."/>
            <person name="Qi S."/>
            <person name="Tang Z."/>
            <person name="Buchou T."/>
            <person name="Vitte A.L."/>
            <person name="He T."/>
            <person name="Cheng Z."/>
            <person name="Montellier E."/>
            <person name="Gaucher J."/>
            <person name="Curtet S."/>
            <person name="Debernardi A."/>
            <person name="Charbonnier G."/>
            <person name="Puthier D."/>
            <person name="Petosa C."/>
            <person name="Panne D."/>
            <person name="Rousseaux S."/>
            <person name="Roeder R.G."/>
            <person name="Zhao Y."/>
            <person name="Khochbin S."/>
        </authorList>
    </citation>
    <scope>BUTYRYLATION AT LYS-6; LYS-9; LYS-13 AND LYS-17</scope>
</reference>
<reference key="50">
    <citation type="journal article" date="2016" name="Mol. Cell">
        <title>Metabolic regulation of gene expression by histone lysine beta-hydroxybutyrylation.</title>
        <authorList>
            <person name="Xie Z."/>
            <person name="Zhang D."/>
            <person name="Chung D."/>
            <person name="Tang Z."/>
            <person name="Huang H."/>
            <person name="Dai L."/>
            <person name="Qi S."/>
            <person name="Li J."/>
            <person name="Colak G."/>
            <person name="Chen Y."/>
            <person name="Xia C."/>
            <person name="Peng C."/>
            <person name="Ruan H."/>
            <person name="Kirkey M."/>
            <person name="Wang D."/>
            <person name="Jensen L.M."/>
            <person name="Kwon O.K."/>
            <person name="Lee S."/>
            <person name="Pletcher S.D."/>
            <person name="Tan M."/>
            <person name="Lombard D.B."/>
            <person name="White K.P."/>
            <person name="Zhao H."/>
            <person name="Li J."/>
            <person name="Roeder R.G."/>
            <person name="Yang X."/>
            <person name="Zhao Y."/>
        </authorList>
    </citation>
    <scope>HYDROXYBUTYRYLATION AT LYS-9; LYS-13; LYS-32; LYS-78 AND LYS-92</scope>
</reference>
<reference key="51">
    <citation type="journal article" date="2017" name="Cell Res.">
        <title>Class I histone deacetylases are major histone decrotonylases: evidence for critical and broad function of histone crotonylation in transcription.</title>
        <authorList>
            <person name="Wei W."/>
            <person name="Liu X."/>
            <person name="Chen J."/>
            <person name="Gao S."/>
            <person name="Lu L."/>
            <person name="Zhang H."/>
            <person name="Ding G."/>
            <person name="Wang Z."/>
            <person name="Chen Z."/>
            <person name="Shi T."/>
            <person name="Li J."/>
            <person name="Yu J."/>
            <person name="Wong J."/>
        </authorList>
    </citation>
    <scope>CROTONYLATION AT LYS-9 AND LYS-13</scope>
</reference>
<reference key="52">
    <citation type="journal article" date="2017" name="Nat. Struct. Mol. Biol.">
        <title>Site-specific mapping of the human SUMO proteome reveals co-modification with phosphorylation.</title>
        <authorList>
            <person name="Hendriks I.A."/>
            <person name="Lyon D."/>
            <person name="Young C."/>
            <person name="Jensen L.J."/>
            <person name="Vertegaal A.C."/>
            <person name="Nielsen M.L."/>
        </authorList>
    </citation>
    <scope>SUMOYLATION [LARGE SCALE ANALYSIS] AT LYS-21; LYS-32; LYS-60; LYS-80 AND LYS-92</scope>
    <scope>IDENTIFICATION BY MASS SPECTROMETRY [LARGE SCALE ANALYSIS]</scope>
</reference>
<reference key="53">
    <citation type="journal article" date="2019" name="Mol. Cell">
        <title>Glutarylation of histone H4 lysine 91 regulates chromatin dynamics.</title>
        <authorList>
            <person name="Bao X."/>
            <person name="Liu Z."/>
            <person name="Zhang W."/>
            <person name="Gladysz K."/>
            <person name="Fung Y.M.E."/>
            <person name="Tian G."/>
            <person name="Xiong Y."/>
            <person name="Wong J.W.H."/>
            <person name="Yuen K.W.Y."/>
            <person name="Li X.D."/>
        </authorList>
    </citation>
    <scope>GLUTARYLATION AT LYS-6; LYS-13; LYS-32; LYS-60 LYS-78; LYS-80 AND LYS-92</scope>
</reference>
<reference key="54">
    <citation type="journal article" date="2019" name="Nat. Commun.">
        <title>UFL1 promotes histone H4 ufmylation and ATM activation.</title>
        <authorList>
            <person name="Qin B."/>
            <person name="Yu J."/>
            <person name="Nowsheen S."/>
            <person name="Wang M."/>
            <person name="Tu X."/>
            <person name="Liu T."/>
            <person name="Li H."/>
            <person name="Wang L."/>
            <person name="Lou Z."/>
        </authorList>
    </citation>
    <scope>UFMYLATION AT LYS-32</scope>
    <scope>MUTAGENESIS OF LYS-32</scope>
</reference>
<reference key="55">
    <citation type="journal article" date="2019" name="Nature">
        <title>Metabolic regulation of gene expression by histone lactylation.</title>
        <authorList>
            <person name="Zhang D."/>
            <person name="Tang Z."/>
            <person name="Huang H."/>
            <person name="Zhou G."/>
            <person name="Cui C."/>
            <person name="Weng Y."/>
            <person name="Liu W."/>
            <person name="Kim S."/>
            <person name="Lee S."/>
            <person name="Perez-Neut M."/>
            <person name="Ding J."/>
            <person name="Czyz D."/>
            <person name="Hu R."/>
            <person name="Ye Z."/>
            <person name="He M."/>
            <person name="Zheng Y.G."/>
            <person name="Shuman H.A."/>
            <person name="Dai L."/>
            <person name="Ren B."/>
            <person name="Roeder R.G."/>
            <person name="Becker L."/>
            <person name="Zhao Y."/>
        </authorList>
    </citation>
    <scope>LACTYLATION AT LYS-6; LYS-9; LYS-13; LYS-17; LYS-32; LYS-78 AND LYS-92</scope>
</reference>
<reference key="56">
    <citation type="journal article" date="2019" name="Nat. Struct. Mol. Biol.">
        <title>KMT9 monomethylates histone H4 lysine 12 and controls proliferation of prostate cancer cells.</title>
        <authorList>
            <person name="Metzger E."/>
            <person name="Wang S."/>
            <person name="Urban S."/>
            <person name="Willmann D."/>
            <person name="Schmidt A."/>
            <person name="Offermann A."/>
            <person name="Allen A."/>
            <person name="Sum M."/>
            <person name="Obier N."/>
            <person name="Cottard F."/>
            <person name="Ulferts S."/>
            <person name="Preca B.T."/>
            <person name="Hermann B."/>
            <person name="Maurer J."/>
            <person name="Greschik H."/>
            <person name="Hornung V."/>
            <person name="Einsle O."/>
            <person name="Perner S."/>
            <person name="Imhof A."/>
            <person name="Jung M."/>
            <person name="Schule R."/>
        </authorList>
    </citation>
    <scope>METHYLATION AT LYS-13</scope>
    <scope>MUTAGENESIS OF LYS-13</scope>
</reference>
<reference key="57">
    <citation type="journal article" date="2005" name="Nucleic Acids Res.">
        <title>Alteration of the nucleosomal DNA path in the crystal structure of a human nucleosome core particle.</title>
        <authorList>
            <person name="Tsunaka Y."/>
            <person name="Kajimura N."/>
            <person name="Tate S."/>
            <person name="Morikawa K."/>
        </authorList>
    </citation>
    <scope>X-RAY CRYSTALLOGRAPHY (2.5 ANGSTROMS)</scope>
</reference>
<reference evidence="38" key="58">
    <citation type="journal article" date="2016" name="Nucleic Acids Res.">
        <title>Structure and function of human histone H3.Y nucleosome.</title>
        <authorList>
            <person name="Kujirai T."/>
            <person name="Horikoshi N."/>
            <person name="Sato K."/>
            <person name="Maehara K."/>
            <person name="Machida S."/>
            <person name="Osakabe A."/>
            <person name="Kimura H."/>
            <person name="Ohkawa Y."/>
            <person name="Kurumizaka H."/>
        </authorList>
    </citation>
    <scope>X-RAY CRYSTALLOGRAPHY (2.80 ANGSTROMS) IN COMPLEX WITH H2A; H2B AND H3.Y</scope>
</reference>
<reference evidence="39" key="59">
    <citation type="journal article" date="2016" name="Nature">
        <title>H4K20me0 marks post-replicative chromatin and recruits the TONSL-MMS22L DNA repair complex.</title>
        <authorList>
            <person name="Saredi G."/>
            <person name="Huang H."/>
            <person name="Hammond C.M."/>
            <person name="Alabert C."/>
            <person name="Bekker-Jensen S."/>
            <person name="Forne I."/>
            <person name="Reveron-Gomez N."/>
            <person name="Foster B.M."/>
            <person name="Mlejnkova L."/>
            <person name="Bartke T."/>
            <person name="Cejka P."/>
            <person name="Mailand N."/>
            <person name="Imhof A."/>
            <person name="Patel D.J."/>
            <person name="Groth A."/>
        </authorList>
    </citation>
    <scope>X-RAY CRYSTALLOGRAPHY (2.42 ANGSTROMS) OF 2-103 IN COMPLEX WITH TONSL</scope>
    <scope>METHYLATION AT LYS-21</scope>
</reference>
<reference evidence="47 48" key="60">
    <citation type="journal article" date="2020" name="Cell Res.">
        <title>Structural basis for nucleosome-mediated inhibition of cGAS activity.</title>
        <authorList>
            <person name="Cao D."/>
            <person name="Han X."/>
            <person name="Fan X."/>
            <person name="Xu R.M."/>
            <person name="Zhang X."/>
        </authorList>
    </citation>
    <scope>STRUCTURE BY ELECTRON MICROSCOPY (3.80 ANGSTROMS) OF 24-103 IN COMPLEX WITH NUCLEOSOME CORE AND CGAS</scope>
</reference>
<reference evidence="44" key="61">
    <citation type="journal article" date="2020" name="Nature">
        <title>Structural mechanism of cGAS inhibition by the nucleosome.</title>
        <authorList>
            <person name="Pathare G.R."/>
            <person name="Decout A."/>
            <person name="Glueck S."/>
            <person name="Cavadini S."/>
            <person name="Makasheva K."/>
            <person name="Hovius R."/>
            <person name="Kempf G."/>
            <person name="Weiss J."/>
            <person name="Kozicka Z."/>
            <person name="Guey B."/>
            <person name="Melenec P."/>
            <person name="Fierz B."/>
            <person name="Thomae N.H."/>
            <person name="Ablasser A."/>
        </authorList>
    </citation>
    <scope>STRUCTURE BY ELECTRON MICROSCOPY (4.10 ANGSTROMS) IN COMPLEX WITH NUCLEOSOME CORE AND CGAS</scope>
</reference>
<reference evidence="41 42 43" key="62">
    <citation type="journal article" date="2020" name="Nature">
        <title>The molecular basis of tight nuclear tethering and inactivation of cGAS.</title>
        <authorList>
            <person name="Zhao B."/>
            <person name="Xu P."/>
            <person name="Rowlett C.M."/>
            <person name="Jing T."/>
            <person name="Shinde O."/>
            <person name="Lei Y."/>
            <person name="West A.P."/>
            <person name="Liu W.R."/>
            <person name="Li P."/>
        </authorList>
    </citation>
    <scope>STRUCTURE BY ELECTRON MICROSCOPY (2.98 ANGSTROMS) OF 2-103 IN COMPLEX WITH NUCLEOSOME CORE AND CGAS</scope>
</reference>
<reference evidence="45" key="63">
    <citation type="journal article" date="2020" name="Nature">
        <title>Structural basis for sequestration and autoinhibition of cGAS by chromatin.</title>
        <authorList>
            <person name="Michalski S."/>
            <person name="de Oliveira Mann C.C."/>
            <person name="Stafford C.A."/>
            <person name="Witte G."/>
            <person name="Bartho J."/>
            <person name="Lammens K."/>
            <person name="Hornung V."/>
            <person name="Hopfner K.P."/>
        </authorList>
    </citation>
    <scope>STRUCTURE BY ELECTRON MICROSCOPY (3.11 ANGSTROMS) OF 2-103 IN COMPLEX WITH NUCLEOSOME CORE AND CGAS</scope>
</reference>
<reference evidence="40" key="64">
    <citation type="journal article" date="2020" name="PLoS ONE">
        <title>Bridging of nucleosome-proximal DNA double-strand breaks by PARP2 enhances its interaction with HPF1.</title>
        <authorList>
            <person name="Gaullier G."/>
            <person name="Roberts G."/>
            <person name="Muthurajan U.M."/>
            <person name="Bowerman S."/>
            <person name="Rudolph J."/>
            <person name="Mahadevan J."/>
            <person name="Jha A."/>
            <person name="Rae P.S."/>
            <person name="Luger K."/>
        </authorList>
    </citation>
    <scope>STRUCTURE BY ELECTRON MICROSCOPY (10.50 ANGSTROMS) OF NUCLEOSOME CORE COMPLEX IN COMPLEX WITH PARP2</scope>
</reference>
<reference evidence="51 52" key="65">
    <citation type="journal article" date="2020" name="Science">
        <title>Structural basis of nucleosome-dependent cGAS inhibition.</title>
        <authorList>
            <person name="Boyer J.A."/>
            <person name="Spangler C.J."/>
            <person name="Strauss J.D."/>
            <person name="Cesmat A.P."/>
            <person name="Liu P."/>
            <person name="McGinty R.K."/>
            <person name="Zhang Q."/>
        </authorList>
    </citation>
    <scope>STRUCTURE BY ELECTRON MICROSCOPY (3.30 ANGSTROMS) IN COMPLEX WITH NUCLEOSOME CORE AND CGAS</scope>
</reference>
<reference evidence="46" key="66">
    <citation type="journal article" date="2020" name="Science">
        <title>Structural basis for the inhibition of cGAS by nucleosomes.</title>
        <authorList>
            <person name="Kujirai T."/>
            <person name="Zierhut C."/>
            <person name="Takizawa Y."/>
            <person name="Kim R."/>
            <person name="Negishi L."/>
            <person name="Uruma N."/>
            <person name="Hirai S."/>
            <person name="Funabiki H."/>
            <person name="Kurumizaka H."/>
        </authorList>
    </citation>
    <scope>STRUCTURE BY ELECTRON MICROSCOPY (3.90 ANGSTROMS) OF 2-103 IN COMPLEX WITH NUCLEOSOME CORE AND CGAS</scope>
</reference>
<reference evidence="49 50" key="67">
    <citation type="journal article" date="2021" name="Mol. Cell">
        <title>DNAJC9 integrates heat shock molecular chaperones into the histone chaperone network.</title>
        <authorList>
            <person name="Hammond C.M."/>
            <person name="Bao H."/>
            <person name="Hendriks I.A."/>
            <person name="Carraro M."/>
            <person name="Garcia-Nieto A."/>
            <person name="Liu Y."/>
            <person name="Reveron-Gomez N."/>
            <person name="Spanos C."/>
            <person name="Chen L."/>
            <person name="Rappsilber J."/>
            <person name="Nielsen M.L."/>
            <person name="Patel D.J."/>
            <person name="Huang H."/>
            <person name="Groth A."/>
        </authorList>
    </citation>
    <scope>X-RAY CRYSTALLOGRAPHY (2.5 ANGSTROMS) IN COMPLEX WITH DNJC9 171-249 MUTANT CYS-243; MCM2 61-130 AND HISTONE H3.3</scope>
    <scope>IDENTIFICATION IN A CO-CHAPERONE COMPLEX WITH DNJC9; MCM2 AND HISTONE H3.3</scope>
    <scope>INTERACTION WITH DNJC9</scope>
</reference>
<reference evidence="53" key="68">
    <citation type="journal article" date="2022" name="Nucleic Acids Res.">
        <title>Multivalent DNA and nucleosome acidic patch interactions specify VRK1 mitotic localization and activity.</title>
        <authorList>
            <person name="Budziszewski G.R."/>
            <person name="Zhao Y."/>
            <person name="Spangler C.J."/>
            <person name="Kedziora K.M."/>
            <person name="Williams M.R."/>
            <person name="Azzam D.N."/>
            <person name="Skrajna A."/>
            <person name="Koyama Y."/>
            <person name="Cesmat A.P."/>
            <person name="Simmons H.C."/>
            <person name="Arteaga E.C."/>
            <person name="Strauss J.D."/>
            <person name="Kireev D."/>
            <person name="McGinty R.K."/>
        </authorList>
    </citation>
    <scope>STRUCTURE BY ELECTRON MICROSCOPY (3.00 ANGSTROMS) IN COMPLEX WITH NUCLEOSOME CORE AND VRK1</scope>
</reference>
<reference evidence="55" key="69">
    <citation type="journal article" date="2023" name="Nature">
        <title>Acetyl-methyllysine marks chromatin at active transcription start sites.</title>
        <authorList>
            <person name="Lu-Culligan W.J."/>
            <person name="Connor L.J."/>
            <person name="Xie Y."/>
            <person name="Ekundayo B.E."/>
            <person name="Rose B.T."/>
            <person name="Machyna M."/>
            <person name="Pintado-Urbanc A.P."/>
            <person name="Zimmer J.T."/>
            <person name="Vock I.W."/>
            <person name="Bhanu N.V."/>
            <person name="King M.C."/>
            <person name="Garcia B.A."/>
            <person name="Bleichert F."/>
            <person name="Simon M.D."/>
        </authorList>
    </citation>
    <scope>X-RAY CRYSTALLOGRAPHY (1.80 ANGSTROMS) OF 2-16 IN COMPLEX WITH BRD2</scope>
    <scope>ACETYLATION AT LYS-6 AND LYS-13</scope>
    <scope>METHYLATION AT LYS-6 AND LYS-13</scope>
</reference>
<reference evidence="54" key="70">
    <citation type="journal article" date="2023" name="IScience">
        <title>Identification of SIRT3 as an eraser of H4K16la.</title>
        <authorList>
            <person name="Fan Z."/>
            <person name="Liu Z."/>
            <person name="Zhang N."/>
            <person name="Wei W."/>
            <person name="Cheng K."/>
            <person name="Sun H."/>
            <person name="Hao Q."/>
        </authorList>
    </citation>
    <scope>X-RAY CRYSTALLOGRAPHY (2.50 ANGSTROMS) OF 14-21 IN COMPLEX WITH SIRT3</scope>
    <scope>LACTYLATION AT LYS-17</scope>
</reference>
<reference key="71">
    <citation type="journal article" date="2006" name="Science">
        <title>The consensus coding sequences of human breast and colorectal cancers.</title>
        <authorList>
            <person name="Sjoeblom T."/>
            <person name="Jones S."/>
            <person name="Wood L.D."/>
            <person name="Parsons D.W."/>
            <person name="Lin J."/>
            <person name="Barber T.D."/>
            <person name="Mandelker D."/>
            <person name="Leary R.J."/>
            <person name="Ptak J."/>
            <person name="Silliman N."/>
            <person name="Szabo S."/>
            <person name="Buckhaults P."/>
            <person name="Farrell C."/>
            <person name="Meeh P."/>
            <person name="Markowitz S.D."/>
            <person name="Willis J."/>
            <person name="Dawson D."/>
            <person name="Willson J.K.V."/>
            <person name="Gazdar A.F."/>
            <person name="Hartigan J."/>
            <person name="Wu L."/>
            <person name="Liu C."/>
            <person name="Parmigiani G."/>
            <person name="Park B.H."/>
            <person name="Bachman K.E."/>
            <person name="Papadopoulos N."/>
            <person name="Vogelstein B."/>
            <person name="Kinzler K.W."/>
            <person name="Velculescu V.E."/>
        </authorList>
    </citation>
    <scope>VARIANT [LARGE SCALE ANALYSIS] GLN-64</scope>
</reference>
<reference key="72">
    <citation type="journal article" date="2017" name="Nat. Genet.">
        <title>Germline mutations affecting the histone H4 core cause a developmental syndrome by altering DNA damage response and cell cycle control.</title>
        <authorList>
            <consortium name="Deciphering Developmental Disorders Study"/>
            <person name="Tessadori F."/>
            <person name="Giltay J.C."/>
            <person name="Hurst J.A."/>
            <person name="Massink M.P."/>
            <person name="Duran K."/>
            <person name="Vos H.R."/>
            <person name="van Es R.M."/>
            <person name="Scott R.H."/>
            <person name="van Gassen K.L.I."/>
            <person name="Bakkers J."/>
            <person name="van Haaften G."/>
        </authorList>
    </citation>
    <scope>VARIANTS TEBIVANED1 ARG-92 AND GLN-92</scope>
    <scope>CHARACTERIZATION OF VARIANTS TEBIVANED1 ARG-92 AND GLN-92</scope>
    <scope>INVOLVEMENT IN TEBIVANED1</scope>
</reference>
<reference key="73">
    <citation type="journal article" date="2020" name="Eur. J. Hum. Genet.">
        <title>A de novo variant in the human HIST1H4J gene causes a syndrome analogous to the HIST1H4C-associated neurodevelopmental disorder.</title>
        <authorList>
            <person name="Tessadori F."/>
            <person name="Rehman A.U."/>
            <person name="Giltay J.C."/>
            <person name="Xia F."/>
            <person name="Streff H."/>
            <person name="Duran K."/>
            <person name="Bakkers J."/>
            <person name="Lalani S.R."/>
            <person name="van Haaften G."/>
        </authorList>
    </citation>
    <scope>VARIANT TEBIVANED2 GLU-92</scope>
    <scope>CHARACTERIZATION OF VARIANT TEBIVANED2 GLU-92</scope>
    <scope>INVOLVEMENT IN TEBIVANED2</scope>
</reference>
<reference key="74">
    <citation type="journal article" date="2022" name="Am. J. Hum. Genet.">
        <title>Recurrent de novo missense variants across multiple histone H4 genes underlie a neurodevelopmental syndrome.</title>
        <authorList>
            <consortium name="Deciphering Developmental Disorders Study"/>
            <person name="Tessadori F."/>
            <person name="Duran K."/>
            <person name="Knapp K."/>
            <person name="Fellner M."/>
            <person name="Smithson S."/>
            <person name="Beleza Meireles A."/>
            <person name="Elting M.W."/>
            <person name="Waisfisz Q."/>
            <person name="O'Donnell-Luria A."/>
            <person name="Nowak C."/>
            <person name="Douglas J."/>
            <person name="Ronan A."/>
            <person name="Brunet T."/>
            <person name="Kotzaeridou U."/>
            <person name="Svihovec S."/>
            <person name="Saenz M.S."/>
            <person name="Thiffault I."/>
            <person name="Del Viso F."/>
            <person name="Devine P."/>
            <person name="Rego S."/>
            <person name="Tenney J."/>
            <person name="van Haeringen A."/>
            <person name="Ruivenkamp C.A.L."/>
            <person name="Koene S."/>
            <person name="Robertson S.P."/>
            <person name="Deshpande C."/>
            <person name="Pfundt R."/>
            <person name="Verbeek N."/>
            <person name="van de Kamp J.M."/>
            <person name="Weiss J.M.M."/>
            <person name="Ruiz A."/>
            <person name="Gabau E."/>
            <person name="Banne E."/>
            <person name="Pepler A."/>
            <person name="Bottani A."/>
            <person name="Laurent S."/>
            <person name="Guipponi M."/>
            <person name="Bijlsma E."/>
            <person name="Bruel A.L."/>
            <person name="Sorlin A."/>
            <person name="Willis M."/>
            <person name="Powis Z."/>
            <person name="Smol T."/>
            <person name="Vincent-Delorme C."/>
            <person name="Baralle D."/>
            <person name="Colin E."/>
            <person name="Revencu N."/>
            <person name="Calpena E."/>
            <person name="Wilkie A.O.M."/>
            <person name="Chopra M."/>
            <person name="Cormier-Daire V."/>
            <person name="Keren B."/>
            <person name="Afenjar A."/>
            <person name="Niceta M."/>
            <person name="Terracciano A."/>
            <person name="Specchio N."/>
            <person name="Tartaglia M."/>
            <person name="Rio M."/>
            <person name="Barcia G."/>
            <person name="Rondeau S."/>
            <person name="Colson C."/>
            <person name="Bakkers J."/>
            <person name="Mace P.D."/>
            <person name="Bicknell L.S."/>
            <person name="van Haaften G."/>
        </authorList>
    </citation>
    <scope>VARIANTS TEBIVANED1 ALA-33; LEU-33 AND GLN-92</scope>
    <scope>VARIANT TEBIVANED2 CYS-41</scope>
    <scope>VARIANTS TEBIVANED3 THR-32; ARG-33; TRP-36; PRO-38; CYS-41; CYS-46 AND HIS-99</scope>
    <scope>VARIANTS TEBIVANED4 LEU-41 AND ARG-76</scope>
    <scope>CHARACTERIZATION OF VARIANT TEBIVANED1 GLN-92</scope>
    <scope>CHARACTERIZATION OF VARIANT TEBIVANED2 CYS-41</scope>
    <scope>CHARACTERIZATION OF VARIANTS TEBIVANED3 THR-32; ARG-33; TRP-36; PRO-38; CYS-41 AND HIS-99</scope>
    <scope>CHARACTERIZATION OF VARIANTS TEBIVANED4 LEU-41 AND ARG-76</scope>
    <scope>VARIANTS HIS-41 AND ARG-95</scope>
    <scope>CHARACTERIZATION OF VARIANTS HIS-41 AND ARG-95</scope>
    <scope>INVOLVEMENT IN TEBIVANED1</scope>
    <scope>INVOLVEMENT IN TEBIVANED2</scope>
    <scope>INVOLVEMENT IN TEBIVANED3</scope>
    <scope>INVOLVEMENT IN TEBIVANED4</scope>
</reference>
<name>H4_HUMAN</name>
<sequence length="103" mass="11367">MSGRGKGGKGLGKGGAKRHRKVLRDNIQGITKPAIRRLARRGGVKRISGLIYEETRGVLKVFLENVIRDAVTYTEHAKRKTVTAMDVVYALKRQGRTLYGFGG</sequence>
<gene>
    <name type="primary">H4C1</name>
    <name type="synonym">H4/A</name>
    <name type="synonym">H4FA</name>
    <name type="synonym">HIST1H4A</name>
</gene>
<gene>
    <name type="primary">H4C2</name>
    <name type="synonym">H4/I</name>
    <name type="synonym">H4FI</name>
    <name type="synonym">HIST1H4B</name>
</gene>
<gene>
    <name type="primary">H4C3</name>
    <name type="synonym">H4/G</name>
    <name type="synonym">H4FG</name>
    <name type="synonym">HIST1H4C</name>
</gene>
<gene>
    <name type="primary">H4C4</name>
    <name type="synonym">H4/B</name>
    <name type="synonym">H4FB</name>
    <name type="synonym">HIST1H4D</name>
</gene>
<gene>
    <name type="primary">H4C5</name>
    <name type="synonym">H4/J</name>
    <name type="synonym">H4FJ</name>
    <name type="synonym">HIST1H4E</name>
</gene>
<gene>
    <name type="primary">H4C6</name>
    <name type="synonym">H4/C</name>
    <name type="synonym">H4FC</name>
    <name type="synonym">HIST1H4F</name>
</gene>
<gene>
    <name type="primary">H4C8</name>
    <name type="synonym">H4/H</name>
    <name type="synonym">H4FH</name>
    <name type="synonym">HIST1H4H</name>
</gene>
<gene>
    <name type="primary">H4C9</name>
    <name type="synonym">H4/M</name>
    <name type="synonym">H4FM</name>
    <name type="synonym">HIST1H4I</name>
</gene>
<gene>
    <name type="primary">H4C11</name>
    <name type="synonym">H4/E</name>
    <name type="synonym">H4FE</name>
    <name type="synonym">HIST1H4J</name>
</gene>
<gene>
    <name type="primary">H4C12</name>
    <name type="synonym">H4/D</name>
    <name type="synonym">H4FD</name>
    <name type="synonym">HIST1H4K</name>
</gene>
<gene>
    <name type="primary">H4C13</name>
    <name type="synonym">H4/K</name>
    <name type="synonym">H4FK</name>
    <name type="synonym">HIST1H4L</name>
</gene>
<gene>
    <name type="primary">H4C14</name>
    <name type="synonym">H4/N</name>
    <name type="synonym">H4F2</name>
    <name type="synonym">H4FN</name>
    <name type="synonym">HIST2H4</name>
    <name type="synonym">HIST2H4A</name>
</gene>
<gene>
    <name type="primary">H4C15</name>
    <name type="synonym">H4/O</name>
    <name type="synonym">H4FO</name>
    <name type="synonym">HIST2H4B</name>
</gene>
<gene>
    <name type="primary">H4C16</name>
    <name type="synonym">H4-16</name>
    <name type="synonym">HIST4H4</name>
</gene>
<protein>
    <recommendedName>
        <fullName>Histone H4</fullName>
    </recommendedName>
</protein>
<proteinExistence type="evidence at protein level"/>
<comment type="function">
    <text>Core component of nucleosome. Nucleosomes wrap and compact DNA into chromatin, limiting DNA accessibility to the cellular machineries which require DNA as a template. Histones thereby play a central role in transcription regulation, DNA repair, DNA replication and chromosomal stability. DNA accessibility is regulated via a complex set of post-translational modifications of histones, also called histone code, and nucleosome remodeling.</text>
</comment>
<comment type="subunit">
    <text evidence="1 18 32">The nucleosome is a histone octamer containing two molecules each of H2A, H2B, H3 and H4 assembled in one H3-H4 heterotetramer and two H2A-H2B heterodimers. The octamer wraps approximately 147 bp of DNA (By similarity). Found in a co-chaperone complex with DNJC9, MCM2 and histone H3.3-H4 dimers (PubMed:33857403). Within the complex, interacts with DNJC9 (via C-terminus); the interaction is direct (PubMed:33857403). Interacts with NASP; NASP is a histone chaperone that stabilizes and maintains a soluble pool of Histone H3-H4 dimers (PubMed:22195965).</text>
</comment>
<comment type="interaction">
    <interactant intactId="EBI-302023">
        <id>P62805</id>
    </interactant>
    <interactant intactId="EBI-77797">
        <id>P35609</id>
        <label>ACTN2</label>
    </interactant>
    <organismsDiffer>false</organismsDiffer>
    <experiments>3</experiments>
</comment>
<comment type="interaction">
    <interactant intactId="EBI-302023">
        <id>P62805</id>
    </interactant>
    <interactant intactId="EBI-749553">
        <id>Q9Y294</id>
        <label>ASF1A</label>
    </interactant>
    <organismsDiffer>false</organismsDiffer>
    <experiments>17</experiments>
</comment>
<comment type="interaction">
    <interactant intactId="EBI-302023">
        <id>P62805</id>
    </interactant>
    <interactant intactId="EBI-1560273">
        <id>Q12830</id>
        <label>BPTF</label>
    </interactant>
    <organismsDiffer>false</organismsDiffer>
    <experiments>3</experiments>
</comment>
<comment type="interaction">
    <interactant intactId="EBI-302023">
        <id>P62805</id>
    </interactant>
    <interactant intactId="EBI-4288838">
        <id>Q12830-4</id>
        <label>BPTF</label>
    </interactant>
    <organismsDiffer>false</organismsDiffer>
    <experiments>16</experiments>
</comment>
<comment type="interaction">
    <interactant intactId="EBI-302023">
        <id>P62805</id>
    </interactant>
    <interactant intactId="EBI-2874802">
        <id>P25440</id>
        <label>BRD2</label>
    </interactant>
    <organismsDiffer>false</organismsDiffer>
    <experiments>5</experiments>
</comment>
<comment type="interaction">
    <interactant intactId="EBI-302023">
        <id>P62805</id>
    </interactant>
    <interactant intactId="EBI-9345088">
        <id>O60885-1</id>
        <label>BRD4</label>
    </interactant>
    <organismsDiffer>false</organismsDiffer>
    <experiments>10</experiments>
</comment>
<comment type="interaction">
    <interactant intactId="EBI-302023">
        <id>P62805</id>
    </interactant>
    <interactant intactId="EBI-2837428">
        <id>P55201</id>
        <label>BRPF1</label>
    </interactant>
    <organismsDiffer>false</organismsDiffer>
    <experiments>8</experiments>
</comment>
<comment type="interaction">
    <interactant intactId="EBI-302023">
        <id>P62805</id>
    </interactant>
    <interactant intactId="EBI-78219">
        <id>P45973</id>
        <label>CBX5</label>
    </interactant>
    <organismsDiffer>false</organismsDiffer>
    <experiments>3</experiments>
</comment>
<comment type="interaction">
    <interactant intactId="EBI-302023">
        <id>P62805</id>
    </interactant>
    <interactant intactId="EBI-1751979">
        <id>P49450</id>
        <label>CENPA</label>
    </interactant>
    <organismsDiffer>false</organismsDiffer>
    <experiments>6</experiments>
</comment>
<comment type="interaction">
    <interactant intactId="EBI-302023">
        <id>P62805</id>
    </interactant>
    <interactant intactId="EBI-15826012">
        <id>P49450-1</id>
        <label>CENPA</label>
    </interactant>
    <organismsDiffer>false</organismsDiffer>
    <experiments>2</experiments>
</comment>
<comment type="interaction">
    <interactant intactId="EBI-302023">
        <id>P62805</id>
    </interactant>
    <interactant intactId="EBI-1642558">
        <id>Q9NQ92</id>
        <label>COPRS</label>
    </interactant>
    <organismsDiffer>false</organismsDiffer>
    <experiments>3</experiments>
</comment>
<comment type="interaction">
    <interactant intactId="EBI-302023">
        <id>P62805</id>
    </interactant>
    <interactant intactId="EBI-81215">
        <id>Q92793</id>
        <label>CREBBP</label>
    </interactant>
    <organismsDiffer>false</organismsDiffer>
    <experiments>6</experiments>
</comment>
<comment type="interaction">
    <interactant intactId="EBI-302023">
        <id>P62805</id>
    </interactant>
    <interactant intactId="EBI-358971">
        <id>P04908</id>
        <label>H2AC8</label>
    </interactant>
    <organismsDiffer>false</organismsDiffer>
    <experiments>12</experiments>
</comment>
<comment type="interaction">
    <interactant intactId="EBI-302023">
        <id>P62805</id>
    </interactant>
    <interactant intactId="EBI-494830">
        <id>P16104</id>
        <label>H2AX</label>
    </interactant>
    <organismsDiffer>false</organismsDiffer>
    <experiments>7</experiments>
</comment>
<comment type="interaction">
    <interactant intactId="EBI-302023">
        <id>P62805</id>
    </interactant>
    <interactant intactId="EBI-1056125">
        <id>Q16778</id>
        <label>H2BC21</label>
    </interactant>
    <organismsDiffer>false</organismsDiffer>
    <experiments>2</experiments>
</comment>
<comment type="interaction">
    <interactant intactId="EBI-302023">
        <id>P62805</id>
    </interactant>
    <interactant intactId="EBI-120658">
        <id>P84243</id>
        <label>H3-3B</label>
    </interactant>
    <organismsDiffer>false</organismsDiffer>
    <experiments>12</experiments>
</comment>
<comment type="interaction">
    <interactant intactId="EBI-302023">
        <id>P62805</id>
    </interactant>
    <interactant intactId="EBI-358900">
        <id>Q16695</id>
        <label>H3-4</label>
    </interactant>
    <organismsDiffer>false</organismsDiffer>
    <experiments>3</experiments>
</comment>
<comment type="interaction">
    <interactant intactId="EBI-302023">
        <id>P62805</id>
    </interactant>
    <interactant intactId="EBI-79722">
        <id>P68431</id>
        <label>H3C12</label>
    </interactant>
    <organismsDiffer>false</organismsDiffer>
    <experiments>7</experiments>
</comment>
<comment type="interaction">
    <interactant intactId="EBI-302023">
        <id>P62805</id>
    </interactant>
    <interactant intactId="EBI-750650">
        <id>Q71DI3</id>
        <label>H3C15</label>
    </interactant>
    <organismsDiffer>false</organismsDiffer>
    <experiments>4</experiments>
</comment>
<comment type="interaction">
    <interactant intactId="EBI-302023">
        <id>P62805</id>
    </interactant>
    <interactant intactId="EBI-2339359">
        <id>O14929</id>
        <label>HAT1</label>
    </interactant>
    <organismsDiffer>false</organismsDiffer>
    <experiments>7</experiments>
</comment>
<comment type="interaction">
    <interactant intactId="EBI-302023">
        <id>P62805</id>
    </interactant>
    <interactant intactId="EBI-301834">
        <id>Q13547</id>
        <label>HDAC1</label>
    </interactant>
    <organismsDiffer>false</organismsDiffer>
    <experiments>3</experiments>
</comment>
<comment type="interaction">
    <interactant intactId="EBI-302023">
        <id>P62805</id>
    </interactant>
    <interactant intactId="EBI-746843">
        <id>P17096</id>
        <label>HMGA1</label>
    </interactant>
    <organismsDiffer>false</organismsDiffer>
    <experiments>2</experiments>
</comment>
<comment type="interaction">
    <interactant intactId="EBI-302023">
        <id>P62805</id>
    </interactant>
    <interactant intactId="EBI-466029">
        <id>P42858</id>
        <label>HTT</label>
    </interactant>
    <organismsDiffer>false</organismsDiffer>
    <experiments>3</experiments>
</comment>
<comment type="interaction">
    <interactant intactId="EBI-302023">
        <id>P62805</id>
    </interactant>
    <interactant intactId="EBI-2866290">
        <id>Q9H9V9</id>
        <label>JMJD4</label>
    </interactant>
    <organismsDiffer>false</organismsDiffer>
    <experiments>3</experiments>
</comment>
<comment type="interaction">
    <interactant intactId="EBI-302023">
        <id>P62805</id>
    </interactant>
    <interactant intactId="EBI-399080">
        <id>Q92993</id>
        <label>KAT5</label>
    </interactant>
    <organismsDiffer>false</organismsDiffer>
    <experiments>4</experiments>
</comment>
<comment type="interaction">
    <interactant intactId="EBI-302023">
        <id>P62805</id>
    </interactant>
    <interactant intactId="EBI-936709">
        <id>O75164</id>
        <label>KDM4A</label>
    </interactant>
    <organismsDiffer>false</organismsDiffer>
    <experiments>7</experiments>
</comment>
<comment type="interaction">
    <interactant intactId="EBI-302023">
        <id>P62805</id>
    </interactant>
    <interactant intactId="EBI-1268946">
        <id>Q9NQR1</id>
        <label>KMT5A</label>
    </interactant>
    <organismsDiffer>false</organismsDiffer>
    <experiments>6</experiments>
</comment>
<comment type="interaction">
    <interactant intactId="EBI-302023">
        <id>P62805</id>
    </interactant>
    <interactant intactId="EBI-1265089">
        <id>Q9Y468</id>
        <label>L3MBTL1</label>
    </interactant>
    <organismsDiffer>false</organismsDiffer>
    <experiments>4</experiments>
</comment>
<comment type="interaction">
    <interactant intactId="EBI-302023">
        <id>P62805</id>
    </interactant>
    <interactant intactId="EBI-11742507">
        <id>Q8TAP4-4</id>
        <label>LMO3</label>
    </interactant>
    <organismsDiffer>false</organismsDiffer>
    <experiments>3</experiments>
</comment>
<comment type="interaction">
    <interactant intactId="EBI-302023">
        <id>P62805</id>
    </interactant>
    <interactant intactId="EBI-5666902">
        <id>Q05BQ5</id>
        <label>MBTD1</label>
    </interactant>
    <organismsDiffer>false</organismsDiffer>
    <experiments>3</experiments>
</comment>
<comment type="interaction">
    <interactant intactId="EBI-302023">
        <id>P62805</id>
    </interactant>
    <interactant intactId="EBI-374819">
        <id>P49736</id>
        <label>MCM2</label>
    </interactant>
    <organismsDiffer>false</organismsDiffer>
    <experiments>9</experiments>
</comment>
<comment type="interaction">
    <interactant intactId="EBI-302023">
        <id>P62805</id>
    </interactant>
    <interactant intactId="EBI-355153">
        <id>P25205</id>
        <label>MCM3</label>
    </interactant>
    <organismsDiffer>false</organismsDiffer>
    <experiments>2</experiments>
</comment>
<comment type="interaction">
    <interactant intactId="EBI-302023">
        <id>P62805</id>
    </interactant>
    <interactant intactId="EBI-359410">
        <id>P33992</id>
        <label>MCM5</label>
    </interactant>
    <organismsDiffer>false</organismsDiffer>
    <experiments>2</experiments>
</comment>
<comment type="interaction">
    <interactant intactId="EBI-302023">
        <id>P62805</id>
    </interactant>
    <interactant intactId="EBI-16140302">
        <id>Q86UY6-1</id>
        <label>NAA40</label>
    </interactant>
    <organismsDiffer>false</organismsDiffer>
    <experiments>3</experiments>
</comment>
<comment type="interaction">
    <interactant intactId="EBI-302023">
        <id>P62805</id>
    </interactant>
    <interactant intactId="EBI-2560802">
        <id>Q9BVI0</id>
        <label>PHF20</label>
    </interactant>
    <organismsDiffer>false</organismsDiffer>
    <experiments>3</experiments>
</comment>
<comment type="interaction">
    <interactant intactId="EBI-302023">
        <id>P62805</id>
    </interactant>
    <interactant intactId="EBI-2560834">
        <id>A8MW92</id>
        <label>PHF20L1</label>
    </interactant>
    <organismsDiffer>false</organismsDiffer>
    <experiments>2</experiments>
</comment>
<comment type="interaction">
    <interactant intactId="EBI-302023">
        <id>P62805</id>
    </interactant>
    <interactant intactId="EBI-1383528">
        <id>P17252</id>
        <label>PRKCA</label>
    </interactant>
    <organismsDiffer>false</organismsDiffer>
    <experiments>3</experiments>
</comment>
<comment type="interaction">
    <interactant intactId="EBI-302023">
        <id>P62805</id>
    </interactant>
    <interactant intactId="EBI-78738">
        <id>Q99873</id>
        <label>PRMT1</label>
    </interactant>
    <organismsDiffer>false</organismsDiffer>
    <experiments>2</experiments>
</comment>
<comment type="interaction">
    <interactant intactId="EBI-302023">
        <id>P62805</id>
    </interactant>
    <interactant intactId="EBI-351098">
        <id>O14744</id>
        <label>PRMT5</label>
    </interactant>
    <organismsDiffer>false</organismsDiffer>
    <experiments>6</experiments>
</comment>
<comment type="interaction">
    <interactant intactId="EBI-302023">
        <id>P62805</id>
    </interactant>
    <interactant intactId="EBI-286642">
        <id>P62826</id>
        <label>RAN</label>
    </interactant>
    <organismsDiffer>false</organismsDiffer>
    <experiments>2</experiments>
</comment>
<comment type="interaction">
    <interactant intactId="EBI-302023">
        <id>P62805</id>
    </interactant>
    <interactant intactId="EBI-352227">
        <id>Q16576</id>
        <label>RBBP7</label>
    </interactant>
    <organismsDiffer>false</organismsDiffer>
    <experiments>9</experiments>
</comment>
<comment type="interaction">
    <interactant intactId="EBI-302023">
        <id>P62805</id>
    </interactant>
    <interactant intactId="EBI-5280110">
        <id>Q14684-1</id>
        <label>RRP1B</label>
    </interactant>
    <organismsDiffer>false</organismsDiffer>
    <experiments>3</experiments>
</comment>
<comment type="interaction">
    <interactant intactId="EBI-302023">
        <id>P62805</id>
    </interactant>
    <interactant intactId="EBI-9090795">
        <id>Q15047-2</id>
        <label>SETDB1</label>
    </interactant>
    <organismsDiffer>false</organismsDiffer>
    <experiments>3</experiments>
</comment>
<comment type="interaction">
    <interactant intactId="EBI-302023">
        <id>P62805</id>
    </interactant>
    <interactant intactId="EBI-747107">
        <id>Q8IUQ4</id>
        <label>SIAH1</label>
    </interactant>
    <organismsDiffer>false</organismsDiffer>
    <experiments>3</experiments>
</comment>
<comment type="interaction">
    <interactant intactId="EBI-302023">
        <id>P62805</id>
    </interactant>
    <interactant intactId="EBI-352588">
        <id>O60264</id>
        <label>SMARCA5</label>
    </interactant>
    <organismsDiffer>false</organismsDiffer>
    <experiments>2</experiments>
</comment>
<comment type="interaction">
    <interactant intactId="EBI-302023">
        <id>P62805</id>
    </interactant>
    <interactant intactId="EBI-358419">
        <id>Q12824</id>
        <label>SMARCB1</label>
    </interactant>
    <organismsDiffer>false</organismsDiffer>
    <experiments>2</experiments>
</comment>
<comment type="interaction">
    <interactant intactId="EBI-302023">
        <id>P62805</id>
    </interactant>
    <interactant intactId="EBI-711424">
        <id>Q04724</id>
        <label>TLE1</label>
    </interactant>
    <organismsDiffer>false</organismsDiffer>
    <experiments>6</experiments>
</comment>
<comment type="interaction">
    <interactant intactId="EBI-302023">
        <id>P62805</id>
    </interactant>
    <interactant intactId="EBI-396540">
        <id>Q12888</id>
        <label>TP53BP1</label>
    </interactant>
    <organismsDiffer>false</organismsDiffer>
    <experiments>14</experiments>
</comment>
<comment type="interaction">
    <interactant intactId="EBI-302023">
        <id>P62805</id>
    </interactant>
    <interactant intactId="EBI-8022649">
        <id>Q12888-1</id>
        <label>TP53BP1</label>
    </interactant>
    <organismsDiffer>false</organismsDiffer>
    <experiments>3</experiments>
</comment>
<comment type="interaction">
    <interactant intactId="EBI-302023">
        <id>P62805</id>
    </interactant>
    <interactant intactId="EBI-359832">
        <id>P61981</id>
        <label>YWHAG</label>
    </interactant>
    <organismsDiffer>false</organismsDiffer>
    <experiments>3</experiments>
</comment>
<comment type="interaction">
    <interactant intactId="EBI-302023">
        <id>P62805</id>
    </interactant>
    <interactant intactId="EBI-347088">
        <id>P63104</id>
        <label>YWHAZ</label>
    </interactant>
    <organismsDiffer>false</organismsDiffer>
    <experiments>3</experiments>
</comment>
<comment type="interaction">
    <interactant intactId="EBI-302023">
        <id>P62805</id>
    </interactant>
    <interactant intactId="EBI-296306">
        <id>P45481</id>
        <label>Crebbp</label>
    </interactant>
    <organismsDiffer>true</organismsDiffer>
    <experiments>2</experiments>
</comment>
<comment type="interaction">
    <interactant intactId="EBI-302023">
        <id>P62805</id>
    </interactant>
    <interactant intactId="EBI-15602554">
        <id>Q9QR71</id>
        <label>LANA1</label>
    </interactant>
    <organismsDiffer>true</organismsDiffer>
    <experiments>2</experiments>
</comment>
<comment type="interaction">
    <interactant intactId="EBI-302023">
        <id>P62805</id>
    </interactant>
    <interactant intactId="EBI-16101095">
        <id>Q582G4</id>
        <label>PRMT7</label>
    </interactant>
    <organismsDiffer>true</organismsDiffer>
    <experiments>4</experiments>
</comment>
<comment type="interaction">
    <interactant intactId="EBI-302023">
        <id>P62805</id>
    </interactant>
    <interactant intactId="EBI-24263">
        <id>P38890</id>
        <label>SET5</label>
    </interactant>
    <organismsDiffer>true</organismsDiffer>
    <experiments>2</experiments>
</comment>
<comment type="interaction">
    <interactant intactId="EBI-302023">
        <id>P62805</id>
    </interactant>
    <interactant intactId="EBI-117801">
        <id>Q9VK33</id>
        <label>Sfmbt</label>
    </interactant>
    <organismsDiffer>true</organismsDiffer>
    <experiments>10</experiments>
</comment>
<comment type="subcellular location">
    <subcellularLocation>
        <location evidence="1">Nucleus</location>
    </subcellularLocation>
    <subcellularLocation>
        <location>Chromosome</location>
    </subcellularLocation>
    <text evidence="1">Localized to the nucleus when acetylated in step 11 spermatids.</text>
</comment>
<comment type="PTM">
    <text evidence="1 14 21 36">Acetylation at Lys-6 (H4K5ac), Lys-9 (H4K8ac), Lys-13 (H4K12ac) and Lys-17 (H4K16ac) occurs in coding regions of the genome but not in heterochromatin. Acetylated as part of spermatogenesis progression prior to histone-to-protamine exchange (By similarity).</text>
</comment>
<comment type="PTM">
    <text evidence="3 4 8 10">Citrullination at Arg-4 (H4R3ci) by PADI4 impairs methylation.</text>
</comment>
<comment type="PTM">
    <text evidence="3 4 8">Monomethylation and asymmetric dimethylation at Arg-4 (H4R3me1 and H4R3me2a, respectively) by PRMT1 favors acetylation at Lys-9 (H4K8ac) and Lys-13 (H4K12ac). Demethylation is performed by JMJD6. Symmetric dimethylation on Arg-4 (H4R3me2s) by the PRDM1/PRMT5 complex may play a crucial role in the germ-cell lineage.</text>
</comment>
<comment type="PTM">
    <text evidence="1 5 9 14 28">Monomethylated, dimethylated or trimethylated at Lys-21 (H4K20me1, H4K20me2, H4K20me3) (PubMed:12086618, PubMed:15964846, PubMed:17967882). Monomethylation is performed by KMT5A/SET8 (PubMed:15964846). Dimethylation and trimethylation is performed by KMT5B and KMT5C and induces gene silencing (By similarity). Monomethylated at Lys-13 (H4K12me1) by N6AMT1; H4K12me1 modification is present at the promoters of numerous genes encoding cell cycle regulators (PubMed:31061526).</text>
</comment>
<comment type="PTM">
    <text evidence="35">Acetyl-methylated at Lys-6 and Lys-13 (H4K5acme and H4K12acme, respectively), acetyl-methylation is an epigenetic mark of active chromatin associated with increased transcriptional initiation (PubMed:37731000). Acetyl-methylation is formed by acetylation by EP300/p300 of lysine residues that are already monomethylated on the same side chain (PubMed:37731000). H4K5acme and H4K12acme marks specifically bind BRD2 (PubMed:37731000).</text>
</comment>
<comment type="PTM">
    <text evidence="14 16">Phosphorylated by PAK2 at Ser-48 (H4S47ph). This phosphorylation increases the association of H3.3-H4 with the histone chaperone HIRA, thus promoting nucleosome assembly of H3.3-H4 and inhibiting nucleosome assembly of H3.1-H4.</text>
</comment>
<comment type="PTM">
    <text evidence="1 5 9 11 14 15">Ubiquitinated by the CUL4-DDB-RBX1 complex in response to ultraviolet irradiation. This may weaken the interaction between histones and DNA and facilitate DNA accessibility to repair proteins. Monoubiquitinated at Lys-92 of histone H4 (H4K91ub1) in response to DNA damage. The exact role of H4K91ub1 in DNA damage response is still unclear but it may function as a licensing signal for additional histone H4 post-translational modifications such as H4 Lys-21 methylation (H4K20me). Ubiquitinated; by PHF7 (By similarity).</text>
</comment>
<comment type="PTM">
    <text evidence="27">Ufmylated; monofmylated by UFL1 at Lys-32 (H4K31Ufm1) in response to DNA damage.</text>
</comment>
<comment type="PTM">
    <text evidence="7">Sumoylated, which is associated with transcriptional repression.</text>
</comment>
<comment type="PTM">
    <text evidence="17">Crotonylation (Kcr) is specifically present in male germ cells and marks testis-specific genes in post-meiotic cells, including X-linked genes that escape sex chromosome inactivation in haploid cells. Crotonylation marks active promoters and enhancers and confers resistance to transcriptional repressors. It is also associated with post-meiotically activated genes on autosomes.</text>
</comment>
<comment type="PTM">
    <text evidence="1">Butyrylation of histones marks active promoters and competes with histone acetylation.</text>
</comment>
<comment type="PTM">
    <text evidence="29">Glutarylation at Lys-92 (H4K91glu) destabilizes nucleosomes by promoting dissociation of the H2A-H2B dimers from nucleosomes.</text>
</comment>
<comment type="PTM">
    <text evidence="30 34">Lactylated in macrophages by EP300/P300 by using lactoyl-CoA directly derived from endogenous or exogenous lactate, leading to stimulates gene transcription (PubMed:31645732). Delactylated by SIRT3 at Lys-17 (H4K16la) (PubMed:37720100).</text>
</comment>
<comment type="disease" evidence="26 33">
    <disease id="DI-06350">
        <name>Tessadori-Bicknell-Van Haaften neurodevelopmental syndrome 1</name>
        <acronym>TEBIVANED1</acronym>
        <description>An autosomal dominant disorder with onset in infancy, characterized by poor overall growth, microcephaly, hypotonia, profound global developmental delay, impaired intellectual development, poor or absent speech, and characteristic dysmorphic facial features, including hypertelorism and abnormal nose. Other variable neurologic and systemic features may also occur.</description>
        <dbReference type="MIM" id="619758"/>
    </disease>
    <text evidence="26 33">The disease is caused by variants affecting the gene represented in this entry. TEBIVANED1 is caused by variants in H4C3.</text>
</comment>
<comment type="disease" evidence="31 33">
    <disease id="DI-06351">
        <name>Tessadori-Bicknell-Van Haaften neurodevelopmental syndrome 2</name>
        <acronym>TEBIVANED2</acronym>
        <description>An autosomal dominant disorder characterized by poor overall growth, microcephaly, hypotonia, profound global developmental delay, impaired intellectual development, absent speech, and characteristic dysmorphic facial features, including hypertelorism, abnormal nose, and wide mouth.</description>
        <dbReference type="MIM" id="619759"/>
    </disease>
    <text evidence="31 33">The disease is caused by variants affecting the gene represented in this entry. TEBIVANED2 is caused by variants in H4C11.</text>
</comment>
<comment type="disease" evidence="33">
    <disease id="DI-06448">
        <name>Tessadori-Bicknell-Van Haaften neurodevelopmental syndrome 3</name>
        <acronym>TEBIVANED3</acronym>
        <description>An autosomal dominant disorder characterized by global developmental delay with poor overall growth, impaired intellectual development, and speech difficulties. More variable features include hypotonia, microcephaly, and dysmorphic facies.</description>
        <dbReference type="MIM" id="619950"/>
    </disease>
    <text evidence="33">The disease is caused by variants affecting the gene represented in this entry. TEBIVANED3 is caused by variants in H4C5.</text>
</comment>
<comment type="disease" evidence="33">
    <disease id="DI-06449">
        <name>Tessadori-Bicknell-Van Haaften neurodevelopmental syndrome 4</name>
        <acronym>TEBIVANED4</acronym>
        <description>An autosomal dominant disorder characterized by global developmental delay with poor overall growth, variably impaired intellectual development, learning difficulties, distal skeletal anomalies, and dysmorphic facies. Some patients have visual or hearing deficits.</description>
        <dbReference type="MIM" id="619951"/>
    </disease>
    <text evidence="33">The disease is caused by variants affecting the gene represented in this entry. TEBIVANED4 is caused by variants in H4C9.</text>
</comment>
<comment type="disease">
    <text evidence="6">Chromosomal aberrations involving HISTONE H4 is a cause of B-cell non-Hodgkin lymphomas (B-cell NHL). Translocation t(3;6)(q27;p21), with BCL6.</text>
</comment>
<comment type="similarity">
    <text evidence="37">Belongs to the histone H4 family.</text>
</comment>
<comment type="sequence caution" evidence="37">
    <conflict type="frameshift">
        <sequence resource="EMBL-CDS" id="AAI28106"/>
    </conflict>
</comment>